<keyword id="KW-0002">3D-structure</keyword>
<keyword id="KW-0025">Alternative splicing</keyword>
<keyword id="KW-0131">Cell cycle</keyword>
<keyword id="KW-0132">Cell division</keyword>
<keyword id="KW-0175">Coiled coil</keyword>
<keyword id="KW-0963">Cytoplasm</keyword>
<keyword id="KW-0206">Cytoskeleton</keyword>
<keyword id="KW-0225">Disease variant</keyword>
<keyword id="KW-0333">Golgi apparatus</keyword>
<keyword id="KW-0991">Intellectual disability</keyword>
<keyword id="KW-0472">Membrane</keyword>
<keyword id="KW-0488">Methylation</keyword>
<keyword id="KW-0493">Microtubule</keyword>
<keyword id="KW-0498">Mitosis</keyword>
<keyword id="KW-0597">Phosphoprotein</keyword>
<keyword id="KW-0653">Protein transport</keyword>
<keyword id="KW-1267">Proteomics identification</keyword>
<keyword id="KW-1185">Reference proteome</keyword>
<keyword id="KW-0813">Transport</keyword>
<proteinExistence type="evidence at protein level"/>
<dbReference type="EMBL" id="L06147">
    <property type="protein sequence ID" value="AAA35920.1"/>
    <property type="molecule type" value="mRNA"/>
</dbReference>
<dbReference type="EMBL" id="AL590708">
    <property type="status" value="NOT_ANNOTATED_CDS"/>
    <property type="molecule type" value="Genomic_DNA"/>
</dbReference>
<dbReference type="EMBL" id="CH471090">
    <property type="protein sequence ID" value="EAW87762.1"/>
    <property type="status" value="ALT_SEQ"/>
    <property type="molecule type" value="Genomic_DNA"/>
</dbReference>
<dbReference type="EMBL" id="BC014188">
    <property type="protein sequence ID" value="AAH14188.2"/>
    <property type="molecule type" value="mRNA"/>
</dbReference>
<dbReference type="EMBL" id="BC069268">
    <property type="protein sequence ID" value="AAH69268.1"/>
    <property type="status" value="ALT_INIT"/>
    <property type="molecule type" value="mRNA"/>
</dbReference>
<dbReference type="EMBL" id="AF248953">
    <property type="protein sequence ID" value="AAF65550.1"/>
    <property type="molecule type" value="mRNA"/>
</dbReference>
<dbReference type="EMBL" id="BT007248">
    <property type="protein sequence ID" value="AAP35912.1"/>
    <property type="status" value="ALT_SEQ"/>
    <property type="molecule type" value="mRNA"/>
</dbReference>
<dbReference type="CCDS" id="CCDS6896.2">
    <molecule id="Q08379-1"/>
</dbReference>
<dbReference type="PIR" id="JH0821">
    <property type="entry name" value="JH0821"/>
</dbReference>
<dbReference type="RefSeq" id="NP_004477.3">
    <molecule id="Q08379-1"/>
    <property type="nucleotide sequence ID" value="NM_004486.4"/>
</dbReference>
<dbReference type="PDB" id="4REY">
    <property type="method" value="X-ray"/>
    <property type="resolution" value="1.96 A"/>
    <property type="chains" value="B=980-1002"/>
</dbReference>
<dbReference type="PDB" id="6IW8">
    <property type="method" value="X-ray"/>
    <property type="resolution" value="2.80 A"/>
    <property type="chains" value="A=13-60"/>
</dbReference>
<dbReference type="PDB" id="6IWA">
    <property type="method" value="X-ray"/>
    <property type="resolution" value="2.40 A"/>
    <property type="chains" value="A=25-52"/>
</dbReference>
<dbReference type="PDB" id="6K06">
    <property type="method" value="X-ray"/>
    <property type="resolution" value="1.75 A"/>
    <property type="chains" value="A=13-60"/>
</dbReference>
<dbReference type="PDBsum" id="4REY"/>
<dbReference type="PDBsum" id="6IW8"/>
<dbReference type="PDBsum" id="6IWA"/>
<dbReference type="PDBsum" id="6K06"/>
<dbReference type="SMR" id="Q08379"/>
<dbReference type="BioGRID" id="109063">
    <property type="interactions" value="791"/>
</dbReference>
<dbReference type="ComplexPortal" id="CPX-874">
    <property type="entry name" value="GRASP65-GM130 Golgi stacking complex"/>
</dbReference>
<dbReference type="CORUM" id="Q08379"/>
<dbReference type="DIP" id="DIP-34271N"/>
<dbReference type="FunCoup" id="Q08379">
    <property type="interactions" value="2035"/>
</dbReference>
<dbReference type="IntAct" id="Q08379">
    <property type="interactions" value="664"/>
</dbReference>
<dbReference type="MINT" id="Q08379"/>
<dbReference type="STRING" id="9606.ENSP00000416097"/>
<dbReference type="MoonDB" id="Q08379">
    <property type="type" value="Predicted"/>
</dbReference>
<dbReference type="GlyGen" id="Q08379">
    <property type="glycosylation" value="3 sites, 1 O-linked glycan (1 site)"/>
</dbReference>
<dbReference type="iPTMnet" id="Q08379"/>
<dbReference type="PhosphoSitePlus" id="Q08379"/>
<dbReference type="SwissPalm" id="Q08379"/>
<dbReference type="BioMuta" id="GOLGA2"/>
<dbReference type="DMDM" id="294862511"/>
<dbReference type="jPOST" id="Q08379"/>
<dbReference type="MassIVE" id="Q08379"/>
<dbReference type="PaxDb" id="9606-ENSP00000416097"/>
<dbReference type="PeptideAtlas" id="Q08379"/>
<dbReference type="ProteomicsDB" id="58604">
    <molecule id="Q08379-1"/>
</dbReference>
<dbReference type="ProteomicsDB" id="58605">
    <molecule id="Q08379-2"/>
</dbReference>
<dbReference type="Pumba" id="Q08379"/>
<dbReference type="Antibodypedia" id="4216">
    <property type="antibodies" value="425 antibodies from 35 providers"/>
</dbReference>
<dbReference type="DNASU" id="2801"/>
<dbReference type="Ensembl" id="ENST00000421699.8">
    <molecule id="Q08379-1"/>
    <property type="protein sequence ID" value="ENSP00000416097.4"/>
    <property type="gene ID" value="ENSG00000167110.19"/>
</dbReference>
<dbReference type="GeneID" id="2801"/>
<dbReference type="KEGG" id="hsa:2801"/>
<dbReference type="UCSC" id="uc011maw.2">
    <molecule id="Q08379-1"/>
    <property type="organism name" value="human"/>
</dbReference>
<dbReference type="AGR" id="HGNC:4425"/>
<dbReference type="CTD" id="2801"/>
<dbReference type="DisGeNET" id="2801"/>
<dbReference type="GeneCards" id="GOLGA2"/>
<dbReference type="HGNC" id="HGNC:4425">
    <property type="gene designation" value="GOLGA2"/>
</dbReference>
<dbReference type="HPA" id="ENSG00000167110">
    <property type="expression patterns" value="Low tissue specificity"/>
</dbReference>
<dbReference type="MalaCards" id="GOLGA2"/>
<dbReference type="MIM" id="602580">
    <property type="type" value="gene"/>
</dbReference>
<dbReference type="MIM" id="620240">
    <property type="type" value="phenotype"/>
</dbReference>
<dbReference type="neXtProt" id="NX_Q08379"/>
<dbReference type="OpenTargets" id="ENSG00000167110"/>
<dbReference type="PharmGKB" id="PA28805"/>
<dbReference type="VEuPathDB" id="HostDB:ENSG00000167110"/>
<dbReference type="eggNOG" id="KOG4725">
    <property type="taxonomic scope" value="Eukaryota"/>
</dbReference>
<dbReference type="GeneTree" id="ENSGT00530000062932"/>
<dbReference type="InParanoid" id="Q08379"/>
<dbReference type="OMA" id="IQVIIAE"/>
<dbReference type="OrthoDB" id="5978643at2759"/>
<dbReference type="PAN-GO" id="Q08379">
    <property type="GO annotations" value="5 GO annotations based on evolutionary models"/>
</dbReference>
<dbReference type="PhylomeDB" id="Q08379"/>
<dbReference type="TreeFam" id="TF316990"/>
<dbReference type="PathwayCommons" id="Q08379"/>
<dbReference type="Reactome" id="R-HSA-162658">
    <property type="pathway name" value="Golgi Cisternae Pericentriolar Stack Reorganization"/>
</dbReference>
<dbReference type="Reactome" id="R-HSA-204005">
    <property type="pathway name" value="COPII-mediated vesicle transport"/>
</dbReference>
<dbReference type="Reactome" id="R-HSA-6807878">
    <property type="pathway name" value="COPI-mediated anterograde transport"/>
</dbReference>
<dbReference type="Reactome" id="R-HSA-8862803">
    <property type="pathway name" value="Deregulated CDK5 triggers multiple neurodegenerative pathways in Alzheimer's disease models"/>
</dbReference>
<dbReference type="SignaLink" id="Q08379"/>
<dbReference type="SIGNOR" id="Q08379"/>
<dbReference type="BioGRID-ORCS" id="2801">
    <property type="hits" value="46 hits in 1169 CRISPR screens"/>
</dbReference>
<dbReference type="CD-CODE" id="DEE660B4">
    <property type="entry name" value="Stress granule"/>
</dbReference>
<dbReference type="CD-CODE" id="F3208D05">
    <property type="entry name" value="Golgin condensate"/>
</dbReference>
<dbReference type="ChiTaRS" id="GOLGA2">
    <property type="organism name" value="human"/>
</dbReference>
<dbReference type="EvolutionaryTrace" id="Q08379"/>
<dbReference type="GeneWiki" id="GOLGA2"/>
<dbReference type="GenomeRNAi" id="2801"/>
<dbReference type="Pharos" id="Q08379">
    <property type="development level" value="Tbio"/>
</dbReference>
<dbReference type="PRO" id="PR:Q08379"/>
<dbReference type="Proteomes" id="UP000005640">
    <property type="component" value="Chromosome 9"/>
</dbReference>
<dbReference type="RNAct" id="Q08379">
    <property type="molecule type" value="protein"/>
</dbReference>
<dbReference type="Bgee" id="ENSG00000167110">
    <property type="expression patterns" value="Expressed in pituitary gland and 207 other cell types or tissues"/>
</dbReference>
<dbReference type="ExpressionAtlas" id="Q08379">
    <property type="expression patterns" value="baseline and differential"/>
</dbReference>
<dbReference type="GO" id="GO:0005801">
    <property type="term" value="C:cis-Golgi network"/>
    <property type="evidence" value="ECO:0000314"/>
    <property type="project" value="UniProtKB"/>
</dbReference>
<dbReference type="GO" id="GO:0030134">
    <property type="term" value="C:COPII-coated ER to Golgi transport vesicle"/>
    <property type="evidence" value="ECO:0000315"/>
    <property type="project" value="UniProtKB"/>
</dbReference>
<dbReference type="GO" id="GO:0033116">
    <property type="term" value="C:endoplasmic reticulum-Golgi intermediate compartment membrane"/>
    <property type="evidence" value="ECO:0000304"/>
    <property type="project" value="Reactome"/>
</dbReference>
<dbReference type="GO" id="GO:0005794">
    <property type="term" value="C:Golgi apparatus"/>
    <property type="evidence" value="ECO:0000314"/>
    <property type="project" value="HPA"/>
</dbReference>
<dbReference type="GO" id="GO:0000137">
    <property type="term" value="C:Golgi cis cisterna"/>
    <property type="evidence" value="ECO:0000314"/>
    <property type="project" value="CACAO"/>
</dbReference>
<dbReference type="GO" id="GO:0032580">
    <property type="term" value="C:Golgi cisterna membrane"/>
    <property type="evidence" value="ECO:0000250"/>
    <property type="project" value="UniProtKB"/>
</dbReference>
<dbReference type="GO" id="GO:0000139">
    <property type="term" value="C:Golgi membrane"/>
    <property type="evidence" value="ECO:0000304"/>
    <property type="project" value="Reactome"/>
</dbReference>
<dbReference type="GO" id="GO:0005874">
    <property type="term" value="C:microtubule"/>
    <property type="evidence" value="ECO:0007669"/>
    <property type="project" value="UniProtKB-KW"/>
</dbReference>
<dbReference type="GO" id="GO:0072686">
    <property type="term" value="C:mitotic spindle"/>
    <property type="evidence" value="ECO:0000314"/>
    <property type="project" value="UniProtKB"/>
</dbReference>
<dbReference type="GO" id="GO:0000922">
    <property type="term" value="C:spindle pole"/>
    <property type="evidence" value="ECO:0000250"/>
    <property type="project" value="UniProtKB"/>
</dbReference>
<dbReference type="GO" id="GO:0045296">
    <property type="term" value="F:cadherin binding"/>
    <property type="evidence" value="ECO:0007005"/>
    <property type="project" value="BHF-UCL"/>
</dbReference>
<dbReference type="GO" id="GO:0042802">
    <property type="term" value="F:identical protein binding"/>
    <property type="evidence" value="ECO:0000353"/>
    <property type="project" value="IntAct"/>
</dbReference>
<dbReference type="GO" id="GO:0061676">
    <property type="term" value="F:importin-alpha family protein binding"/>
    <property type="evidence" value="ECO:0000250"/>
    <property type="project" value="UniProtKB"/>
</dbReference>
<dbReference type="GO" id="GO:0008017">
    <property type="term" value="F:microtubule binding"/>
    <property type="evidence" value="ECO:0000314"/>
    <property type="project" value="UniProtKB"/>
</dbReference>
<dbReference type="GO" id="GO:0019901">
    <property type="term" value="F:protein kinase binding"/>
    <property type="evidence" value="ECO:0000353"/>
    <property type="project" value="UniProtKB"/>
</dbReference>
<dbReference type="GO" id="GO:0019905">
    <property type="term" value="F:syntaxin binding"/>
    <property type="evidence" value="ECO:0000353"/>
    <property type="project" value="UniProtKB"/>
</dbReference>
<dbReference type="GO" id="GO:0008356">
    <property type="term" value="P:asymmetric cell division"/>
    <property type="evidence" value="ECO:0000250"/>
    <property type="project" value="UniProtKB"/>
</dbReference>
<dbReference type="GO" id="GO:0007098">
    <property type="term" value="P:centrosome cycle"/>
    <property type="evidence" value="ECO:0000314"/>
    <property type="project" value="UniProtKB"/>
</dbReference>
<dbReference type="GO" id="GO:0006888">
    <property type="term" value="P:endoplasmic reticulum to Golgi vesicle-mediated transport"/>
    <property type="evidence" value="ECO:0000250"/>
    <property type="project" value="UniProtKB"/>
</dbReference>
<dbReference type="GO" id="GO:0090166">
    <property type="term" value="P:Golgi disassembly"/>
    <property type="evidence" value="ECO:0000250"/>
    <property type="project" value="UniProtKB"/>
</dbReference>
<dbReference type="GO" id="GO:0007030">
    <property type="term" value="P:Golgi organization"/>
    <property type="evidence" value="ECO:0000318"/>
    <property type="project" value="GO_Central"/>
</dbReference>
<dbReference type="GO" id="GO:0090161">
    <property type="term" value="P:Golgi ribbon formation"/>
    <property type="evidence" value="ECO:0000315"/>
    <property type="project" value="UniProtKB"/>
</dbReference>
<dbReference type="GO" id="GO:0090306">
    <property type="term" value="P:meiotic spindle assembly"/>
    <property type="evidence" value="ECO:0000250"/>
    <property type="project" value="UniProtKB"/>
</dbReference>
<dbReference type="GO" id="GO:0007020">
    <property type="term" value="P:microtubule nucleation"/>
    <property type="evidence" value="ECO:0000314"/>
    <property type="project" value="UniProtKB"/>
</dbReference>
<dbReference type="GO" id="GO:0090307">
    <property type="term" value="P:mitotic spindle assembly"/>
    <property type="evidence" value="ECO:0000314"/>
    <property type="project" value="UniProtKB"/>
</dbReference>
<dbReference type="GO" id="GO:0010507">
    <property type="term" value="P:negative regulation of autophagy"/>
    <property type="evidence" value="ECO:0000315"/>
    <property type="project" value="ParkinsonsUK-UCL"/>
</dbReference>
<dbReference type="GO" id="GO:0032091">
    <property type="term" value="P:negative regulation of protein binding"/>
    <property type="evidence" value="ECO:0000314"/>
    <property type="project" value="UniProtKB"/>
</dbReference>
<dbReference type="GO" id="GO:0060050">
    <property type="term" value="P:positive regulation of protein glycosylation"/>
    <property type="evidence" value="ECO:0000315"/>
    <property type="project" value="ParkinsonsUK-UCL"/>
</dbReference>
<dbReference type="GO" id="GO:0006486">
    <property type="term" value="P:protein glycosylation"/>
    <property type="evidence" value="ECO:0000315"/>
    <property type="project" value="UniProtKB"/>
</dbReference>
<dbReference type="GO" id="GO:0051289">
    <property type="term" value="P:protein homotetramerization"/>
    <property type="evidence" value="ECO:0000250"/>
    <property type="project" value="UniProtKB"/>
</dbReference>
<dbReference type="GO" id="GO:0015031">
    <property type="term" value="P:protein transport"/>
    <property type="evidence" value="ECO:0007669"/>
    <property type="project" value="UniProtKB-KW"/>
</dbReference>
<dbReference type="GO" id="GO:0051225">
    <property type="term" value="P:spindle assembly"/>
    <property type="evidence" value="ECO:0000315"/>
    <property type="project" value="UniProtKB"/>
</dbReference>
<dbReference type="InterPro" id="IPR043937">
    <property type="entry name" value="GM130_C"/>
</dbReference>
<dbReference type="InterPro" id="IPR043976">
    <property type="entry name" value="GOLGA_cons_dom"/>
</dbReference>
<dbReference type="InterPro" id="IPR024858">
    <property type="entry name" value="Golgin_A"/>
</dbReference>
<dbReference type="PANTHER" id="PTHR10881:SF58">
    <property type="entry name" value="GOLGIN SUBFAMILY A MEMBER 2"/>
    <property type="match status" value="1"/>
</dbReference>
<dbReference type="PANTHER" id="PTHR10881">
    <property type="entry name" value="GOLGIN SUBFAMILY A MEMBER-RELATED"/>
    <property type="match status" value="1"/>
</dbReference>
<dbReference type="Pfam" id="PF19046">
    <property type="entry name" value="GM130_C"/>
    <property type="match status" value="1"/>
</dbReference>
<dbReference type="Pfam" id="PF15070">
    <property type="entry name" value="GOLGA2L5"/>
    <property type="match status" value="1"/>
</dbReference>
<reference key="1">
    <citation type="journal article" date="1993" name="J. Exp. Med.">
        <title>Molecular characterization of two human autoantigens: unique cDNAs encoding 95- and 160-kD proteins of a putative family in the Golgi complex.</title>
        <authorList>
            <person name="Fritzler M.J."/>
            <person name="Hamel J.C."/>
            <person name="Ochs R.L."/>
            <person name="Chan E.K.L."/>
        </authorList>
    </citation>
    <scope>NUCLEOTIDE SEQUENCE [MRNA] (ISOFORM 2)</scope>
    <scope>SUBCELLULAR LOCATION</scope>
    <source>
        <tissue>Liver</tissue>
    </source>
</reference>
<reference key="2">
    <citation type="journal article" date="2004" name="Nature">
        <title>DNA sequence and analysis of human chromosome 9.</title>
        <authorList>
            <person name="Humphray S.J."/>
            <person name="Oliver K."/>
            <person name="Hunt A.R."/>
            <person name="Plumb R.W."/>
            <person name="Loveland J.E."/>
            <person name="Howe K.L."/>
            <person name="Andrews T.D."/>
            <person name="Searle S."/>
            <person name="Hunt S.E."/>
            <person name="Scott C.E."/>
            <person name="Jones M.C."/>
            <person name="Ainscough R."/>
            <person name="Almeida J.P."/>
            <person name="Ambrose K.D."/>
            <person name="Ashwell R.I.S."/>
            <person name="Babbage A.K."/>
            <person name="Babbage S."/>
            <person name="Bagguley C.L."/>
            <person name="Bailey J."/>
            <person name="Banerjee R."/>
            <person name="Barker D.J."/>
            <person name="Barlow K.F."/>
            <person name="Bates K."/>
            <person name="Beasley H."/>
            <person name="Beasley O."/>
            <person name="Bird C.P."/>
            <person name="Bray-Allen S."/>
            <person name="Brown A.J."/>
            <person name="Brown J.Y."/>
            <person name="Burford D."/>
            <person name="Burrill W."/>
            <person name="Burton J."/>
            <person name="Carder C."/>
            <person name="Carter N.P."/>
            <person name="Chapman J.C."/>
            <person name="Chen Y."/>
            <person name="Clarke G."/>
            <person name="Clark S.Y."/>
            <person name="Clee C.M."/>
            <person name="Clegg S."/>
            <person name="Collier R.E."/>
            <person name="Corby N."/>
            <person name="Crosier M."/>
            <person name="Cummings A.T."/>
            <person name="Davies J."/>
            <person name="Dhami P."/>
            <person name="Dunn M."/>
            <person name="Dutta I."/>
            <person name="Dyer L.W."/>
            <person name="Earthrowl M.E."/>
            <person name="Faulkner L."/>
            <person name="Fleming C.J."/>
            <person name="Frankish A."/>
            <person name="Frankland J.A."/>
            <person name="French L."/>
            <person name="Fricker D.G."/>
            <person name="Garner P."/>
            <person name="Garnett J."/>
            <person name="Ghori J."/>
            <person name="Gilbert J.G.R."/>
            <person name="Glison C."/>
            <person name="Grafham D.V."/>
            <person name="Gribble S."/>
            <person name="Griffiths C."/>
            <person name="Griffiths-Jones S."/>
            <person name="Grocock R."/>
            <person name="Guy J."/>
            <person name="Hall R.E."/>
            <person name="Hammond S."/>
            <person name="Harley J.L."/>
            <person name="Harrison E.S.I."/>
            <person name="Hart E.A."/>
            <person name="Heath P.D."/>
            <person name="Henderson C.D."/>
            <person name="Hopkins B.L."/>
            <person name="Howard P.J."/>
            <person name="Howden P.J."/>
            <person name="Huckle E."/>
            <person name="Johnson C."/>
            <person name="Johnson D."/>
            <person name="Joy A.A."/>
            <person name="Kay M."/>
            <person name="Keenan S."/>
            <person name="Kershaw J.K."/>
            <person name="Kimberley A.M."/>
            <person name="King A."/>
            <person name="Knights A."/>
            <person name="Laird G.K."/>
            <person name="Langford C."/>
            <person name="Lawlor S."/>
            <person name="Leongamornlert D.A."/>
            <person name="Leversha M."/>
            <person name="Lloyd C."/>
            <person name="Lloyd D.M."/>
            <person name="Lovell J."/>
            <person name="Martin S."/>
            <person name="Mashreghi-Mohammadi M."/>
            <person name="Matthews L."/>
            <person name="McLaren S."/>
            <person name="McLay K.E."/>
            <person name="McMurray A."/>
            <person name="Milne S."/>
            <person name="Nickerson T."/>
            <person name="Nisbett J."/>
            <person name="Nordsiek G."/>
            <person name="Pearce A.V."/>
            <person name="Peck A.I."/>
            <person name="Porter K.M."/>
            <person name="Pandian R."/>
            <person name="Pelan S."/>
            <person name="Phillimore B."/>
            <person name="Povey S."/>
            <person name="Ramsey Y."/>
            <person name="Rand V."/>
            <person name="Scharfe M."/>
            <person name="Sehra H.K."/>
            <person name="Shownkeen R."/>
            <person name="Sims S.K."/>
            <person name="Skuce C.D."/>
            <person name="Smith M."/>
            <person name="Steward C.A."/>
            <person name="Swarbreck D."/>
            <person name="Sycamore N."/>
            <person name="Tester J."/>
            <person name="Thorpe A."/>
            <person name="Tracey A."/>
            <person name="Tromans A."/>
            <person name="Thomas D.W."/>
            <person name="Wall M."/>
            <person name="Wallis J.M."/>
            <person name="West A.P."/>
            <person name="Whitehead S.L."/>
            <person name="Willey D.L."/>
            <person name="Williams S.A."/>
            <person name="Wilming L."/>
            <person name="Wray P.W."/>
            <person name="Young L."/>
            <person name="Ashurst J.L."/>
            <person name="Coulson A."/>
            <person name="Blocker H."/>
            <person name="Durbin R.M."/>
            <person name="Sulston J.E."/>
            <person name="Hubbard T."/>
            <person name="Jackson M.J."/>
            <person name="Bentley D.R."/>
            <person name="Beck S."/>
            <person name="Rogers J."/>
            <person name="Dunham I."/>
        </authorList>
    </citation>
    <scope>NUCLEOTIDE SEQUENCE [LARGE SCALE GENOMIC DNA]</scope>
</reference>
<reference key="3">
    <citation type="submission" date="2005-07" db="EMBL/GenBank/DDBJ databases">
        <authorList>
            <person name="Mural R.J."/>
            <person name="Istrail S."/>
            <person name="Sutton G.G."/>
            <person name="Florea L."/>
            <person name="Halpern A.L."/>
            <person name="Mobarry C.M."/>
            <person name="Lippert R."/>
            <person name="Walenz B."/>
            <person name="Shatkay H."/>
            <person name="Dew I."/>
            <person name="Miller J.R."/>
            <person name="Flanigan M.J."/>
            <person name="Edwards N.J."/>
            <person name="Bolanos R."/>
            <person name="Fasulo D."/>
            <person name="Halldorsson B.V."/>
            <person name="Hannenhalli S."/>
            <person name="Turner R."/>
            <person name="Yooseph S."/>
            <person name="Lu F."/>
            <person name="Nusskern D.R."/>
            <person name="Shue B.C."/>
            <person name="Zheng X.H."/>
            <person name="Zhong F."/>
            <person name="Delcher A.L."/>
            <person name="Huson D.H."/>
            <person name="Kravitz S.A."/>
            <person name="Mouchard L."/>
            <person name="Reinert K."/>
            <person name="Remington K.A."/>
            <person name="Clark A.G."/>
            <person name="Waterman M.S."/>
            <person name="Eichler E.E."/>
            <person name="Adams M.D."/>
            <person name="Hunkapiller M.W."/>
            <person name="Myers E.W."/>
            <person name="Venter J.C."/>
        </authorList>
    </citation>
    <scope>NUCLEOTIDE SEQUENCE [LARGE SCALE GENOMIC DNA]</scope>
</reference>
<reference key="4">
    <citation type="journal article" date="2004" name="Genome Res.">
        <title>The status, quality, and expansion of the NIH full-length cDNA project: the Mammalian Gene Collection (MGC).</title>
        <authorList>
            <consortium name="The MGC Project Team"/>
        </authorList>
    </citation>
    <scope>NUCLEOTIDE SEQUENCE [LARGE SCALE MRNA] (ISOFORM 1)</scope>
    <source>
        <tissue>Brain</tissue>
        <tissue>Colon adenocarcinoma</tissue>
    </source>
</reference>
<reference key="5">
    <citation type="journal article" date="2001" name="EMBO Rep.">
        <title>The Golgi matrix protein GM130: a specific interacting partner of the small GTPase rab1b.</title>
        <authorList>
            <person name="Weide T."/>
            <person name="Bayer M."/>
            <person name="Koester M."/>
            <person name="Siebrasse J.-P."/>
            <person name="Peters R."/>
            <person name="Barnekow A."/>
        </authorList>
    </citation>
    <scope>NUCLEOTIDE SEQUENCE [MRNA] OF 13-1002 (ISOFORM 1)</scope>
    <scope>INTERACTION WITH RAB1B</scope>
    <source>
        <tissue>Placenta</tissue>
    </source>
</reference>
<reference key="6">
    <citation type="submission" date="2003-05" db="EMBL/GenBank/DDBJ databases">
        <title>Cloning of human full-length CDSs in BD Creator(TM) system donor vector.</title>
        <authorList>
            <person name="Kalnine N."/>
            <person name="Chen X."/>
            <person name="Rolfs A."/>
            <person name="Halleck A."/>
            <person name="Hines L."/>
            <person name="Eisenstein S."/>
            <person name="Koundinya M."/>
            <person name="Raphael J."/>
            <person name="Moreira D."/>
            <person name="Kelley T."/>
            <person name="LaBaer J."/>
            <person name="Lin Y."/>
            <person name="Phelan M."/>
            <person name="Farmer A."/>
        </authorList>
    </citation>
    <scope>NUCLEOTIDE SEQUENCE [LARGE SCALE MRNA] OF 528-1002 (ISOFORM 1)</scope>
</reference>
<reference key="7">
    <citation type="journal article" date="2001" name="Nat. Cell Biol.">
        <title>The GM130 and GRASP65 Golgi proteins cycle through and define a subdomain of the intermediate compartment.</title>
        <authorList>
            <person name="Marra P."/>
            <person name="Maffucci T."/>
            <person name="Daniele T."/>
            <person name="Tullio G.D."/>
            <person name="Ikehara Y."/>
            <person name="Chan E.K."/>
            <person name="Luini A."/>
            <person name="Beznoussenko G."/>
            <person name="Mironov A."/>
            <person name="De Matteis M.A."/>
        </authorList>
    </citation>
    <scope>SUBCELLULAR LOCATION</scope>
</reference>
<reference key="8">
    <citation type="journal article" date="2004" name="Biochem. Biophys. Res. Commun.">
        <title>Golgi fragmentation during Fas-mediated apoptosis is associated with the rapid loss of GM130.</title>
        <authorList>
            <person name="Walker A."/>
            <person name="Ward C."/>
            <person name="Sheldrake T.A."/>
            <person name="Dransfield I."/>
            <person name="Rossi A.G."/>
            <person name="Pryde J.G."/>
            <person name="Haslett C."/>
        </authorList>
    </citation>
    <scope>CLEAVAGE BY CASPASE</scope>
</reference>
<reference key="9">
    <citation type="journal article" date="2006" name="Nat. Biotechnol.">
        <title>A probability-based approach for high-throughput protein phosphorylation analysis and site localization.</title>
        <authorList>
            <person name="Beausoleil S.A."/>
            <person name="Villen J."/>
            <person name="Gerber S.A."/>
            <person name="Rush J."/>
            <person name="Gygi S.P."/>
        </authorList>
    </citation>
    <scope>PHOSPHORYLATION [LARGE SCALE ANALYSIS] AT SER-37</scope>
    <scope>IDENTIFICATION BY MASS SPECTROMETRY [LARGE SCALE ANALYSIS]</scope>
    <source>
        <tissue>Cervix carcinoma</tissue>
    </source>
</reference>
<reference key="10">
    <citation type="journal article" date="2006" name="Nat. Cell Biol.">
        <title>GM130 and GRASP65-dependent lateral cisternal fusion allows uniform Golgi-enzyme distribution.</title>
        <authorList>
            <person name="Puthenveedu M.A."/>
            <person name="Bachert C."/>
            <person name="Puri S."/>
            <person name="Lanni F."/>
            <person name="Linstedt A.D."/>
        </authorList>
    </citation>
    <scope>FUNCTION</scope>
    <scope>INTERACTION WITH GORASP1</scope>
</reference>
<reference key="11">
    <citation type="journal article" date="2007" name="Mol. Biol. Cell">
        <title>The biogenesis of the Golgi ribbon: the roles of membrane input from the ER and of GM130.</title>
        <authorList>
            <person name="Marra P."/>
            <person name="Salvatore L."/>
            <person name="Mironov A. Jr."/>
            <person name="Di Campli A."/>
            <person name="Di Tullio G."/>
            <person name="Trucco A."/>
            <person name="Beznoussenko G."/>
            <person name="Mironov A."/>
            <person name="De Matteis M.A."/>
        </authorList>
    </citation>
    <scope>FUNCTION</scope>
</reference>
<reference key="12">
    <citation type="journal article" date="2008" name="EMBO J.">
        <title>ZFPL1, a novel ring finger protein required for cis-Golgi integrity and efficient ER-to-Golgi transport.</title>
        <authorList>
            <person name="Chiu C.-F."/>
            <person name="Ghanekar Y."/>
            <person name="Frost L."/>
            <person name="Diao A."/>
            <person name="Morrison D."/>
            <person name="McKenzie E."/>
            <person name="Lowe M."/>
        </authorList>
    </citation>
    <scope>INTERACTION WITH ZFPL1</scope>
</reference>
<reference key="13">
    <citation type="journal article" date="2008" name="Mol. Biol. Cell">
        <title>The Golgi protein GM130 regulates centrosome morphology and function.</title>
        <authorList>
            <person name="Kodani A."/>
            <person name="Sutterlin C."/>
        </authorList>
    </citation>
    <scope>FUNCTION</scope>
    <scope>INTERACTION WITH GORASP1</scope>
</reference>
<reference key="14">
    <citation type="journal article" date="2008" name="Mol. Cell">
        <title>Kinase-selective enrichment enables quantitative phosphoproteomics of the kinome across the cell cycle.</title>
        <authorList>
            <person name="Daub H."/>
            <person name="Olsen J.V."/>
            <person name="Bairlein M."/>
            <person name="Gnad F."/>
            <person name="Oppermann F.S."/>
            <person name="Korner R."/>
            <person name="Greff Z."/>
            <person name="Keri G."/>
            <person name="Stemmann O."/>
            <person name="Mann M."/>
        </authorList>
    </citation>
    <scope>PHOSPHORYLATION [LARGE SCALE ANALYSIS] AT SER-37</scope>
    <scope>IDENTIFICATION BY MASS SPECTROMETRY [LARGE SCALE ANALYSIS]</scope>
    <source>
        <tissue>Cervix carcinoma</tissue>
    </source>
</reference>
<reference key="15">
    <citation type="journal article" date="2008" name="Proc. Natl. Acad. Sci. U.S.A.">
        <title>A quantitative atlas of mitotic phosphorylation.</title>
        <authorList>
            <person name="Dephoure N."/>
            <person name="Zhou C."/>
            <person name="Villen J."/>
            <person name="Beausoleil S.A."/>
            <person name="Bakalarski C.E."/>
            <person name="Elledge S.J."/>
            <person name="Gygi S.P."/>
        </authorList>
    </citation>
    <scope>PHOSPHORYLATION [LARGE SCALE ANALYSIS] AT SER-37 AND SER-438</scope>
    <scope>IDENTIFICATION BY MASS SPECTROMETRY [LARGE SCALE ANALYSIS]</scope>
    <source>
        <tissue>Cervix carcinoma</tissue>
    </source>
</reference>
<reference key="16">
    <citation type="journal article" date="2009" name="EMBO J.">
        <title>Microtubule nucleation at the cis-side of the Golgi apparatus requires AKAP450 and GM130.</title>
        <authorList>
            <person name="Rivero S."/>
            <person name="Cardenas J."/>
            <person name="Bornens M."/>
            <person name="Rios R.M."/>
        </authorList>
    </citation>
    <scope>FUNCTION</scope>
    <scope>INTERACTION WITH AKAP9</scope>
</reference>
<reference key="17">
    <citation type="journal article" date="2009" name="Mol. Biol. Cell">
        <title>GM130-dependent control of Cdc42 activity at the Golgi regulates centrosome organization.</title>
        <authorList>
            <person name="Kodani A."/>
            <person name="Kristensen I."/>
            <person name="Huang L."/>
            <person name="Sutterlin C."/>
        </authorList>
    </citation>
    <scope>FUNCTION</scope>
</reference>
<reference key="18">
    <citation type="journal article" date="2010" name="Cell Res.">
        <title>PRMT5 regulates Golgi apparatus structure through methylation of the golgin GM130.</title>
        <authorList>
            <person name="Zhou Z."/>
            <person name="Sun X."/>
            <person name="Zou Z."/>
            <person name="Sun L."/>
            <person name="Zhang T."/>
            <person name="Guo S."/>
            <person name="Wen Y."/>
            <person name="Liu L."/>
            <person name="Wang Y."/>
            <person name="Qin J."/>
            <person name="Li L."/>
            <person name="Gong W."/>
            <person name="Bao S."/>
        </authorList>
    </citation>
    <scope>FUNCTION</scope>
    <scope>PHOSPHORYLATION AT SER-37</scope>
    <scope>METHYLATION AT ARG-18; ARG-30 AND ARG-35</scope>
    <scope>MUTAGENESIS OF ARG-18; ARG-30 AND ARG-35</scope>
</reference>
<reference key="19">
    <citation type="journal article" date="2010" name="Sci. Signal.">
        <title>Quantitative phosphoproteomics reveals widespread full phosphorylation site occupancy during mitosis.</title>
        <authorList>
            <person name="Olsen J.V."/>
            <person name="Vermeulen M."/>
            <person name="Santamaria A."/>
            <person name="Kumar C."/>
            <person name="Miller M.L."/>
            <person name="Jensen L.J."/>
            <person name="Gnad F."/>
            <person name="Cox J."/>
            <person name="Jensen T.S."/>
            <person name="Nigg E.A."/>
            <person name="Brunak S."/>
            <person name="Mann M."/>
        </authorList>
    </citation>
    <scope>PHOSPHORYLATION [LARGE SCALE ANALYSIS] AT SER-953</scope>
    <scope>IDENTIFICATION BY MASS SPECTROMETRY [LARGE SCALE ANALYSIS]</scope>
    <source>
        <tissue>Cervix carcinoma</tissue>
    </source>
</reference>
<reference key="20">
    <citation type="journal article" date="2011" name="BMC Syst. Biol.">
        <title>Initial characterization of the human central proteome.</title>
        <authorList>
            <person name="Burkard T.R."/>
            <person name="Planyavsky M."/>
            <person name="Kaupe I."/>
            <person name="Breitwieser F.P."/>
            <person name="Buerckstuemmer T."/>
            <person name="Bennett K.L."/>
            <person name="Superti-Furga G."/>
            <person name="Colinge J."/>
        </authorList>
    </citation>
    <scope>IDENTIFICATION BY MASS SPECTROMETRY [LARGE SCALE ANALYSIS]</scope>
</reference>
<reference key="21">
    <citation type="journal article" date="2013" name="J. Proteome Res.">
        <title>Toward a comprehensive characterization of a human cancer cell phosphoproteome.</title>
        <authorList>
            <person name="Zhou H."/>
            <person name="Di Palma S."/>
            <person name="Preisinger C."/>
            <person name="Peng M."/>
            <person name="Polat A.N."/>
            <person name="Heck A.J."/>
            <person name="Mohammed S."/>
        </authorList>
    </citation>
    <scope>PHOSPHORYLATION [LARGE SCALE ANALYSIS] AT SER-66; SER-438; SER-953 AND SER-981</scope>
    <scope>IDENTIFICATION BY MASS SPECTROMETRY [LARGE SCALE ANALYSIS]</scope>
    <source>
        <tissue>Cervix carcinoma</tissue>
        <tissue>Erythroleukemia</tissue>
    </source>
</reference>
<reference key="22">
    <citation type="journal article" date="2014" name="J. Proteomics">
        <title>An enzyme assisted RP-RPLC approach for in-depth analysis of human liver phosphoproteome.</title>
        <authorList>
            <person name="Bian Y."/>
            <person name="Song C."/>
            <person name="Cheng K."/>
            <person name="Dong M."/>
            <person name="Wang F."/>
            <person name="Huang J."/>
            <person name="Sun D."/>
            <person name="Wang L."/>
            <person name="Ye M."/>
            <person name="Zou H."/>
        </authorList>
    </citation>
    <scope>PHOSPHORYLATION [LARGE SCALE ANALYSIS] AT SER-273; SER-690 AND SER-937</scope>
    <scope>IDENTIFICATION BY MASS SPECTROMETRY [LARGE SCALE ANALYSIS]</scope>
    <source>
        <tissue>Liver</tissue>
    </source>
</reference>
<reference key="23">
    <citation type="journal article" date="2015" name="Cell">
        <title>GM130 regulates Golgi-derived spindle assembly by activating TPX2 and capturing microtubules.</title>
        <authorList>
            <person name="Wei J.H."/>
            <person name="Zhang Z.C."/>
            <person name="Wynn R.M."/>
            <person name="Seemann J."/>
        </authorList>
    </citation>
    <scope>FUNCTION</scope>
    <scope>SUBCELLULAR LOCATION</scope>
    <scope>DOMAIN</scope>
    <scope>PHOSPHORYLATION</scope>
    <scope>MUTAGENESIS OF 26-LYS--LYS-49 AND SER-37</scope>
</reference>
<reference key="24">
    <citation type="journal article" date="2015" name="Proteomics">
        <title>N-terminome analysis of the human mitochondrial proteome.</title>
        <authorList>
            <person name="Vaca Jacome A.S."/>
            <person name="Rabilloud T."/>
            <person name="Schaeffer-Reiss C."/>
            <person name="Rompais M."/>
            <person name="Ayoub D."/>
            <person name="Lane L."/>
            <person name="Bairoch A."/>
            <person name="Van Dorsselaer A."/>
            <person name="Carapito C."/>
        </authorList>
    </citation>
    <scope>IDENTIFICATION BY MASS SPECTROMETRY [LARGE SCALE ANALYSIS]</scope>
</reference>
<reference key="25">
    <citation type="journal article" date="2016" name="Hum. Genet.">
        <title>GOLGA2, encoding a master regulator of golgi apparatus, is mutated in a patient with a neuromuscular disorder.</title>
        <authorList>
            <person name="Shamseldin H.E."/>
            <person name="Bennett A.H."/>
            <person name="Alfadhel M."/>
            <person name="Gupta V."/>
            <person name="Alkuraya F.S."/>
        </authorList>
    </citation>
    <scope>INVOLVEMENT IN DEDHMB</scope>
</reference>
<reference key="26">
    <citation type="journal article" date="2019" name="Genet. Med.">
        <title>Autozygome and high throughput confirmation of disease genes candidacy.</title>
        <authorList>
            <person name="Maddirevula S."/>
            <person name="Alzahrani F."/>
            <person name="Al-Owain M."/>
            <person name="Al Muhaizea M.A."/>
            <person name="Kayyali H.R."/>
            <person name="AlHashem A."/>
            <person name="Rahbeeni Z."/>
            <person name="Al-Otaibi M."/>
            <person name="Alzaidan H.I."/>
            <person name="Balobaid A."/>
            <person name="El Khashab H.Y."/>
            <person name="Bubshait D.K."/>
            <person name="Faden M."/>
            <person name="Yamani S.A."/>
            <person name="Dabbagh O."/>
            <person name="Al-Mureikhi M."/>
            <person name="Jasser A.A."/>
            <person name="Alsaif H.S."/>
            <person name="Alluhaydan I."/>
            <person name="Seidahmed M.Z."/>
            <person name="Alabbasi B.H."/>
            <person name="Almogarri I."/>
            <person name="Kurdi W."/>
            <person name="Akleh H."/>
            <person name="Qari A."/>
            <person name="Al Tala S.M."/>
            <person name="Alhomaidi S."/>
            <person name="Kentab A.Y."/>
            <person name="Salih M.A."/>
            <person name="Chedrawi A."/>
            <person name="Alameer S."/>
            <person name="Tabarki B."/>
            <person name="Shamseldin H.E."/>
            <person name="Patel N."/>
            <person name="Ibrahim N."/>
            <person name="Abdulwahab F."/>
            <person name="Samira M."/>
            <person name="Goljan E."/>
            <person name="Abouelhoda M."/>
            <person name="Meyer B.F."/>
            <person name="Hashem M."/>
            <person name="Shaheen R."/>
            <person name="AlShahwan S."/>
            <person name="Alfadhel M."/>
            <person name="Ben-Omran T."/>
            <person name="Al-Qattan M.M."/>
            <person name="Monies D."/>
            <person name="Alkuraya F.S."/>
        </authorList>
    </citation>
    <scope>INVOLVEMENT IN DEDHMB</scope>
</reference>
<reference evidence="26" key="27">
    <citation type="journal article" date="2015" name="J. Biol. Chem.">
        <title>Structural basis for the interaction between the Golgi reassembly-stacking protein GRASP65 and the Golgi matrix protein GM130.</title>
        <authorList>
            <person name="Hu F."/>
            <person name="Shi X."/>
            <person name="Li B."/>
            <person name="Huang X."/>
            <person name="Morelli X."/>
            <person name="Shi N."/>
        </authorList>
    </citation>
    <scope>X-RAY CRYSTALLOGRAPHY (1.96 ANGSTROMS) OF 980-1002 IN COMPLEX WITH GORASP1</scope>
    <scope>INTERACTION WITH GORASP1</scope>
    <scope>FUNCTION</scope>
    <scope>SUBUNIT</scope>
    <scope>MUTAGENESIS OF PHE-987 AND ILE-1002</scope>
</reference>
<reference key="28">
    <citation type="journal article" date="2021" name="Clin. Genet.">
        <title>Bi-allelic loss of function variants in GOLGA2 are associated with a complex neurological phenotype: Report of a second family.</title>
        <authorList>
            <person name="Kotecha U."/>
            <person name="Mistri M."/>
            <person name="Shah N."/>
            <person name="Shah P.S."/>
            <person name="Gupta V.A."/>
        </authorList>
    </citation>
    <scope>VARIANT DEDHMB 751-GLN--ILE-1002 DEL</scope>
</reference>
<evidence type="ECO:0000250" key="1">
    <source>
        <dbReference type="UniProtKB" id="Q62839"/>
    </source>
</evidence>
<evidence type="ECO:0000250" key="2">
    <source>
        <dbReference type="UniProtKB" id="Q921M4"/>
    </source>
</evidence>
<evidence type="ECO:0000255" key="3"/>
<evidence type="ECO:0000256" key="4">
    <source>
        <dbReference type="SAM" id="MobiDB-lite"/>
    </source>
</evidence>
<evidence type="ECO:0000269" key="5">
    <source>
    </source>
</evidence>
<evidence type="ECO:0000269" key="6">
    <source>
    </source>
</evidence>
<evidence type="ECO:0000269" key="7">
    <source>
    </source>
</evidence>
<evidence type="ECO:0000269" key="8">
    <source>
    </source>
</evidence>
<evidence type="ECO:0000269" key="9">
    <source>
    </source>
</evidence>
<evidence type="ECO:0000269" key="10">
    <source>
    </source>
</evidence>
<evidence type="ECO:0000269" key="11">
    <source>
    </source>
</evidence>
<evidence type="ECO:0000269" key="12">
    <source>
    </source>
</evidence>
<evidence type="ECO:0000269" key="13">
    <source>
    </source>
</evidence>
<evidence type="ECO:0000269" key="14">
    <source>
    </source>
</evidence>
<evidence type="ECO:0000269" key="15">
    <source>
    </source>
</evidence>
<evidence type="ECO:0000269" key="16">
    <source>
    </source>
</evidence>
<evidence type="ECO:0000269" key="17">
    <source>
    </source>
</evidence>
<evidence type="ECO:0000269" key="18">
    <source>
    </source>
</evidence>
<evidence type="ECO:0000269" key="19">
    <source>
    </source>
</evidence>
<evidence type="ECO:0000303" key="20">
    <source>
    </source>
</evidence>
<evidence type="ECO:0000303" key="21">
    <source>
    </source>
</evidence>
<evidence type="ECO:0000305" key="22"/>
<evidence type="ECO:0000305" key="23">
    <source>
    </source>
</evidence>
<evidence type="ECO:0000305" key="24">
    <source>
    </source>
</evidence>
<evidence type="ECO:0000305" key="25">
    <source>
    </source>
</evidence>
<evidence type="ECO:0007744" key="26">
    <source>
        <dbReference type="PDB" id="4REY"/>
    </source>
</evidence>
<evidence type="ECO:0007744" key="27">
    <source>
    </source>
</evidence>
<evidence type="ECO:0007744" key="28">
    <source>
    </source>
</evidence>
<evidence type="ECO:0007744" key="29">
    <source>
    </source>
</evidence>
<evidence type="ECO:0007744" key="30">
    <source>
    </source>
</evidence>
<evidence type="ECO:0007744" key="31">
    <source>
    </source>
</evidence>
<evidence type="ECO:0007744" key="32">
    <source>
    </source>
</evidence>
<evidence type="ECO:0007829" key="33">
    <source>
        <dbReference type="PDB" id="6K06"/>
    </source>
</evidence>
<accession>Q08379</accession>
<accession>A0A0C4DGS5</accession>
<accession>Q6GRM9</accession>
<accession>Q9BRB0</accession>
<accession>Q9NYF9</accession>
<comment type="function">
    <text evidence="1 2 8 9 10 12 13 15 24">Peripheral membrane component of the cis-Golgi stack that acts as a membrane skeleton that maintains the structure of the Golgi apparatus, and as a vesicle thether that facilitates vesicle fusion to the Golgi membrane (Probable) (PubMed:16489344). Required for normal protein transport from the endoplasmic reticulum to the Golgi apparatus and the cell membrane (By similarity). Together with p115/USO1 and STX5, involved in vesicle tethering and fusion at the cis-Golgi membrane to maintain the stacked and inter-connected structure of the Golgi apparatus. Plays a central role in mitotic Golgi disassembly: phosphorylation at Ser-37 by CDK1 at the onset of mitosis inhibits the interaction with p115/USO1, preventing tethering of COPI vesicles and thereby inhibiting transport through the Golgi apparatus during mitosis (By similarity). Also plays a key role in spindle pole assembly and centrosome organization (PubMed:26165940). Promotes the mitotic spindle pole assembly by activating the spindle assembly factor TPX2 to nucleate microtubules around the Golgi and capture them to couple mitotic membranes to the spindle: upon phosphorylation at the onset of mitosis, GOLGA2 interacts with importin-alpha via the nuclear localization signal region, leading to recruit importin-alpha to the Golgi membranes and liberate the spindle assembly factor TPX2 from importin-alpha. TPX2 then activates AURKA kinase and stimulates local microtubule nucleation. Upon filament assembly, nascent microtubules are further captured by GOLGA2, thus linking Golgi membranes to the spindle (PubMed:19242490, PubMed:26165940). Regulates the meiotic spindle pole assembly, probably via the same mechanism (By similarity). Also regulates the centrosome organization (PubMed:18045989, PubMed:19109421). Also required for the Golgi ribbon formation and glycosylation of membrane and secretory proteins (PubMed:16489344, PubMed:17314401).</text>
</comment>
<comment type="subunit">
    <text evidence="1 5 8 10 11 13 16">Homodimer, may assemble into homohexamers (PubMed:26363069). Homotetramer; forms a parallel homotetramer with a flexible rod-like structure that can give rise to I- and Y-shaped conformations (By similarity). Interacts with GORASP1/GRASP65 (PubMed:16489344, PubMed:18045989, PubMed:26363069). The homooligomer forms a complex with GORASP1 with a 1:1 stoichiometry (By similarity). Interacts with RAB1B that has been activated by GTP-binding (PubMed:11306556). Interacts with p115/USO1; interaction with p115/USO1 inhibits interaction with STX5 and/or RAB1B. Interacts with STX5 (By similarity). Interacts with ZFPL1 (PubMed:18323775). Interacts with AKAP450/AKAP9; leading to recruit AKAP450/AKAP9 to the cis-Golgi (PubMed:19242490).</text>
</comment>
<comment type="interaction">
    <interactant intactId="EBI-618309">
        <id>Q08379</id>
    </interactant>
    <interactant intactId="EBI-714732">
        <id>O75689</id>
        <label>ADAP1</label>
    </interactant>
    <organismsDiffer>false</organismsDiffer>
    <experiments>3</experiments>
</comment>
<comment type="interaction">
    <interactant intactId="EBI-618309">
        <id>Q08379</id>
    </interactant>
    <interactant intactId="EBI-395282">
        <id>Q9UHB7</id>
        <label>AFF4</label>
    </interactant>
    <organismsDiffer>false</organismsDiffer>
    <experiments>3</experiments>
</comment>
<comment type="interaction">
    <interactant intactId="EBI-618309">
        <id>Q08379</id>
    </interactant>
    <interactant intactId="EBI-10261324">
        <id>Q9UHB7-2</id>
        <label>AFF4</label>
    </interactant>
    <organismsDiffer>false</organismsDiffer>
    <experiments>3</experiments>
</comment>
<comment type="interaction">
    <interactant intactId="EBI-618309">
        <id>Q08379</id>
    </interactant>
    <interactant intactId="EBI-8643161">
        <id>Q9NX04</id>
        <label>AIRIM</label>
    </interactant>
    <organismsDiffer>false</organismsDiffer>
    <experiments>3</experiments>
</comment>
<comment type="interaction">
    <interactant intactId="EBI-618309">
        <id>Q08379</id>
    </interactant>
    <interactant intactId="EBI-1048311">
        <id>Q99996</id>
        <label>AKAP9</label>
    </interactant>
    <organismsDiffer>false</organismsDiffer>
    <experiments>3</experiments>
</comment>
<comment type="interaction">
    <interactant intactId="EBI-618309">
        <id>Q08379</id>
    </interactant>
    <interactant intactId="EBI-2371780">
        <id>Q6NS38</id>
        <label>ALKBH2</label>
    </interactant>
    <organismsDiffer>false</organismsDiffer>
    <experiments>3</experiments>
</comment>
<comment type="interaction">
    <interactant intactId="EBI-618309">
        <id>Q08379</id>
    </interactant>
    <interactant intactId="EBI-6658697">
        <id>Q96Q83</id>
        <label>ALKBH3</label>
    </interactant>
    <organismsDiffer>false</organismsDiffer>
    <experiments>5</experiments>
</comment>
<comment type="interaction">
    <interactant intactId="EBI-618309">
        <id>Q08379</id>
    </interactant>
    <interactant intactId="EBI-10187270">
        <id>Q9Y2J4-4</id>
        <label>AMOTL2</label>
    </interactant>
    <organismsDiffer>false</organismsDiffer>
    <experiments>3</experiments>
</comment>
<comment type="interaction">
    <interactant intactId="EBI-618309">
        <id>Q08379</id>
    </interactant>
    <interactant intactId="EBI-355540">
        <id>Q8IWG5</id>
        <label>ANKHD1</label>
    </interactant>
    <organismsDiffer>false</organismsDiffer>
    <experiments>3</experiments>
</comment>
<comment type="interaction">
    <interactant intactId="EBI-618309">
        <id>Q08379</id>
    </interactant>
    <interactant intactId="EBI-17183751">
        <id>X5D778</id>
        <label>ANKRD11</label>
    </interactant>
    <organismsDiffer>false</organismsDiffer>
    <experiments>4</experiments>
</comment>
<comment type="interaction">
    <interactant intactId="EBI-618309">
        <id>Q08379</id>
    </interactant>
    <interactant intactId="EBI-14100900">
        <id>A1A5B0</id>
        <label>ANKRD36</label>
    </interactant>
    <organismsDiffer>false</organismsDiffer>
    <experiments>3</experiments>
</comment>
<comment type="interaction">
    <interactant intactId="EBI-618309">
        <id>Q08379</id>
    </interactant>
    <interactant intactId="EBI-744859">
        <id>Q96IX9</id>
        <label>ANKRD36BP1</label>
    </interactant>
    <organismsDiffer>false</organismsDiffer>
    <experiments>3</experiments>
</comment>
<comment type="interaction">
    <interactant intactId="EBI-618309">
        <id>Q08379</id>
    </interactant>
    <interactant intactId="EBI-11954519">
        <id>Q49AR9</id>
        <label>ANKS1A</label>
    </interactant>
    <organismsDiffer>false</organismsDiffer>
    <experiments>3</experiments>
</comment>
<comment type="interaction">
    <interactant intactId="EBI-618309">
        <id>Q08379</id>
    </interactant>
    <interactant intactId="EBI-745213">
        <id>P29972</id>
        <label>AQP1</label>
    </interactant>
    <organismsDiffer>false</organismsDiffer>
    <experiments>3</experiments>
</comment>
<comment type="interaction">
    <interactant intactId="EBI-618309">
        <id>Q08379</id>
    </interactant>
    <interactant intactId="EBI-638194">
        <id>P53365</id>
        <label>ARFIP2</label>
    </interactant>
    <organismsDiffer>false</organismsDiffer>
    <experiments>3</experiments>
</comment>
<comment type="interaction">
    <interactant intactId="EBI-618309">
        <id>Q08379</id>
    </interactant>
    <interactant intactId="EBI-2825900">
        <id>Q92619</id>
        <label>ARHGAP45</label>
    </interactant>
    <organismsDiffer>false</organismsDiffer>
    <experiments>3</experiments>
</comment>
<comment type="interaction">
    <interactant intactId="EBI-618309">
        <id>Q08379</id>
    </interactant>
    <interactant intactId="EBI-1642523">
        <id>Q15052</id>
        <label>ARHGEF6</label>
    </interactant>
    <organismsDiffer>false</organismsDiffer>
    <experiments>3</experiments>
</comment>
<comment type="interaction">
    <interactant intactId="EBI-618309">
        <id>Q08379</id>
    </interactant>
    <interactant intactId="EBI-10186132">
        <id>Q0P5N6</id>
        <label>ARL16</label>
    </interactant>
    <organismsDiffer>false</organismsDiffer>
    <experiments>7</experiments>
</comment>
<comment type="interaction">
    <interactant intactId="EBI-618309">
        <id>Q08379</id>
    </interactant>
    <interactant intactId="EBI-2875746">
        <id>P40617</id>
        <label>ARL4A</label>
    </interactant>
    <organismsDiffer>false</organismsDiffer>
    <experiments>6</experiments>
</comment>
<comment type="interaction">
    <interactant intactId="EBI-618309">
        <id>Q08379</id>
    </interactant>
    <interactant intactId="EBI-351829">
        <id>O15145</id>
        <label>ARPC3</label>
    </interactant>
    <organismsDiffer>false</organismsDiffer>
    <experiments>6</experiments>
</comment>
<comment type="interaction">
    <interactant intactId="EBI-618309">
        <id>Q08379</id>
    </interactant>
    <interactant intactId="EBI-2866142">
        <id>Q32MH5</id>
        <label>ATOSA</label>
    </interactant>
    <organismsDiffer>false</organismsDiffer>
    <experiments>3</experiments>
</comment>
<comment type="interaction">
    <interactant intactId="EBI-618309">
        <id>Q08379</id>
    </interactant>
    <interactant intactId="EBI-745689">
        <id>Q7L5A3</id>
        <label>ATOSB</label>
    </interactant>
    <organismsDiffer>false</organismsDiffer>
    <experiments>3</experiments>
</comment>
<comment type="interaction">
    <interactant intactId="EBI-618309">
        <id>Q08379</id>
    </interactant>
    <interactant intactId="EBI-355815">
        <id>P48047</id>
        <label>ATP5PO</label>
    </interactant>
    <organismsDiffer>false</organismsDiffer>
    <experiments>3</experiments>
</comment>
<comment type="interaction">
    <interactant intactId="EBI-618309">
        <id>Q08379</id>
    </interactant>
    <interactant intactId="EBI-10270867">
        <id>Q8NEY4-2</id>
        <label>ATP6V1C2</label>
    </interactant>
    <organismsDiffer>false</organismsDiffer>
    <experiments>6</experiments>
</comment>
<comment type="interaction">
    <interactant intactId="EBI-618309">
        <id>Q08379</id>
    </interactant>
    <interactant intactId="EBI-10253919">
        <id>Q6PJ05</id>
        <label>ATP6V1D</label>
    </interactant>
    <organismsDiffer>false</organismsDiffer>
    <experiments>3</experiments>
</comment>
<comment type="interaction">
    <interactant intactId="EBI-618309">
        <id>Q08379</id>
    </interactant>
    <interactant intactId="EBI-10266952">
        <id>Q8N5Z9</id>
        <label>ATP6V1D</label>
    </interactant>
    <organismsDiffer>false</organismsDiffer>
    <experiments>3</experiments>
</comment>
<comment type="interaction">
    <interactant intactId="EBI-618309">
        <id>Q08379</id>
    </interactant>
    <interactant intactId="EBI-711802">
        <id>O75348</id>
        <label>ATP6V1G1</label>
    </interactant>
    <organismsDiffer>false</organismsDiffer>
    <experiments>3</experiments>
</comment>
<comment type="interaction">
    <interactant intactId="EBI-618309">
        <id>Q08379</id>
    </interactant>
    <interactant intactId="EBI-710484">
        <id>O15169</id>
        <label>AXIN1</label>
    </interactant>
    <organismsDiffer>false</organismsDiffer>
    <experiments>3</experiments>
</comment>
<comment type="interaction">
    <interactant intactId="EBI-618309">
        <id>Q08379</id>
    </interactant>
    <interactant intactId="EBI-742750">
        <id>Q8TBE0</id>
        <label>BAHD1</label>
    </interactant>
    <organismsDiffer>false</organismsDiffer>
    <experiments>3</experiments>
</comment>
<comment type="interaction">
    <interactant intactId="EBI-618309">
        <id>Q08379</id>
    </interactant>
    <interactant intactId="EBI-9977322">
        <id>A0AVN2</id>
        <label>BARD1</label>
    </interactant>
    <organismsDiffer>false</organismsDiffer>
    <experiments>3</experiments>
</comment>
<comment type="interaction">
    <interactant intactId="EBI-618309">
        <id>Q08379</id>
    </interactant>
    <interactant intactId="EBI-473181">
        <id>Q99728</id>
        <label>BARD1</label>
    </interactant>
    <organismsDiffer>false</organismsDiffer>
    <experiments>6</experiments>
</comment>
<comment type="interaction">
    <interactant intactId="EBI-618309">
        <id>Q08379</id>
    </interactant>
    <interactant intactId="EBI-741542">
        <id>Q9UIF8</id>
        <label>BAZ2B</label>
    </interactant>
    <organismsDiffer>false</organismsDiffer>
    <experiments>3</experiments>
</comment>
<comment type="interaction">
    <interactant intactId="EBI-618309">
        <id>Q08379</id>
    </interactant>
    <interactant intactId="EBI-1050106">
        <id>O75934</id>
        <label>BCAS2</label>
    </interactant>
    <organismsDiffer>false</organismsDiffer>
    <experiments>9</experiments>
</comment>
<comment type="interaction">
    <interactant intactId="EBI-618309">
        <id>Q08379</id>
    </interactant>
    <interactant intactId="EBI-765407">
        <id>P41182</id>
        <label>BCL6</label>
    </interactant>
    <organismsDiffer>false</organismsDiffer>
    <experiments>5</experiments>
</comment>
<comment type="interaction">
    <interactant intactId="EBI-618309">
        <id>Q08379</id>
    </interactant>
    <interactant intactId="EBI-10174813">
        <id>A8KA13</id>
        <label>BCL6B</label>
    </interactant>
    <organismsDiffer>false</organismsDiffer>
    <experiments>3</experiments>
</comment>
<comment type="interaction">
    <interactant intactId="EBI-618309">
        <id>Q08379</id>
    </interactant>
    <interactant intactId="EBI-358049">
        <id>Q13895</id>
        <label>BYSL</label>
    </interactant>
    <organismsDiffer>false</organismsDiffer>
    <experiments>8</experiments>
</comment>
<comment type="interaction">
    <interactant intactId="EBI-618309">
        <id>Q08379</id>
    </interactant>
    <interactant intactId="EBI-10268935">
        <id>Q8NA57</id>
        <label>C12orf50</label>
    </interactant>
    <organismsDiffer>false</organismsDiffer>
    <experiments>7</experiments>
</comment>
<comment type="interaction">
    <interactant intactId="EBI-618309">
        <id>Q08379</id>
    </interactant>
    <interactant intactId="EBI-12061599">
        <id>Q9H6X5-2</id>
        <label>C19orf44</label>
    </interactant>
    <organismsDiffer>false</organismsDiffer>
    <experiments>3</experiments>
</comment>
<comment type="interaction">
    <interactant intactId="EBI-618309">
        <id>Q08379</id>
    </interactant>
    <interactant intactId="EBI-739879">
        <id>Q53TS8</id>
        <label>C2CD6</label>
    </interactant>
    <organismsDiffer>false</organismsDiffer>
    <experiments>6</experiments>
</comment>
<comment type="interaction">
    <interactant intactId="EBI-618309">
        <id>Q08379</id>
    </interactant>
    <interactant intactId="EBI-306905">
        <id>Q9Y376</id>
        <label>CAB39</label>
    </interactant>
    <organismsDiffer>false</organismsDiffer>
    <experiments>3</experiments>
</comment>
<comment type="interaction">
    <interactant intactId="EBI-618309">
        <id>Q08379</id>
    </interactant>
    <interactant intactId="EBI-1765641">
        <id>Q9Y6W3</id>
        <label>CAPN7</label>
    </interactant>
    <organismsDiffer>false</organismsDiffer>
    <experiments>3</experiments>
</comment>
<comment type="interaction">
    <interactant intactId="EBI-618309">
        <id>Q08379</id>
    </interactant>
    <interactant intactId="EBI-12270182">
        <id>Q9NQ75-2</id>
        <label>CASS4</label>
    </interactant>
    <organismsDiffer>false</organismsDiffer>
    <experiments>3</experiments>
</comment>
<comment type="interaction">
    <interactant intactId="EBI-618309">
        <id>Q08379</id>
    </interactant>
    <interactant intactId="EBI-712912">
        <id>Q9HC52</id>
        <label>CBX8</label>
    </interactant>
    <organismsDiffer>false</organismsDiffer>
    <experiments>6</experiments>
</comment>
<comment type="interaction">
    <interactant intactId="EBI-618309">
        <id>Q08379</id>
    </interactant>
    <interactant intactId="EBI-356265">
        <id>Q8IX12</id>
        <label>CCAR1</label>
    </interactant>
    <organismsDiffer>false</organismsDiffer>
    <experiments>6</experiments>
</comment>
<comment type="interaction">
    <interactant intactId="EBI-618309">
        <id>Q08379</id>
    </interactant>
    <interactant intactId="EBI-744556">
        <id>Q96HB5</id>
        <label>CCDC120</label>
    </interactant>
    <organismsDiffer>false</organismsDiffer>
    <experiments>3</experiments>
</comment>
<comment type="interaction">
    <interactant intactId="EBI-618309">
        <id>Q08379</id>
    </interactant>
    <interactant intactId="EBI-10961312">
        <id>Q8IYE1</id>
        <label>CCDC13</label>
    </interactant>
    <organismsDiffer>false</organismsDiffer>
    <experiments>3</experiments>
</comment>
<comment type="interaction">
    <interactant intactId="EBI-618309">
        <id>Q08379</id>
    </interactant>
    <interactant intactId="EBI-10247802">
        <id>Q8IYE0-2</id>
        <label>CCDC146</label>
    </interactant>
    <organismsDiffer>false</organismsDiffer>
    <experiments>3</experiments>
</comment>
<comment type="interaction">
    <interactant intactId="EBI-618309">
        <id>Q08379</id>
    </interactant>
    <interactant intactId="EBI-10269342">
        <id>Q8NCX0</id>
        <label>CCDC150</label>
    </interactant>
    <organismsDiffer>false</organismsDiffer>
    <experiments>3</experiments>
</comment>
<comment type="interaction">
    <interactant intactId="EBI-618309">
        <id>Q08379</id>
    </interactant>
    <interactant intactId="EBI-12235840">
        <id>Q8NCX0-3</id>
        <label>CCDC150</label>
    </interactant>
    <organismsDiffer>false</organismsDiffer>
    <experiments>3</experiments>
</comment>
<comment type="interaction">
    <interactant intactId="EBI-618309">
        <id>Q08379</id>
    </interactant>
    <interactant intactId="EBI-719840">
        <id>Q96LX7</id>
        <label>CCDC17</label>
    </interactant>
    <organismsDiffer>false</organismsDiffer>
    <experiments>3</experiments>
</comment>
<comment type="interaction">
    <interactant intactId="EBI-618309">
        <id>Q08379</id>
    </interactant>
    <interactant intactId="EBI-740814">
        <id>Q8N715</id>
        <label>CCDC185</label>
    </interactant>
    <organismsDiffer>false</organismsDiffer>
    <experiments>3</experiments>
</comment>
<comment type="interaction">
    <interactant intactId="EBI-618309">
        <id>Q08379</id>
    </interactant>
    <interactant intactId="EBI-11748295">
        <id>E9PSE9</id>
        <label>CCDC198</label>
    </interactant>
    <organismsDiffer>false</organismsDiffer>
    <experiments>3</experiments>
</comment>
<comment type="interaction">
    <interactant intactId="EBI-618309">
        <id>Q08379</id>
    </interactant>
    <interactant intactId="EBI-10238351">
        <id>Q9NVL8</id>
        <label>CCDC198</label>
    </interactant>
    <organismsDiffer>false</organismsDiffer>
    <experiments>3</experiments>
</comment>
<comment type="interaction">
    <interactant intactId="EBI-618309">
        <id>Q08379</id>
    </interactant>
    <interactant intactId="EBI-6873045">
        <id>Q6NSX1</id>
        <label>CCDC70</label>
    </interactant>
    <organismsDiffer>false</organismsDiffer>
    <experiments>3</experiments>
</comment>
<comment type="interaction">
    <interactant intactId="EBI-618309">
        <id>Q08379</id>
    </interactant>
    <interactant intactId="EBI-749261">
        <id>Q9NVE4</id>
        <label>CCDC87</label>
    </interactant>
    <organismsDiffer>false</organismsDiffer>
    <experiments>6</experiments>
</comment>
<comment type="interaction">
    <interactant intactId="EBI-618309">
        <id>Q08379</id>
    </interactant>
    <interactant intactId="EBI-10175300">
        <id>Q8TD31-3</id>
        <label>CCHCR1</label>
    </interactant>
    <organismsDiffer>false</organismsDiffer>
    <experiments>8</experiments>
</comment>
<comment type="interaction">
    <interactant intactId="EBI-618309">
        <id>Q08379</id>
    </interactant>
    <interactant intactId="EBI-395261">
        <id>P24863</id>
        <label>CCNC</label>
    </interactant>
    <organismsDiffer>false</organismsDiffer>
    <experiments>3</experiments>
</comment>
<comment type="interaction">
    <interactant intactId="EBI-618309">
        <id>Q08379</id>
    </interactant>
    <interactant intactId="EBI-741406">
        <id>P51946</id>
        <label>CCNH</label>
    </interactant>
    <organismsDiffer>false</organismsDiffer>
    <experiments>9</experiments>
</comment>
<comment type="interaction">
    <interactant intactId="EBI-618309">
        <id>Q08379</id>
    </interactant>
    <interactant intactId="EBI-10260504">
        <id>Q86Y33</id>
        <label>CDC20B</label>
    </interactant>
    <organismsDiffer>false</organismsDiffer>
    <experiments>3</experiments>
</comment>
<comment type="interaction">
    <interactant intactId="EBI-618309">
        <id>Q08379</id>
    </interactant>
    <interactant intactId="EBI-11983537">
        <id>Q86Y33-5</id>
        <label>CDC20B</label>
    </interactant>
    <organismsDiffer>false</organismsDiffer>
    <experiments>3</experiments>
</comment>
<comment type="interaction">
    <interactant intactId="EBI-618309">
        <id>Q08379</id>
    </interactant>
    <interactant intactId="EBI-295634">
        <id>Q16543</id>
        <label>CDC37</label>
    </interactant>
    <organismsDiffer>false</organismsDiffer>
    <experiments>3</experiments>
</comment>
<comment type="interaction">
    <interactant intactId="EBI-618309">
        <id>Q08379</id>
    </interactant>
    <interactant intactId="EBI-374880">
        <id>Q99459</id>
        <label>CDC5L</label>
    </interactant>
    <organismsDiffer>false</organismsDiffer>
    <experiments>6</experiments>
</comment>
<comment type="interaction">
    <interactant intactId="EBI-618309">
        <id>Q08379</id>
    </interactant>
    <interactant intactId="EBI-374980">
        <id>O00311</id>
        <label>CDC7</label>
    </interactant>
    <organismsDiffer>false</organismsDiffer>
    <experiments>3</experiments>
</comment>
<comment type="interaction">
    <interactant intactId="EBI-618309">
        <id>Q08379</id>
    </interactant>
    <interactant intactId="EBI-930143">
        <id>Q6P1J9</id>
        <label>CDC73</label>
    </interactant>
    <organismsDiffer>false</organismsDiffer>
    <experiments>12</experiments>
</comment>
<comment type="interaction">
    <interactant intactId="EBI-618309">
        <id>Q08379</id>
    </interactant>
    <interactant intactId="EBI-5278764">
        <id>Q96GN5</id>
        <label>CDCA7L</label>
    </interactant>
    <organismsDiffer>false</organismsDiffer>
    <experiments>3</experiments>
</comment>
<comment type="interaction">
    <interactant intactId="EBI-618309">
        <id>Q08379</id>
    </interactant>
    <interactant intactId="EBI-746238">
        <id>Q07002</id>
        <label>CDK18</label>
    </interactant>
    <organismsDiffer>false</organismsDiffer>
    <experiments>6</experiments>
</comment>
<comment type="interaction">
    <interactant intactId="EBI-618309">
        <id>Q08379</id>
    </interactant>
    <interactant intactId="EBI-3919850">
        <id>Q8IVW4</id>
        <label>CDKL3</label>
    </interactant>
    <organismsDiffer>false</organismsDiffer>
    <experiments>3</experiments>
</comment>
<comment type="interaction">
    <interactant intactId="EBI-618309">
        <id>Q08379</id>
    </interactant>
    <interactant intactId="EBI-1752465">
        <id>O76039</id>
        <label>CDKL5</label>
    </interactant>
    <organismsDiffer>false</organismsDiffer>
    <experiments>3</experiments>
</comment>
<comment type="interaction">
    <interactant intactId="EBI-618309">
        <id>Q08379</id>
    </interactant>
    <interactant intactId="EBI-375077">
        <id>P38936</id>
        <label>CDKN1A</label>
    </interactant>
    <organismsDiffer>false</organismsDiffer>
    <experiments>3</experiments>
</comment>
<comment type="interaction">
    <interactant intactId="EBI-618309">
        <id>Q08379</id>
    </interactant>
    <interactant intactId="EBI-10250303">
        <id>Q6IPU0</id>
        <label>CENPP</label>
    </interactant>
    <organismsDiffer>false</organismsDiffer>
    <experiments>3</experiments>
</comment>
<comment type="interaction">
    <interactant intactId="EBI-618309">
        <id>Q08379</id>
    </interactant>
    <interactant intactId="EBI-1104570">
        <id>Q8IYX8</id>
        <label>CEP57L1</label>
    </interactant>
    <organismsDiffer>false</organismsDiffer>
    <experiments>6</experiments>
</comment>
<comment type="interaction">
    <interactant intactId="EBI-618309">
        <id>Q08379</id>
    </interactant>
    <interactant intactId="EBI-10181988">
        <id>Q8IYX8-2</id>
        <label>CEP57L1</label>
    </interactant>
    <organismsDiffer>false</organismsDiffer>
    <experiments>3</experiments>
</comment>
<comment type="interaction">
    <interactant intactId="EBI-618309">
        <id>Q08379</id>
    </interactant>
    <interactant intactId="EBI-372775">
        <id>Q96GE4</id>
        <label>CEP95</label>
    </interactant>
    <organismsDiffer>false</organismsDiffer>
    <experiments>3</experiments>
</comment>
<comment type="interaction">
    <interactant intactId="EBI-618309">
        <id>Q08379</id>
    </interactant>
    <interactant intactId="EBI-2321769">
        <id>Q9Y6H1</id>
        <label>CHCHD2</label>
    </interactant>
    <organismsDiffer>false</organismsDiffer>
    <experiments>6</experiments>
</comment>
<comment type="interaction">
    <interactant intactId="EBI-618309">
        <id>Q08379</id>
    </interactant>
    <interactant intactId="EBI-743375">
        <id>Q9NX63</id>
        <label>CHCHD3</label>
    </interactant>
    <organismsDiffer>false</organismsDiffer>
    <experiments>3</experiments>
</comment>
<comment type="interaction">
    <interactant intactId="EBI-618309">
        <id>Q08379</id>
    </interactant>
    <interactant intactId="EBI-945857">
        <id>Q96RK0</id>
        <label>CIC</label>
    </interactant>
    <organismsDiffer>false</organismsDiffer>
    <experiments>4</experiments>
</comment>
<comment type="interaction">
    <interactant intactId="EBI-618309">
        <id>Q08379</id>
    </interactant>
    <interactant intactId="EBI-739784">
        <id>Q9BW66</id>
        <label>CINP</label>
    </interactant>
    <organismsDiffer>false</organismsDiffer>
    <experiments>6</experiments>
</comment>
<comment type="interaction">
    <interactant intactId="EBI-618309">
        <id>Q08379</id>
    </interactant>
    <interactant intactId="EBI-12823145">
        <id>Q96DZ5</id>
        <label>CLIP3</label>
    </interactant>
    <organismsDiffer>false</organismsDiffer>
    <experiments>3</experiments>
</comment>
<comment type="interaction">
    <interactant intactId="EBI-618309">
        <id>Q08379</id>
    </interactant>
    <interactant intactId="EBI-1046676">
        <id>P31146</id>
        <label>CORO1A</label>
    </interactant>
    <organismsDiffer>false</organismsDiffer>
    <experiments>3</experiments>
</comment>
<comment type="interaction">
    <interactant intactId="EBI-618309">
        <id>Q08379</id>
    </interactant>
    <interactant intactId="EBI-1053725">
        <id>P10606</id>
        <label>COX5B</label>
    </interactant>
    <organismsDiffer>false</organismsDiffer>
    <experiments>3</experiments>
</comment>
<comment type="interaction">
    <interactant intactId="EBI-618309">
        <id>Q08379</id>
    </interactant>
    <interactant intactId="EBI-739773">
        <id>Q9BSW2</id>
        <label>CRACR2A</label>
    </interactant>
    <organismsDiffer>false</organismsDiffer>
    <experiments>3</experiments>
</comment>
<comment type="interaction">
    <interactant intactId="EBI-618309">
        <id>Q08379</id>
    </interactant>
    <interactant intactId="EBI-10239122">
        <id>Q1MSJ5-1</id>
        <label>CSPP1</label>
    </interactant>
    <organismsDiffer>false</organismsDiffer>
    <experiments>3</experiments>
</comment>
<comment type="interaction">
    <interactant intactId="EBI-618309">
        <id>Q08379</id>
    </interactant>
    <interactant intactId="EBI-1057139">
        <id>Q93034</id>
        <label>CUL5</label>
    </interactant>
    <organismsDiffer>false</organismsDiffer>
    <experiments>3</experiments>
</comment>
<comment type="interaction">
    <interactant intactId="EBI-618309">
        <id>Q08379</id>
    </interactant>
    <interactant intactId="EBI-5453285">
        <id>Q2TBE0</id>
        <label>CWF19L2</label>
    </interactant>
    <organismsDiffer>false</organismsDiffer>
    <experiments>3</experiments>
</comment>
<comment type="interaction">
    <interactant intactId="EBI-618309">
        <id>Q08379</id>
    </interactant>
    <interactant intactId="EBI-744761">
        <id>Q6BCY4</id>
        <label>CYB5R2</label>
    </interactant>
    <organismsDiffer>false</organismsDiffer>
    <experiments>3</experiments>
</comment>
<comment type="interaction">
    <interactant intactId="EBI-618309">
        <id>Q08379</id>
    </interactant>
    <interactant intactId="EBI-12102608">
        <id>Q6BCY4-2</id>
        <label>CYB5R2</label>
    </interactant>
    <organismsDiffer>false</organismsDiffer>
    <experiments>3</experiments>
</comment>
<comment type="interaction">
    <interactant intactId="EBI-618309">
        <id>Q08379</id>
    </interactant>
    <interactant intactId="EBI-77321">
        <id>Q9UER7</id>
        <label>DAXX</label>
    </interactant>
    <organismsDiffer>false</organismsDiffer>
    <experiments>8</experiments>
</comment>
<comment type="interaction">
    <interactant intactId="EBI-618309">
        <id>Q08379</id>
    </interactant>
    <interactant intactId="EBI-2134033">
        <id>Q9UJW0</id>
        <label>DCTN4</label>
    </interactant>
    <organismsDiffer>false</organismsDiffer>
    <experiments>7</experiments>
</comment>
<comment type="interaction">
    <interactant intactId="EBI-618309">
        <id>Q08379</id>
    </interactant>
    <interactant intactId="EBI-8646694">
        <id>O43602</id>
        <label>DCX</label>
    </interactant>
    <organismsDiffer>false</organismsDiffer>
    <experiments>4</experiments>
</comment>
<comment type="interaction">
    <interactant intactId="EBI-618309">
        <id>Q08379</id>
    </interactant>
    <interactant intactId="EBI-14148644">
        <id>O43602-2</id>
        <label>DCX</label>
    </interactant>
    <organismsDiffer>false</organismsDiffer>
    <experiments>3</experiments>
</comment>
<comment type="interaction">
    <interactant intactId="EBI-618309">
        <id>Q08379</id>
    </interactant>
    <interactant intactId="EBI-351257">
        <id>P26196</id>
        <label>DDX6</label>
    </interactant>
    <organismsDiffer>false</organismsDiffer>
    <experiments>7</experiments>
</comment>
<comment type="interaction">
    <interactant intactId="EBI-618309">
        <id>Q08379</id>
    </interactant>
    <interactant intactId="EBI-748597">
        <id>Q05D60</id>
        <label>DEUP1</label>
    </interactant>
    <organismsDiffer>false</organismsDiffer>
    <experiments>6</experiments>
</comment>
<comment type="interaction">
    <interactant intactId="EBI-618309">
        <id>Q08379</id>
    </interactant>
    <interactant intactId="EBI-1752541">
        <id>O95886</id>
        <label>DLGAP3</label>
    </interactant>
    <organismsDiffer>false</organismsDiffer>
    <experiments>3</experiments>
</comment>
<comment type="interaction">
    <interactant intactId="EBI-618309">
        <id>Q08379</id>
    </interactant>
    <interactant intactId="EBI-748280">
        <id>Q15398</id>
        <label>DLGAP5</label>
    </interactant>
    <organismsDiffer>false</organismsDiffer>
    <experiments>3</experiments>
</comment>
<comment type="interaction">
    <interactant intactId="EBI-618309">
        <id>Q08379</id>
    </interactant>
    <interactant intactId="EBI-715275">
        <id>Q08495</id>
        <label>DMTN</label>
    </interactant>
    <organismsDiffer>false</organismsDiffer>
    <experiments>3</experiments>
</comment>
<comment type="interaction">
    <interactant intactId="EBI-618309">
        <id>Q08379</id>
    </interactant>
    <interactant intactId="EBI-740376">
        <id>Q86UW9</id>
        <label>DTX2</label>
    </interactant>
    <organismsDiffer>false</organismsDiffer>
    <experiments>3</experiments>
</comment>
<comment type="interaction">
    <interactant intactId="EBI-618309">
        <id>Q08379</id>
    </interactant>
    <interactant intactId="EBI-12282559">
        <id>Q5THR3-2</id>
        <label>EFCAB6</label>
    </interactant>
    <organismsDiffer>false</organismsDiffer>
    <experiments>3</experiments>
</comment>
<comment type="interaction">
    <interactant intactId="EBI-618309">
        <id>Q08379</id>
    </interactant>
    <interactant intactId="EBI-743105">
        <id>Q5JVL4</id>
        <label>EFHC1</label>
    </interactant>
    <organismsDiffer>false</organismsDiffer>
    <experiments>3</experiments>
</comment>
<comment type="interaction">
    <interactant intactId="EBI-618309">
        <id>Q08379</id>
    </interactant>
    <interactant intactId="EBI-16431598">
        <id>A0A0S2Z3U4</id>
        <label>EGR2</label>
    </interactant>
    <organismsDiffer>false</organismsDiffer>
    <experiments>6</experiments>
</comment>
<comment type="interaction">
    <interactant intactId="EBI-618309">
        <id>Q08379</id>
    </interactant>
    <interactant intactId="EBI-366632">
        <id>O75821</id>
        <label>EIF3G</label>
    </interactant>
    <organismsDiffer>false</organismsDiffer>
    <experiments>3</experiments>
</comment>
<comment type="interaction">
    <interactant intactId="EBI-618309">
        <id>Q08379</id>
    </interactant>
    <interactant intactId="EBI-744099">
        <id>Q9H0I2</id>
        <label>ENKD1</label>
    </interactant>
    <organismsDiffer>false</organismsDiffer>
    <experiments>3</experiments>
</comment>
<comment type="interaction">
    <interactant intactId="EBI-618309">
        <id>Q08379</id>
    </interactant>
    <interactant intactId="EBI-12047821">
        <id>Q6UWV6</id>
        <label>ENPP7</label>
    </interactant>
    <organismsDiffer>false</organismsDiffer>
    <experiments>3</experiments>
</comment>
<comment type="interaction">
    <interactant intactId="EBI-618309">
        <id>Q08379</id>
    </interactant>
    <interactant intactId="EBI-3951849">
        <id>Q56NI9</id>
        <label>ESCO2</label>
    </interactant>
    <organismsDiffer>false</organismsDiffer>
    <experiments>3</experiments>
</comment>
<comment type="interaction">
    <interactant intactId="EBI-618309">
        <id>Q08379</id>
    </interactant>
    <interactant intactId="EBI-742102">
        <id>Q8IYI6</id>
        <label>EXOC8</label>
    </interactant>
    <organismsDiffer>false</organismsDiffer>
    <experiments>3</experiments>
</comment>
<comment type="interaction">
    <interactant intactId="EBI-618309">
        <id>Q08379</id>
    </interactant>
    <interactant intactId="EBI-371876">
        <id>Q9NQT4</id>
        <label>EXOSC5</label>
    </interactant>
    <organismsDiffer>false</organismsDiffer>
    <experiments>3</experiments>
</comment>
<comment type="interaction">
    <interactant intactId="EBI-618309">
        <id>Q08379</id>
    </interactant>
    <interactant intactId="EBI-1752811">
        <id>Q9BQ89</id>
        <label>FAM110A</label>
    </interactant>
    <organismsDiffer>false</organismsDiffer>
    <experiments>6</experiments>
</comment>
<comment type="interaction">
    <interactant intactId="EBI-618309">
        <id>Q08379</id>
    </interactant>
    <interactant intactId="EBI-741626">
        <id>Q9H5Z6</id>
        <label>FAM124B</label>
    </interactant>
    <organismsDiffer>false</organismsDiffer>
    <experiments>3</experiments>
</comment>
<comment type="interaction">
    <interactant intactId="EBI-618309">
        <id>Q08379</id>
    </interactant>
    <interactant intactId="EBI-11986315">
        <id>Q9H5Z6-2</id>
        <label>FAM124B</label>
    </interactant>
    <organismsDiffer>false</organismsDiffer>
    <experiments>3</experiments>
</comment>
<comment type="interaction">
    <interactant intactId="EBI-618309">
        <id>Q08379</id>
    </interactant>
    <interactant intactId="EBI-719941">
        <id>Q3B820</id>
        <label>FAM161A</label>
    </interactant>
    <organismsDiffer>false</organismsDiffer>
    <experiments>5</experiments>
</comment>
<comment type="interaction">
    <interactant intactId="EBI-618309">
        <id>Q08379</id>
    </interactant>
    <interactant intactId="EBI-7225287">
        <id>Q96MY7</id>
        <label>FAM161B</label>
    </interactant>
    <organismsDiffer>false</organismsDiffer>
    <experiments>3</experiments>
</comment>
<comment type="interaction">
    <interactant intactId="EBI-618309">
        <id>Q08379</id>
    </interactant>
    <interactant intactId="EBI-10253239">
        <id>Q6P9G8</id>
        <label>FAM184A</label>
    </interactant>
    <organismsDiffer>false</organismsDiffer>
    <experiments>3</experiments>
</comment>
<comment type="interaction">
    <interactant intactId="EBI-618309">
        <id>Q08379</id>
    </interactant>
    <interactant intactId="EBI-10292648">
        <id>Q96PV7-2</id>
        <label>FAM193B</label>
    </interactant>
    <organismsDiffer>false</organismsDiffer>
    <experiments>3</experiments>
</comment>
<comment type="interaction">
    <interactant intactId="EBI-618309">
        <id>Q08379</id>
    </interactant>
    <interactant intactId="EBI-742802">
        <id>Q9Y247</id>
        <label>FAM50B</label>
    </interactant>
    <organismsDiffer>false</organismsDiffer>
    <experiments>6</experiments>
</comment>
<comment type="interaction">
    <interactant intactId="EBI-618309">
        <id>Q08379</id>
    </interactant>
    <interactant intactId="EBI-6658203">
        <id>Q86YD7</id>
        <label>FAM90A1</label>
    </interactant>
    <organismsDiffer>false</organismsDiffer>
    <experiments>8</experiments>
</comment>
<comment type="interaction">
    <interactant intactId="EBI-618309">
        <id>Q08379</id>
    </interactant>
    <interactant intactId="EBI-10244131">
        <id>Q8TES7-6</id>
        <label>FBF1</label>
    </interactant>
    <organismsDiffer>false</organismsDiffer>
    <experiments>3</experiments>
</comment>
<comment type="interaction">
    <interactant intactId="EBI-618309">
        <id>Q08379</id>
    </interactant>
    <interactant intactId="EBI-744419">
        <id>Q96D16</id>
        <label>FBXL18</label>
    </interactant>
    <organismsDiffer>false</organismsDiffer>
    <experiments>3</experiments>
</comment>
<comment type="interaction">
    <interactant intactId="EBI-618309">
        <id>Q08379</id>
    </interactant>
    <interactant intactId="EBI-740282">
        <id>Q9NVF7</id>
        <label>FBXO28</label>
    </interactant>
    <organismsDiffer>false</organismsDiffer>
    <experiments>7</experiments>
</comment>
<comment type="interaction">
    <interactant intactId="EBI-618309">
        <id>Q08379</id>
    </interactant>
    <interactant intactId="EBI-1021914">
        <id>Q6UN15</id>
        <label>FIP1L1</label>
    </interactant>
    <organismsDiffer>false</organismsDiffer>
    <experiments>3</experiments>
</comment>
<comment type="interaction">
    <interactant intactId="EBI-618309">
        <id>Q08379</id>
    </interactant>
    <interactant intactId="EBI-10173415">
        <id>A4D1I3</id>
        <label>FLJ34048</label>
    </interactant>
    <organismsDiffer>false</organismsDiffer>
    <experiments>3</experiments>
</comment>
<comment type="interaction">
    <interactant intactId="EBI-618309">
        <id>Q08379</id>
    </interactant>
    <interactant intactId="EBI-744935">
        <id>Q9BVV2</id>
        <label>FNDC11</label>
    </interactant>
    <organismsDiffer>false</organismsDiffer>
    <experiments>3</experiments>
</comment>
<comment type="interaction">
    <interactant intactId="EBI-618309">
        <id>Q08379</id>
    </interactant>
    <interactant intactId="EBI-3956892">
        <id>Q99958</id>
        <label>FOXC2</label>
    </interactant>
    <organismsDiffer>false</organismsDiffer>
    <experiments>3</experiments>
</comment>
<comment type="interaction">
    <interactant intactId="EBI-618309">
        <id>Q08379</id>
    </interactant>
    <interactant intactId="EBI-372506">
        <id>Q8TAE8</id>
        <label>GADD45GIP1</label>
    </interactant>
    <organismsDiffer>false</organismsDiffer>
    <experiments>3</experiments>
</comment>
<comment type="interaction">
    <interactant intactId="EBI-618309">
        <id>Q08379</id>
    </interactant>
    <interactant intactId="EBI-7960826">
        <id>Q8NHY3</id>
        <label>GAS2L2</label>
    </interactant>
    <organismsDiffer>false</organismsDiffer>
    <experiments>3</experiments>
</comment>
<comment type="interaction">
    <interactant intactId="EBI-618309">
        <id>Q08379</id>
    </interactant>
    <interactant intactId="EBI-1052570">
        <id>O95995</id>
        <label>GAS8</label>
    </interactant>
    <organismsDiffer>false</organismsDiffer>
    <experiments>3</experiments>
</comment>
<comment type="interaction">
    <interactant intactId="EBI-618309">
        <id>Q08379</id>
    </interactant>
    <interactant intactId="EBI-2806671">
        <id>P23769</id>
        <label>GATA2</label>
    </interactant>
    <organismsDiffer>false</organismsDiffer>
    <experiments>4</experiments>
</comment>
<comment type="interaction">
    <interactant intactId="EBI-618309">
        <id>Q08379</id>
    </interactant>
    <interactant intactId="EBI-726224">
        <id>Q86YP4</id>
        <label>GATAD2A</label>
    </interactant>
    <organismsDiffer>false</organismsDiffer>
    <experiments>3</experiments>
</comment>
<comment type="interaction">
    <interactant intactId="EBI-618309">
        <id>Q08379</id>
    </interactant>
    <interactant intactId="EBI-923440">
        <id>Q8WXI9</id>
        <label>GATAD2B</label>
    </interactant>
    <organismsDiffer>false</organismsDiffer>
    <experiments>3</experiments>
</comment>
<comment type="interaction">
    <interactant intactId="EBI-618309">
        <id>Q08379</id>
    </interactant>
    <interactant intactId="EBI-746252">
        <id>Q96CN9</id>
        <label>GCC1</label>
    </interactant>
    <organismsDiffer>false</organismsDiffer>
    <experiments>6</experiments>
</comment>
<comment type="interaction">
    <interactant intactId="EBI-618309">
        <id>Q08379</id>
    </interactant>
    <interactant intactId="EBI-744104">
        <id>P55040</id>
        <label>GEM</label>
    </interactant>
    <organismsDiffer>false</organismsDiffer>
    <experiments>6</experiments>
</comment>
<comment type="interaction">
    <interactant intactId="EBI-618309">
        <id>Q08379</id>
    </interactant>
    <interactant intactId="EBI-744302">
        <id>P14136</id>
        <label>GFAP</label>
    </interactant>
    <organismsDiffer>false</organismsDiffer>
    <experiments>9</experiments>
</comment>
<comment type="interaction">
    <interactant intactId="EBI-618309">
        <id>Q08379</id>
    </interactant>
    <interactant intactId="EBI-10259069">
        <id>Q86UU5</id>
        <label>GGN</label>
    </interactant>
    <organismsDiffer>false</organismsDiffer>
    <experiments>3</experiments>
</comment>
<comment type="interaction">
    <interactant intactId="EBI-618309">
        <id>Q08379</id>
    </interactant>
    <interactant intactId="EBI-748515">
        <id>Q8IVS8</id>
        <label>GLYCTK</label>
    </interactant>
    <organismsDiffer>false</organismsDiffer>
    <experiments>6</experiments>
</comment>
<comment type="interaction">
    <interactant intactId="EBI-618309">
        <id>Q08379</id>
    </interactant>
    <interactant intactId="EBI-10220734">
        <id>P63218</id>
        <label>GNG5</label>
    </interactant>
    <organismsDiffer>false</organismsDiffer>
    <experiments>3</experiments>
</comment>
<comment type="interaction">
    <interactant intactId="EBI-618309">
        <id>Q08379</id>
    </interactant>
    <interactant intactId="EBI-746682">
        <id>Q9NVN8</id>
        <label>GNL3L</label>
    </interactant>
    <organismsDiffer>false</organismsDiffer>
    <experiments>3</experiments>
</comment>
<comment type="interaction">
    <interactant intactId="EBI-618309">
        <id>Q08379</id>
    </interactant>
    <interactant intactId="EBI-618309">
        <id>Q08379</id>
        <label>GOLGA2</label>
    </interactant>
    <organismsDiffer>false</organismsDiffer>
    <experiments>6</experiments>
</comment>
<comment type="interaction">
    <interactant intactId="EBI-618309">
        <id>Q08379</id>
    </interactant>
    <interactant intactId="EBI-739467">
        <id>Q9H8Y8</id>
        <label>GORASP2</label>
    </interactant>
    <organismsDiffer>false</organismsDiffer>
    <experiments>11</experiments>
</comment>
<comment type="interaction">
    <interactant intactId="EBI-618309">
        <id>Q08379</id>
    </interactant>
    <interactant intactId="EBI-751540">
        <id>O95872</id>
        <label>GPANK1</label>
    </interactant>
    <organismsDiffer>false</organismsDiffer>
    <experiments>4</experiments>
</comment>
<comment type="interaction">
    <interactant intactId="EBI-618309">
        <id>Q08379</id>
    </interactant>
    <interactant intactId="EBI-746309">
        <id>Q92917</id>
        <label>GPKOW</label>
    </interactant>
    <organismsDiffer>false</organismsDiffer>
    <experiments>9</experiments>
</comment>
<comment type="interaction">
    <interactant intactId="EBI-618309">
        <id>Q08379</id>
    </interactant>
    <interactant intactId="EBI-2680889">
        <id>Q14449</id>
        <label>GRB14</label>
    </interactant>
    <organismsDiffer>false</organismsDiffer>
    <experiments>3</experiments>
</comment>
<comment type="interaction">
    <interactant intactId="EBI-618309">
        <id>Q08379</id>
    </interactant>
    <interactant intactId="EBI-372619">
        <id>Q14687</id>
        <label>GSE1</label>
    </interactant>
    <organismsDiffer>false</organismsDiffer>
    <experiments>9</experiments>
</comment>
<comment type="interaction">
    <interactant intactId="EBI-618309">
        <id>Q08379</id>
    </interactant>
    <interactant intactId="EBI-5453796">
        <id>A4D1E9</id>
        <label>GTPBP10</label>
    </interactant>
    <organismsDiffer>false</organismsDiffer>
    <experiments>3</experiments>
</comment>
<comment type="interaction">
    <interactant intactId="EBI-618309">
        <id>Q08379</id>
    </interactant>
    <interactant intactId="EBI-2514791">
        <id>Q96CS2</id>
        <label>HAUS1</label>
    </interactant>
    <organismsDiffer>false</organismsDiffer>
    <experiments>3</experiments>
</comment>
<comment type="interaction">
    <interactant intactId="EBI-618309">
        <id>Q08379</id>
    </interactant>
    <interactant intactId="EBI-308629">
        <id>P56524</id>
        <label>HDAC4</label>
    </interactant>
    <organismsDiffer>false</organismsDiffer>
    <experiments>3</experiments>
</comment>
<comment type="interaction">
    <interactant intactId="EBI-618309">
        <id>Q08379</id>
    </interactant>
    <interactant intactId="EBI-11953488">
        <id>P56524-2</id>
        <label>HDAC4</label>
    </interactant>
    <organismsDiffer>false</organismsDiffer>
    <experiments>3</experiments>
</comment>
<comment type="interaction">
    <interactant intactId="EBI-618309">
        <id>Q08379</id>
    </interactant>
    <interactant intactId="EBI-16429135">
        <id>A0A0S2Z4Q4</id>
        <label>HGS</label>
    </interactant>
    <organismsDiffer>false</organismsDiffer>
    <experiments>3</experiments>
</comment>
<comment type="interaction">
    <interactant intactId="EBI-618309">
        <id>Q08379</id>
    </interactant>
    <interactant intactId="EBI-740220">
        <id>O14964</id>
        <label>HGS</label>
    </interactant>
    <organismsDiffer>false</organismsDiffer>
    <experiments>3</experiments>
</comment>
<comment type="interaction">
    <interactant intactId="EBI-618309">
        <id>Q08379</id>
    </interactant>
    <interactant intactId="EBI-3893317">
        <id>P09067</id>
        <label>HOXB5</label>
    </interactant>
    <organismsDiffer>false</organismsDiffer>
    <experiments>3</experiments>
</comment>
<comment type="interaction">
    <interactant intactId="EBI-618309">
        <id>Q08379</id>
    </interactant>
    <interactant intactId="EBI-745290">
        <id>P17482</id>
        <label>HOXB9</label>
    </interactant>
    <organismsDiffer>false</organismsDiffer>
    <experiments>3</experiments>
</comment>
<comment type="interaction">
    <interactant intactId="EBI-618309">
        <id>Q08379</id>
    </interactant>
    <interactant intactId="EBI-466029">
        <id>P42858</id>
        <label>HTT</label>
    </interactant>
    <organismsDiffer>false</organismsDiffer>
    <experiments>3</experiments>
</comment>
<comment type="interaction">
    <interactant intactId="EBI-618309">
        <id>Q08379</id>
    </interactant>
    <interactant intactId="EBI-8787606">
        <id>Q8IXS8</id>
        <label>HYCC2</label>
    </interactant>
    <organismsDiffer>false</organismsDiffer>
    <experiments>3</experiments>
</comment>
<comment type="interaction">
    <interactant intactId="EBI-618309">
        <id>Q08379</id>
    </interactant>
    <interactant intactId="EBI-720016">
        <id>Q96M11</id>
        <label>HYLS1</label>
    </interactant>
    <organismsDiffer>false</organismsDiffer>
    <experiments>3</experiments>
</comment>
<comment type="interaction">
    <interactant intactId="EBI-618309">
        <id>Q08379</id>
    </interactant>
    <interactant intactId="EBI-744203">
        <id>Q8IY31</id>
        <label>IFT20</label>
    </interactant>
    <organismsDiffer>false</organismsDiffer>
    <experiments>3</experiments>
</comment>
<comment type="interaction">
    <interactant intactId="EBI-618309">
        <id>Q08379</id>
    </interactant>
    <interactant intactId="EBI-747093">
        <id>Q9BW83</id>
        <label>IFT27</label>
    </interactant>
    <organismsDiffer>false</organismsDiffer>
    <experiments>3</experiments>
</comment>
<comment type="interaction">
    <interactant intactId="EBI-618309">
        <id>Q08379</id>
    </interactant>
    <interactant intactId="EBI-11955401">
        <id>Q86VF2-5</id>
        <label>IGFN1</label>
    </interactant>
    <organismsDiffer>false</organismsDiffer>
    <experiments>3</experiments>
</comment>
<comment type="interaction">
    <interactant intactId="EBI-618309">
        <id>Q08379</id>
    </interactant>
    <interactant intactId="EBI-17178971">
        <id>Q14005-2</id>
        <label>IL16</label>
    </interactant>
    <organismsDiffer>false</organismsDiffer>
    <experiments>3</experiments>
</comment>
<comment type="interaction">
    <interactant intactId="EBI-618309">
        <id>Q08379</id>
    </interactant>
    <interactant intactId="EBI-10236940">
        <id>Q15735</id>
        <label>INPP5J</label>
    </interactant>
    <organismsDiffer>false</organismsDiffer>
    <experiments>6</experiments>
</comment>
<comment type="interaction">
    <interactant intactId="EBI-618309">
        <id>Q08379</id>
    </interactant>
    <interactant intactId="EBI-10220600">
        <id>Q8NA54</id>
        <label>IQUB</label>
    </interactant>
    <organismsDiffer>false</organismsDiffer>
    <experiments>3</experiments>
</comment>
<comment type="interaction">
    <interactant intactId="EBI-618309">
        <id>Q08379</id>
    </interactant>
    <interactant intactId="EBI-1047335">
        <id>Q9H1K1</id>
        <label>ISCU</label>
    </interactant>
    <organismsDiffer>false</organismsDiffer>
    <experiments>3</experiments>
</comment>
<comment type="interaction">
    <interactant intactId="EBI-618309">
        <id>Q08379</id>
    </interactant>
    <interactant intactId="EBI-1223434">
        <id>P18084</id>
        <label>ITGB5</label>
    </interactant>
    <organismsDiffer>false</organismsDiffer>
    <experiments>3</experiments>
</comment>
<comment type="interaction">
    <interactant intactId="EBI-618309">
        <id>Q08379</id>
    </interactant>
    <interactant intactId="EBI-751388">
        <id>P27987</id>
        <label>ITPKB</label>
    </interactant>
    <organismsDiffer>false</organismsDiffer>
    <experiments>4</experiments>
</comment>
<comment type="interaction">
    <interactant intactId="EBI-618309">
        <id>Q08379</id>
    </interactant>
    <interactant intactId="EBI-2556193">
        <id>Q63ZY3</id>
        <label>KANK2</label>
    </interactant>
    <organismsDiffer>false</organismsDiffer>
    <experiments>7</experiments>
</comment>
<comment type="interaction">
    <interactant intactId="EBI-618309">
        <id>Q08379</id>
    </interactant>
    <interactant intactId="EBI-740244">
        <id>Q7Z3B3</id>
        <label>KANSL1</label>
    </interactant>
    <organismsDiffer>false</organismsDiffer>
    <experiments>4</experiments>
</comment>
<comment type="interaction">
    <interactant intactId="EBI-618309">
        <id>Q08379</id>
    </interactant>
    <interactant intactId="EBI-399080">
        <id>Q92993</id>
        <label>KAT5</label>
    </interactant>
    <organismsDiffer>false</organismsDiffer>
    <experiments>3</experiments>
</comment>
<comment type="interaction">
    <interactant intactId="EBI-618309">
        <id>Q08379</id>
    </interactant>
    <interactant intactId="EBI-710124">
        <id>O60341</id>
        <label>KDM1A</label>
    </interactant>
    <organismsDiffer>false</organismsDiffer>
    <experiments>3</experiments>
</comment>
<comment type="interaction">
    <interactant intactId="EBI-618309">
        <id>Q08379</id>
    </interactant>
    <interactant intactId="EBI-10188326">
        <id>Q5T5P2-6</id>
        <label>KIAA1217</label>
    </interactant>
    <organismsDiffer>false</organismsDiffer>
    <experiments>6</experiments>
</comment>
<comment type="interaction">
    <interactant intactId="EBI-618309">
        <id>Q08379</id>
    </interactant>
    <interactant intactId="EBI-2125614">
        <id>Q9BVG8</id>
        <label>KIFC3</label>
    </interactant>
    <organismsDiffer>false</organismsDiffer>
    <experiments>3</experiments>
</comment>
<comment type="interaction">
    <interactant intactId="EBI-618309">
        <id>Q08379</id>
    </interactant>
    <interactant intactId="EBI-14069005">
        <id>Q9BVG8-5</id>
        <label>KIFC3</label>
    </interactant>
    <organismsDiffer>false</organismsDiffer>
    <experiments>3</experiments>
</comment>
<comment type="interaction">
    <interactant intactId="EBI-618309">
        <id>Q08379</id>
    </interactant>
    <interactant intactId="EBI-298429">
        <id>P04264</id>
        <label>KRT1</label>
    </interactant>
    <organismsDiffer>false</organismsDiffer>
    <experiments>6</experiments>
</comment>
<comment type="interaction">
    <interactant intactId="EBI-618309">
        <id>Q08379</id>
    </interactant>
    <interactant intactId="EBI-297888">
        <id>P05783</id>
        <label>KRT18</label>
    </interactant>
    <organismsDiffer>false</organismsDiffer>
    <experiments>7</experiments>
</comment>
<comment type="interaction">
    <interactant intactId="EBI-618309">
        <id>Q08379</id>
    </interactant>
    <interactant intactId="EBI-702198">
        <id>P02538</id>
        <label>KRT6A</label>
    </interactant>
    <organismsDiffer>false</organismsDiffer>
    <experiments>7</experiments>
</comment>
<comment type="interaction">
    <interactant intactId="EBI-618309">
        <id>Q08379</id>
    </interactant>
    <interactant intactId="EBI-740907">
        <id>P04259</id>
        <label>KRT6B</label>
    </interactant>
    <organismsDiffer>false</organismsDiffer>
    <experiments>3</experiments>
</comment>
<comment type="interaction">
    <interactant intactId="EBI-618309">
        <id>Q08379</id>
    </interactant>
    <interactant intactId="EBI-2564105">
        <id>P48668</id>
        <label>KRT6C</label>
    </interactant>
    <organismsDiffer>false</organismsDiffer>
    <experiments>3</experiments>
</comment>
<comment type="interaction">
    <interactant intactId="EBI-618309">
        <id>Q08379</id>
    </interactant>
    <interactant intactId="EBI-2949715">
        <id>O95678</id>
        <label>KRT75</label>
    </interactant>
    <organismsDiffer>false</organismsDiffer>
    <experiments>3</experiments>
</comment>
<comment type="interaction">
    <interactant intactId="EBI-618309">
        <id>Q08379</id>
    </interactant>
    <interactant intactId="EBI-739909">
        <id>Q969R5</id>
        <label>L3MBTL2</label>
    </interactant>
    <organismsDiffer>false</organismsDiffer>
    <experiments>3</experiments>
</comment>
<comment type="interaction">
    <interactant intactId="EBI-618309">
        <id>Q08379</id>
    </interactant>
    <interactant intactId="EBI-742828">
        <id>Q14847</id>
        <label>LASP1</label>
    </interactant>
    <organismsDiffer>false</organismsDiffer>
    <experiments>3</experiments>
</comment>
<comment type="interaction">
    <interactant intactId="EBI-618309">
        <id>Q08379</id>
    </interactant>
    <interactant intactId="EBI-10253976">
        <id>Q6PJG3</id>
        <label>LATS1</label>
    </interactant>
    <organismsDiffer>false</organismsDiffer>
    <experiments>3</experiments>
</comment>
<comment type="interaction">
    <interactant intactId="EBI-618309">
        <id>Q08379</id>
    </interactant>
    <interactant intactId="EBI-746045">
        <id>Q96JN0</id>
        <label>LCOR</label>
    </interactant>
    <organismsDiffer>false</organismsDiffer>
    <experiments>3</experiments>
</comment>
<comment type="interaction">
    <interactant intactId="EBI-618309">
        <id>Q08379</id>
    </interactant>
    <interactant intactId="EBI-346946">
        <id>Q13094</id>
        <label>LCP2</label>
    </interactant>
    <organismsDiffer>false</organismsDiffer>
    <experiments>6</experiments>
</comment>
<comment type="interaction">
    <interactant intactId="EBI-618309">
        <id>Q08379</id>
    </interactant>
    <interactant intactId="EBI-726510">
        <id>Q96BZ8</id>
        <label>LENG1</label>
    </interactant>
    <organismsDiffer>false</organismsDiffer>
    <experiments>8</experiments>
</comment>
<comment type="interaction">
    <interactant intactId="EBI-618309">
        <id>Q08379</id>
    </interactant>
    <interactant intactId="EBI-1170392">
        <id>P17931</id>
        <label>LGALS3</label>
    </interactant>
    <organismsDiffer>false</organismsDiffer>
    <experiments>3</experiments>
</comment>
<comment type="interaction">
    <interactant intactId="EBI-618309">
        <id>Q08379</id>
    </interactant>
    <interactant intactId="EBI-10187804">
        <id>Q6NVH9</id>
        <label>LGALS3</label>
    </interactant>
    <organismsDiffer>false</organismsDiffer>
    <experiments>3</experiments>
</comment>
<comment type="interaction">
    <interactant intactId="EBI-618309">
        <id>Q08379</id>
    </interactant>
    <interactant intactId="EBI-16429099">
        <id>A0A0S2Z5S9</id>
        <label>LHX4</label>
    </interactant>
    <organismsDiffer>false</organismsDiffer>
    <experiments>3</experiments>
</comment>
<comment type="interaction">
    <interactant intactId="EBI-618309">
        <id>Q08379</id>
    </interactant>
    <interactant intactId="EBI-10257651">
        <id>Q7Z4I7-5</id>
        <label>LIMS2</label>
    </interactant>
    <organismsDiffer>false</organismsDiffer>
    <experiments>3</experiments>
</comment>
<comment type="interaction">
    <interactant intactId="EBI-618309">
        <id>Q08379</id>
    </interactant>
    <interactant intactId="EBI-2513988">
        <id>O14910</id>
        <label>LIN7A</label>
    </interactant>
    <organismsDiffer>false</organismsDiffer>
    <experiments>3</experiments>
</comment>
<comment type="interaction">
    <interactant intactId="EBI-618309">
        <id>Q08379</id>
    </interactant>
    <interactant intactId="EBI-719955">
        <id>Q96FE5</id>
        <label>LINGO1</label>
    </interactant>
    <organismsDiffer>false</organismsDiffer>
    <experiments>3</experiments>
</comment>
<comment type="interaction">
    <interactant intactId="EBI-618309">
        <id>Q08379</id>
    </interactant>
    <interactant intactId="EBI-2830427">
        <id>Q03252</id>
        <label>LMNB2</label>
    </interactant>
    <organismsDiffer>false</organismsDiffer>
    <experiments>3</experiments>
</comment>
<comment type="interaction">
    <interactant intactId="EBI-618309">
        <id>Q08379</id>
    </interactant>
    <interactant intactId="EBI-8639312">
        <id>P25800</id>
        <label>LMO1</label>
    </interactant>
    <organismsDiffer>false</organismsDiffer>
    <experiments>6</experiments>
</comment>
<comment type="interaction">
    <interactant intactId="EBI-618309">
        <id>Q08379</id>
    </interactant>
    <interactant intactId="EBI-739696">
        <id>P25791</id>
        <label>LMO2</label>
    </interactant>
    <organismsDiffer>false</organismsDiffer>
    <experiments>3</experiments>
</comment>
<comment type="interaction">
    <interactant intactId="EBI-618309">
        <id>Q08379</id>
    </interactant>
    <interactant intactId="EBI-11742507">
        <id>Q8TAP4-4</id>
        <label>LMO3</label>
    </interactant>
    <organismsDiffer>false</organismsDiffer>
    <experiments>5</experiments>
</comment>
<comment type="interaction">
    <interactant intactId="EBI-618309">
        <id>Q08379</id>
    </interactant>
    <interactant intactId="EBI-2798728">
        <id>P61968</id>
        <label>LMO4</label>
    </interactant>
    <organismsDiffer>false</organismsDiffer>
    <experiments>6</experiments>
</comment>
<comment type="interaction">
    <interactant intactId="EBI-618309">
        <id>Q08379</id>
    </interactant>
    <interactant intactId="EBI-1052185">
        <id>O75608</id>
        <label>LYPLA1</label>
    </interactant>
    <organismsDiffer>false</organismsDiffer>
    <experiments>3</experiments>
</comment>
<comment type="interaction">
    <interactant intactId="EBI-618309">
        <id>Q08379</id>
    </interactant>
    <interactant intactId="EBI-10249913">
        <id>Q6IAQ1</id>
        <label>LYPLA1</label>
    </interactant>
    <organismsDiffer>false</organismsDiffer>
    <experiments>3</experiments>
</comment>
<comment type="interaction">
    <interactant intactId="EBI-618309">
        <id>Q08379</id>
    </interactant>
    <interactant intactId="EBI-10293291">
        <id>Q96S90</id>
        <label>LYSMD1</label>
    </interactant>
    <organismsDiffer>false</organismsDiffer>
    <experiments>3</experiments>
</comment>
<comment type="interaction">
    <interactant intactId="EBI-618309">
        <id>Q08379</id>
    </interactant>
    <interactant intactId="EBI-6659161">
        <id>Q9Y586</id>
        <label>MAB21L2</label>
    </interactant>
    <organismsDiffer>false</organismsDiffer>
    <experiments>3</experiments>
</comment>
<comment type="interaction">
    <interactant intactId="EBI-618309">
        <id>Q08379</id>
    </interactant>
    <interactant intactId="EBI-299134">
        <id>P61326</id>
        <label>MAGOH</label>
    </interactant>
    <organismsDiffer>false</organismsDiffer>
    <experiments>6</experiments>
</comment>
<comment type="interaction">
    <interactant intactId="EBI-618309">
        <id>Q08379</id>
    </interactant>
    <interactant intactId="EBI-746778">
        <id>Q96A72</id>
        <label>MAGOHB</label>
    </interactant>
    <organismsDiffer>false</organismsDiffer>
    <experiments>6</experiments>
</comment>
<comment type="interaction">
    <interactant intactId="EBI-618309">
        <id>Q08379</id>
    </interactant>
    <interactant intactId="EBI-1783068">
        <id>O95983</id>
        <label>MBD3</label>
    </interactant>
    <organismsDiffer>false</organismsDiffer>
    <experiments>3</experiments>
</comment>
<comment type="interaction">
    <interactant intactId="EBI-618309">
        <id>Q08379</id>
    </interactant>
    <interactant intactId="EBI-11978579">
        <id>O95983-2</id>
        <label>MBD3</label>
    </interactant>
    <organismsDiffer>false</organismsDiffer>
    <experiments>3</experiments>
</comment>
<comment type="interaction">
    <interactant intactId="EBI-618309">
        <id>Q08379</id>
    </interactant>
    <interactant intactId="EBI-10233517">
        <id>Q7L590-2</id>
        <label>MCM10</label>
    </interactant>
    <organismsDiffer>false</organismsDiffer>
    <experiments>3</experiments>
</comment>
<comment type="interaction">
    <interactant intactId="EBI-618309">
        <id>Q08379</id>
    </interactant>
    <interactant intactId="EBI-355924">
        <id>P33993</id>
        <label>MCM7</label>
    </interactant>
    <organismsDiffer>false</organismsDiffer>
    <experiments>3</experiments>
</comment>
<comment type="interaction">
    <interactant intactId="EBI-618309">
        <id>Q08379</id>
    </interactant>
    <interactant intactId="EBI-348259">
        <id>Q96EZ8</id>
        <label>MCRS1</label>
    </interactant>
    <organismsDiffer>false</organismsDiffer>
    <experiments>3</experiments>
</comment>
<comment type="interaction">
    <interactant intactId="EBI-618309">
        <id>Q08379</id>
    </interactant>
    <interactant intactId="EBI-1048159">
        <id>P55081</id>
        <label>MFAP1</label>
    </interactant>
    <organismsDiffer>false</organismsDiffer>
    <experiments>6</experiments>
</comment>
<comment type="interaction">
    <interactant intactId="EBI-618309">
        <id>Q08379</id>
    </interactant>
    <interactant intactId="EBI-14086479">
        <id>Q8IVT4</id>
        <label>MGC50722</label>
    </interactant>
    <organismsDiffer>false</organismsDiffer>
    <experiments>3</experiments>
</comment>
<comment type="interaction">
    <interactant intactId="EBI-618309">
        <id>Q08379</id>
    </interactant>
    <interactant intactId="EBI-10172526">
        <id>Q9UJV3-2</id>
        <label>MID2</label>
    </interactant>
    <organismsDiffer>false</organismsDiffer>
    <experiments>3</experiments>
</comment>
<comment type="interaction">
    <interactant intactId="EBI-618309">
        <id>Q08379</id>
    </interactant>
    <interactant intactId="EBI-2555085">
        <id>Q8IVT2</id>
        <label>MISP</label>
    </interactant>
    <organismsDiffer>false</organismsDiffer>
    <experiments>3</experiments>
</comment>
<comment type="interaction">
    <interactant intactId="EBI-618309">
        <id>Q08379</id>
    </interactant>
    <interactant intactId="EBI-742459">
        <id>Q9BU76</id>
        <label>MMTAG2</label>
    </interactant>
    <organismsDiffer>false</organismsDiffer>
    <experiments>4</experiments>
</comment>
<comment type="interaction">
    <interactant intactId="EBI-618309">
        <id>Q08379</id>
    </interactant>
    <interactant intactId="EBI-716139">
        <id>P51948</id>
        <label>MNAT1</label>
    </interactant>
    <organismsDiffer>false</organismsDiffer>
    <experiments>3</experiments>
</comment>
<comment type="interaction">
    <interactant intactId="EBI-618309">
        <id>Q08379</id>
    </interactant>
    <interactant intactId="EBI-399246">
        <id>Q9UBU8</id>
        <label>MORF4L1</label>
    </interactant>
    <organismsDiffer>false</organismsDiffer>
    <experiments>3</experiments>
</comment>
<comment type="interaction">
    <interactant intactId="EBI-618309">
        <id>Q08379</id>
    </interactant>
    <interactant intactId="EBI-10288852">
        <id>Q9UBU8-2</id>
        <label>MORF4L1</label>
    </interactant>
    <organismsDiffer>false</organismsDiffer>
    <experiments>3</experiments>
</comment>
<comment type="interaction">
    <interactant intactId="EBI-618309">
        <id>Q08379</id>
    </interactant>
    <interactant intactId="EBI-399257">
        <id>Q15014</id>
        <label>MORF4L2</label>
    </interactant>
    <organismsDiffer>false</organismsDiffer>
    <experiments>3</experiments>
</comment>
<comment type="interaction">
    <interactant intactId="EBI-618309">
        <id>Q08379</id>
    </interactant>
    <interactant intactId="EBI-9675802">
        <id>Q6PF18</id>
        <label>MORN3</label>
    </interactant>
    <organismsDiffer>false</organismsDiffer>
    <experiments>8</experiments>
</comment>
<comment type="interaction">
    <interactant intactId="EBI-618309">
        <id>Q08379</id>
    </interactant>
    <interactant intactId="EBI-1757866">
        <id>P00540</id>
        <label>MOS</label>
    </interactant>
    <organismsDiffer>false</organismsDiffer>
    <experiments>6</experiments>
</comment>
<comment type="interaction">
    <interactant intactId="EBI-618309">
        <id>Q08379</id>
    </interactant>
    <interactant intactId="EBI-8634060">
        <id>Q8IXL7</id>
        <label>MSRB3</label>
    </interactant>
    <organismsDiffer>false</organismsDiffer>
    <experiments>3</experiments>
</comment>
<comment type="interaction">
    <interactant intactId="EBI-618309">
        <id>Q08379</id>
    </interactant>
    <interactant intactId="EBI-10699187">
        <id>Q8IXL7-2</id>
        <label>MSRB3</label>
    </interactant>
    <organismsDiffer>false</organismsDiffer>
    <experiments>3</experiments>
</comment>
<comment type="interaction">
    <interactant intactId="EBI-618309">
        <id>Q08379</id>
    </interactant>
    <interactant intactId="EBI-6137569">
        <id>Q499L9</id>
        <label>MST4</label>
    </interactant>
    <organismsDiffer>false</organismsDiffer>
    <experiments>3</experiments>
</comment>
<comment type="interaction">
    <interactant intactId="EBI-618309">
        <id>Q08379</id>
    </interactant>
    <interactant intactId="EBI-10252703">
        <id>Q6P444</id>
        <label>MTFR2</label>
    </interactant>
    <organismsDiffer>false</organismsDiffer>
    <experiments>3</experiments>
</comment>
<comment type="interaction">
    <interactant intactId="EBI-618309">
        <id>Q08379</id>
    </interactant>
    <interactant intactId="EBI-10318831">
        <id>Q9P2K5-2</id>
        <label>MYEF2</label>
    </interactant>
    <organismsDiffer>false</organismsDiffer>
    <experiments>6</experiments>
</comment>
<comment type="interaction">
    <interactant intactId="EBI-618309">
        <id>Q08379</id>
    </interactant>
    <interactant intactId="EBI-12247808">
        <id>Q5VTT5-2</id>
        <label>MYOM3</label>
    </interactant>
    <organismsDiffer>false</organismsDiffer>
    <experiments>3</experiments>
</comment>
<comment type="interaction">
    <interactant intactId="EBI-618309">
        <id>Q08379</id>
    </interactant>
    <interactant intactId="EBI-489611">
        <id>P19878</id>
        <label>NCF2</label>
    </interactant>
    <organismsDiffer>false</organismsDiffer>
    <experiments>9</experiments>
</comment>
<comment type="interaction">
    <interactant intactId="EBI-618309">
        <id>Q08379</id>
    </interactant>
    <interactant intactId="EBI-715849">
        <id>O14777</id>
        <label>NDC80</label>
    </interactant>
    <organismsDiffer>false</organismsDiffer>
    <experiments>3</experiments>
</comment>
<comment type="interaction">
    <interactant intactId="EBI-618309">
        <id>Q08379</id>
    </interactant>
    <interactant intactId="EBI-928842">
        <id>Q9GZM8</id>
        <label>NDEL1</label>
    </interactant>
    <organismsDiffer>false</organismsDiffer>
    <experiments>3</experiments>
</comment>
<comment type="interaction">
    <interactant intactId="EBI-618309">
        <id>Q08379</id>
    </interactant>
    <interactant intactId="EBI-2880203">
        <id>O76041</id>
        <label>NEBL</label>
    </interactant>
    <organismsDiffer>false</organismsDiffer>
    <experiments>4</experiments>
</comment>
<comment type="interaction">
    <interactant intactId="EBI-618309">
        <id>Q08379</id>
    </interactant>
    <interactant intactId="EBI-10178578">
        <id>I6L9F6</id>
        <label>NEFL</label>
    </interactant>
    <organismsDiffer>false</organismsDiffer>
    <experiments>3</experiments>
</comment>
<comment type="interaction">
    <interactant intactId="EBI-618309">
        <id>Q08379</id>
    </interactant>
    <interactant intactId="EBI-475646">
        <id>P07196</id>
        <label>NEFL</label>
    </interactant>
    <organismsDiffer>false</organismsDiffer>
    <experiments>3</experiments>
</comment>
<comment type="interaction">
    <interactant intactId="EBI-618309">
        <id>Q08379</id>
    </interactant>
    <interactant intactId="EBI-744782">
        <id>Q9Y5B8</id>
        <label>NME7</label>
    </interactant>
    <organismsDiffer>false</organismsDiffer>
    <experiments>6</experiments>
</comment>
<comment type="interaction">
    <interactant intactId="EBI-618309">
        <id>Q08379</id>
    </interactant>
    <interactant intactId="EBI-1391623">
        <id>P29474</id>
        <label>NOS3</label>
    </interactant>
    <organismsDiffer>false</organismsDiffer>
    <experiments>6</experiments>
</comment>
<comment type="interaction">
    <interactant intactId="EBI-618309">
        <id>Q08379</id>
    </interactant>
    <interactant intactId="EBI-746484">
        <id>P48552</id>
        <label>NRIP1</label>
    </interactant>
    <organismsDiffer>false</organismsDiffer>
    <experiments>3</experiments>
</comment>
<comment type="interaction">
    <interactant intactId="EBI-618309">
        <id>Q08379</id>
    </interactant>
    <interactant intactId="EBI-12028784">
        <id>Q6X4W1-2</id>
        <label>NSMF</label>
    </interactant>
    <organismsDiffer>false</organismsDiffer>
    <experiments>3</experiments>
</comment>
<comment type="interaction">
    <interactant intactId="EBI-618309">
        <id>Q08379</id>
    </interactant>
    <interactant intactId="EBI-741158">
        <id>Q96HA8</id>
        <label>NTAQ1</label>
    </interactant>
    <organismsDiffer>false</organismsDiffer>
    <experiments>8</experiments>
</comment>
<comment type="interaction">
    <interactant intactId="EBI-618309">
        <id>Q08379</id>
    </interactant>
    <interactant intactId="EBI-355720">
        <id>O43809</id>
        <label>NUDT21</label>
    </interactant>
    <organismsDiffer>false</organismsDiffer>
    <experiments>3</experiments>
</comment>
<comment type="interaction">
    <interactant intactId="EBI-618309">
        <id>Q08379</id>
    </interactant>
    <interactant intactId="EBI-752122">
        <id>Q9NPJ8</id>
        <label>NXT2</label>
    </interactant>
    <organismsDiffer>false</organismsDiffer>
    <experiments>3</experiments>
</comment>
<comment type="interaction">
    <interactant intactId="EBI-618309">
        <id>Q08379</id>
    </interactant>
    <interactant intactId="EBI-10698339">
        <id>Q9NPJ8-3</id>
        <label>NXT2</label>
    </interactant>
    <organismsDiffer>false</organismsDiffer>
    <experiments>3</experiments>
</comment>
<comment type="interaction">
    <interactant intactId="EBI-618309">
        <id>Q08379</id>
    </interactant>
    <interactant intactId="EBI-12081862">
        <id>P00973-2</id>
        <label>OAS1</label>
    </interactant>
    <organismsDiffer>false</organismsDiffer>
    <experiments>3</experiments>
</comment>
<comment type="interaction">
    <interactant intactId="EBI-618309">
        <id>Q08379</id>
    </interactant>
    <interactant intactId="EBI-1046387">
        <id>Q96NG3</id>
        <label>ODAD4</label>
    </interactant>
    <organismsDiffer>false</organismsDiffer>
    <experiments>3</experiments>
</comment>
<comment type="interaction">
    <interactant intactId="EBI-618309">
        <id>Q08379</id>
    </interactant>
    <interactant intactId="EBI-10285558">
        <id>Q96F82</id>
        <label>ORC1L</label>
    </interactant>
    <organismsDiffer>false</organismsDiffer>
    <experiments>3</experiments>
</comment>
<comment type="interaction">
    <interactant intactId="EBI-618309">
        <id>Q08379</id>
    </interactant>
    <interactant intactId="EBI-10694433">
        <id>Q8N7B6-2</id>
        <label>PACRGL</label>
    </interactant>
    <organismsDiffer>false</organismsDiffer>
    <experiments>3</experiments>
</comment>
<comment type="interaction">
    <interactant intactId="EBI-618309">
        <id>Q08379</id>
    </interactant>
    <interactant intactId="EBI-295391">
        <id>Q9BYG5</id>
        <label>PARD6B</label>
    </interactant>
    <organismsDiffer>false</organismsDiffer>
    <experiments>3</experiments>
</comment>
<comment type="interaction">
    <interactant intactId="EBI-618309">
        <id>Q08379</id>
    </interactant>
    <interactant intactId="EBI-2562092">
        <id>Q86TB9</id>
        <label>PATL1</label>
    </interactant>
    <organismsDiffer>false</organismsDiffer>
    <experiments>6</experiments>
</comment>
<comment type="interaction">
    <interactant intactId="EBI-618309">
        <id>Q08379</id>
    </interactant>
    <interactant intactId="EBI-348555">
        <id>O75928</id>
        <label>PIAS2</label>
    </interactant>
    <organismsDiffer>false</organismsDiffer>
    <experiments>3</experiments>
</comment>
<comment type="interaction">
    <interactant intactId="EBI-618309">
        <id>Q08379</id>
    </interactant>
    <interactant intactId="EBI-14066006">
        <id>Q4G0R1</id>
        <label>PIBF1</label>
    </interactant>
    <organismsDiffer>false</organismsDiffer>
    <experiments>3</experiments>
</comment>
<comment type="interaction">
    <interactant intactId="EBI-618309">
        <id>Q08379</id>
    </interactant>
    <interactant intactId="EBI-10256685">
        <id>Q7Z2X4</id>
        <label>PID1</label>
    </interactant>
    <organismsDiffer>false</organismsDiffer>
    <experiments>3</experiments>
</comment>
<comment type="interaction">
    <interactant intactId="EBI-618309">
        <id>Q08379</id>
    </interactant>
    <interactant intactId="EBI-346930">
        <id>O00459</id>
        <label>PIK3R2</label>
    </interactant>
    <organismsDiffer>false</organismsDiffer>
    <experiments>3</experiments>
</comment>
<comment type="interaction">
    <interactant intactId="EBI-618309">
        <id>Q08379</id>
    </interactant>
    <interactant intactId="EBI-2568609">
        <id>Q9BSJ6</id>
        <label>PIMREG</label>
    </interactant>
    <organismsDiffer>false</organismsDiffer>
    <experiments>3</experiments>
</comment>
<comment type="interaction">
    <interactant intactId="EBI-618309">
        <id>Q08379</id>
    </interactant>
    <interactant intactId="EBI-714158">
        <id>Q13526</id>
        <label>PIN1</label>
    </interactant>
    <organismsDiffer>false</organismsDiffer>
    <experiments>6</experiments>
</comment>
<comment type="interaction">
    <interactant intactId="EBI-618309">
        <id>Q08379</id>
    </interactant>
    <interactant intactId="EBI-748265">
        <id>P78337</id>
        <label>PITX1</label>
    </interactant>
    <organismsDiffer>false</organismsDiffer>
    <experiments>3</experiments>
</comment>
<comment type="interaction">
    <interactant intactId="EBI-618309">
        <id>Q08379</id>
    </interactant>
    <interactant intactId="EBI-602382">
        <id>Q16512</id>
        <label>PKN1</label>
    </interactant>
    <organismsDiffer>false</organismsDiffer>
    <experiments>6</experiments>
</comment>
<comment type="interaction">
    <interactant intactId="EBI-618309">
        <id>Q08379</id>
    </interactant>
    <interactant intactId="EBI-1384335">
        <id>Q6P5Z2</id>
        <label>PKN3</label>
    </interactant>
    <organismsDiffer>false</organismsDiffer>
    <experiments>3</experiments>
</comment>
<comment type="interaction">
    <interactant intactId="EBI-618309">
        <id>Q08379</id>
    </interactant>
    <interactant intactId="EBI-9087684">
        <id>Q13835-2</id>
        <label>PKP1</label>
    </interactant>
    <organismsDiffer>false</organismsDiffer>
    <experiments>3</experiments>
</comment>
<comment type="interaction">
    <interactant intactId="EBI-618309">
        <id>Q08379</id>
    </interactant>
    <interactant intactId="EBI-10987518">
        <id>Q99959-2</id>
        <label>PKP2</label>
    </interactant>
    <organismsDiffer>false</organismsDiffer>
    <experiments>3</experiments>
</comment>
<comment type="interaction">
    <interactant intactId="EBI-618309">
        <id>Q08379</id>
    </interactant>
    <interactant intactId="EBI-726447">
        <id>Q99569</id>
        <label>PKP4</label>
    </interactant>
    <organismsDiffer>false</organismsDiffer>
    <experiments>3</experiments>
</comment>
<comment type="interaction">
    <interactant intactId="EBI-618309">
        <id>Q08379</id>
    </interactant>
    <interactant intactId="EBI-4324902">
        <id>Q99569-2</id>
        <label>PKP4</label>
    </interactant>
    <organismsDiffer>false</organismsDiffer>
    <experiments>3</experiments>
</comment>
<comment type="interaction">
    <interactant intactId="EBI-618309">
        <id>Q08379</id>
    </interactant>
    <interactant intactId="EBI-10290304">
        <id>Q96KN8-3</id>
        <label>PLAAT5</label>
    </interactant>
    <organismsDiffer>false</organismsDiffer>
    <experiments>6</experiments>
</comment>
<comment type="interaction">
    <interactant intactId="EBI-618309">
        <id>Q08379</id>
    </interactant>
    <interactant intactId="EBI-4401947">
        <id>Q9HB19</id>
        <label>PLEKHA2</label>
    </interactant>
    <organismsDiffer>false</organismsDiffer>
    <experiments>3</experiments>
</comment>
<comment type="interaction">
    <interactant intactId="EBI-618309">
        <id>Q08379</id>
    </interactant>
    <interactant intactId="EBI-10276663">
        <id>Q8WUT1</id>
        <label>POLDIP3</label>
    </interactant>
    <organismsDiffer>false</organismsDiffer>
    <experiments>3</experiments>
</comment>
<comment type="interaction">
    <interactant intactId="EBI-618309">
        <id>Q08379</id>
    </interactant>
    <interactant intactId="EBI-5452779">
        <id>Q9BUI4</id>
        <label>POLR3C</label>
    </interactant>
    <organismsDiffer>false</organismsDiffer>
    <experiments>3</experiments>
</comment>
<comment type="interaction">
    <interactant intactId="EBI-618309">
        <id>Q08379</id>
    </interactant>
    <interactant intactId="EBI-11956563">
        <id>Q96HA1-2</id>
        <label>POM121</label>
    </interactant>
    <organismsDiffer>false</organismsDiffer>
    <experiments>3</experiments>
</comment>
<comment type="interaction">
    <interactant intactId="EBI-618309">
        <id>Q08379</id>
    </interactant>
    <interactant intactId="EBI-12033574">
        <id>Q15319</id>
        <label>POU4F3</label>
    </interactant>
    <organismsDiffer>false</organismsDiffer>
    <experiments>3</experiments>
</comment>
<comment type="interaction">
    <interactant intactId="EBI-618309">
        <id>Q08379</id>
    </interactant>
    <interactant intactId="EBI-10293968">
        <id>Q96T49</id>
        <label>PPP1R16B</label>
    </interactant>
    <organismsDiffer>false</organismsDiffer>
    <experiments>6</experiments>
</comment>
<comment type="interaction">
    <interactant intactId="EBI-618309">
        <id>Q08379</id>
    </interactant>
    <interactant intactId="EBI-2557469">
        <id>Q6NYC8</id>
        <label>PPP1R18</label>
    </interactant>
    <organismsDiffer>false</organismsDiffer>
    <experiments>6</experiments>
</comment>
<comment type="interaction">
    <interactant intactId="EBI-618309">
        <id>Q08379</id>
    </interactant>
    <interactant intactId="EBI-308500">
        <id>Q5T8A7</id>
        <label>PPP1R26</label>
    </interactant>
    <organismsDiffer>false</organismsDiffer>
    <experiments>3</experiments>
</comment>
<comment type="interaction">
    <interactant intactId="EBI-618309">
        <id>Q08379</id>
    </interactant>
    <interactant intactId="EBI-713867">
        <id>O60828</id>
        <label>PQBP1</label>
    </interactant>
    <organismsDiffer>false</organismsDiffer>
    <experiments>6</experiments>
</comment>
<comment type="interaction">
    <interactant intactId="EBI-618309">
        <id>Q08379</id>
    </interactant>
    <interactant intactId="EBI-2860740">
        <id>Q96QH2</id>
        <label>PRAM1</label>
    </interactant>
    <organismsDiffer>false</organismsDiffer>
    <experiments>3</experiments>
</comment>
<comment type="interaction">
    <interactant intactId="EBI-618309">
        <id>Q08379</id>
    </interactant>
    <interactant intactId="EBI-1181405">
        <id>Q13131</id>
        <label>PRKAA1</label>
    </interactant>
    <organismsDiffer>false</organismsDiffer>
    <experiments>3</experiments>
</comment>
<comment type="interaction">
    <interactant intactId="EBI-618309">
        <id>Q08379</id>
    </interactant>
    <interactant intactId="EBI-1383852">
        <id>P54646</id>
        <label>PRKAA2</label>
    </interactant>
    <organismsDiffer>false</organismsDiffer>
    <experiments>3</experiments>
</comment>
<comment type="interaction">
    <interactant intactId="EBI-618309">
        <id>Q08379</id>
    </interactant>
    <interactant intactId="EBI-1053424">
        <id>O43741</id>
        <label>PRKAB2</label>
    </interactant>
    <organismsDiffer>false</organismsDiffer>
    <experiments>10</experiments>
</comment>
<comment type="interaction">
    <interactant intactId="EBI-618309">
        <id>Q08379</id>
    </interactant>
    <interactant intactId="EBI-2798416">
        <id>Q99633</id>
        <label>PRPF18</label>
    </interactant>
    <organismsDiffer>false</organismsDiffer>
    <experiments>3</experiments>
</comment>
<comment type="interaction">
    <interactant intactId="EBI-618309">
        <id>Q08379</id>
    </interactant>
    <interactant intactId="EBI-744322">
        <id>O43395</id>
        <label>PRPF3</label>
    </interactant>
    <organismsDiffer>false</organismsDiffer>
    <experiments>3</experiments>
</comment>
<comment type="interaction">
    <interactant intactId="EBI-618309">
        <id>Q08379</id>
    </interactant>
    <interactant intactId="EBI-1567797">
        <id>Q8WWY3</id>
        <label>PRPF31</label>
    </interactant>
    <organismsDiffer>false</organismsDiffer>
    <experiments>11</experiments>
</comment>
<comment type="interaction">
    <interactant intactId="EBI-618309">
        <id>Q08379</id>
    </interactant>
    <interactant intactId="EBI-359352">
        <id>P25786</id>
        <label>PSMA1</label>
    </interactant>
    <organismsDiffer>false</organismsDiffer>
    <experiments>6</experiments>
</comment>
<comment type="interaction">
    <interactant intactId="EBI-618309">
        <id>Q08379</id>
    </interactant>
    <interactant intactId="EBI-359310">
        <id>P25789</id>
        <label>PSMA4</label>
    </interactant>
    <organismsDiffer>false</organismsDiffer>
    <experiments>3</experiments>
</comment>
<comment type="interaction">
    <interactant intactId="EBI-618309">
        <id>Q08379</id>
    </interactant>
    <interactant intactId="EBI-2860264">
        <id>Q16825</id>
        <label>PTPN21</label>
    </interactant>
    <organismsDiffer>false</organismsDiffer>
    <experiments>3</experiments>
</comment>
<comment type="interaction">
    <interactant intactId="EBI-618309">
        <id>Q08379</id>
    </interactant>
    <interactant intactId="EBI-752037">
        <id>P61019</id>
        <label>RAB2A</label>
    </interactant>
    <organismsDiffer>false</organismsDiffer>
    <experiments>8</experiments>
</comment>
<comment type="interaction">
    <interactant intactId="EBI-618309">
        <id>Q08379</id>
    </interactant>
    <interactant intactId="EBI-5542466">
        <id>Q8WUD1</id>
        <label>RAB2B</label>
    </interactant>
    <organismsDiffer>false</organismsDiffer>
    <experiments>6</experiments>
</comment>
<comment type="interaction">
    <interactant intactId="EBI-618309">
        <id>Q08379</id>
    </interactant>
    <interactant intactId="EBI-3048577">
        <id>Q14964</id>
        <label>RAB39A</label>
    </interactant>
    <organismsDiffer>false</organismsDiffer>
    <experiments>6</experiments>
</comment>
<comment type="interaction">
    <interactant intactId="EBI-618309">
        <id>Q08379</id>
    </interactant>
    <interactant intactId="EBI-9089467">
        <id>Q96DA2</id>
        <label>RAB39B</label>
    </interactant>
    <organismsDiffer>false</organismsDiffer>
    <experiments>4</experiments>
</comment>
<comment type="interaction">
    <interactant intactId="EBI-618309">
        <id>Q08379</id>
    </interactant>
    <interactant intactId="EBI-2339393">
        <id>Q9NS91</id>
        <label>RAD18</label>
    </interactant>
    <organismsDiffer>false</organismsDiffer>
    <experiments>3</experiments>
</comment>
<comment type="interaction">
    <interactant intactId="EBI-618309">
        <id>Q08379</id>
    </interactant>
    <interactant intactId="EBI-744023">
        <id>Q9BTL3</id>
        <label>RAMAC</label>
    </interactant>
    <organismsDiffer>false</organismsDiffer>
    <experiments>3</experiments>
</comment>
<comment type="interaction">
    <interactant intactId="EBI-618309">
        <id>Q08379</id>
    </interactant>
    <interactant intactId="EBI-12028066">
        <id>Q86VV4</id>
        <label>RANBP3L</label>
    </interactant>
    <organismsDiffer>false</organismsDiffer>
    <experiments>3</experiments>
</comment>
<comment type="interaction">
    <interactant intactId="EBI-618309">
        <id>Q08379</id>
    </interactant>
    <interactant intactId="EBI-740272">
        <id>Q96I25</id>
        <label>RBM17</label>
    </interactant>
    <organismsDiffer>false</organismsDiffer>
    <experiments>8</experiments>
</comment>
<comment type="interaction">
    <interactant intactId="EBI-618309">
        <id>Q08379</id>
    </interactant>
    <interactant intactId="EBI-2602260">
        <id>Q9NW64</id>
        <label>RBM22</label>
    </interactant>
    <organismsDiffer>false</organismsDiffer>
    <experiments>3</experiments>
</comment>
<comment type="interaction">
    <interactant intactId="EBI-618309">
        <id>Q08379</id>
    </interactant>
    <interactant intactId="EBI-2211856">
        <id>P49756</id>
        <label>RBM25</label>
    </interactant>
    <organismsDiffer>false</organismsDiffer>
    <experiments>3</experiments>
</comment>
<comment type="interaction">
    <interactant intactId="EBI-618309">
        <id>Q08379</id>
    </interactant>
    <interactant intactId="EBI-6654703">
        <id>Q14498-3</id>
        <label>RBM39</label>
    </interactant>
    <organismsDiffer>false</organismsDiffer>
    <experiments>3</experiments>
</comment>
<comment type="interaction">
    <interactant intactId="EBI-618309">
        <id>Q08379</id>
    </interactant>
    <interactant intactId="EBI-740773">
        <id>Q96IZ5</id>
        <label>RBM41</label>
    </interactant>
    <organismsDiffer>false</organismsDiffer>
    <experiments>6</experiments>
</comment>
<comment type="interaction">
    <interactant intactId="EBI-618309">
        <id>Q08379</id>
    </interactant>
    <interactant intactId="EBI-11026509">
        <id>Q9Y2P8</id>
        <label>RCL1</label>
    </interactant>
    <organismsDiffer>false</organismsDiffer>
    <experiments>3</experiments>
</comment>
<comment type="interaction">
    <interactant intactId="EBI-618309">
        <id>Q08379</id>
    </interactant>
    <interactant intactId="EBI-743428">
        <id>Q9P2K3</id>
        <label>RCOR3</label>
    </interactant>
    <organismsDiffer>false</organismsDiffer>
    <experiments>3</experiments>
</comment>
<comment type="interaction">
    <interactant intactId="EBI-618309">
        <id>Q08379</id>
    </interactant>
    <interactant intactId="EBI-1504830">
        <id>Q9P2K3-2</id>
        <label>RCOR3</label>
    </interactant>
    <organismsDiffer>false</organismsDiffer>
    <experiments>3</experiments>
</comment>
<comment type="interaction">
    <interactant intactId="EBI-618309">
        <id>Q08379</id>
    </interactant>
    <interactant intactId="EBI-10216117">
        <id>P57771</id>
        <label>RGS8</label>
    </interactant>
    <organismsDiffer>false</organismsDiffer>
    <experiments>3</experiments>
</comment>
<comment type="interaction">
    <interactant intactId="EBI-618309">
        <id>Q08379</id>
    </interactant>
    <interactant intactId="EBI-12058229">
        <id>P57771-2</id>
        <label>RGS8</label>
    </interactant>
    <organismsDiffer>false</organismsDiffer>
    <experiments>3</experiments>
</comment>
<comment type="interaction">
    <interactant intactId="EBI-618309">
        <id>Q08379</id>
    </interactant>
    <interactant intactId="EBI-9658624">
        <id>Q9BSD3</id>
        <label>RHNO1</label>
    </interactant>
    <organismsDiffer>false</organismsDiffer>
    <experiments>3</experiments>
</comment>
<comment type="interaction">
    <interactant intactId="EBI-618309">
        <id>Q08379</id>
    </interactant>
    <interactant intactId="EBI-6285694">
        <id>Q9H4E5</id>
        <label>RHOJ</label>
    </interactant>
    <organismsDiffer>false</organismsDiffer>
    <experiments>3</experiments>
</comment>
<comment type="interaction">
    <interactant intactId="EBI-618309">
        <id>Q08379</id>
    </interactant>
    <interactant intactId="EBI-746325">
        <id>Q8TCX5</id>
        <label>RHPN1</label>
    </interactant>
    <organismsDiffer>false</organismsDiffer>
    <experiments>5</experiments>
</comment>
<comment type="interaction">
    <interactant intactId="EBI-618309">
        <id>Q08379</id>
    </interactant>
    <interactant intactId="EBI-10265323">
        <id>Q8N443</id>
        <label>RIBC1</label>
    </interactant>
    <organismsDiffer>false</organismsDiffer>
    <experiments>3</experiments>
</comment>
<comment type="interaction">
    <interactant intactId="EBI-618309">
        <id>Q08379</id>
    </interactant>
    <interactant intactId="EBI-366017">
        <id>Q13671</id>
        <label>RIN1</label>
    </interactant>
    <organismsDiffer>false</organismsDiffer>
    <experiments>3</experiments>
</comment>
<comment type="interaction">
    <interactant intactId="EBI-618309">
        <id>Q08379</id>
    </interactant>
    <interactant intactId="EBI-2836148">
        <id>Q96K30</id>
        <label>RITA1</label>
    </interactant>
    <organismsDiffer>false</organismsDiffer>
    <experiments>4</experiments>
</comment>
<comment type="interaction">
    <interactant intactId="EBI-618309">
        <id>Q08379</id>
    </interactant>
    <interactant intactId="EBI-9916363">
        <id>Q8IUD6</id>
        <label>RNF135</label>
    </interactant>
    <organismsDiffer>false</organismsDiffer>
    <experiments>6</experiments>
</comment>
<comment type="interaction">
    <interactant intactId="EBI-618309">
        <id>Q08379</id>
    </interactant>
    <interactant intactId="EBI-6380946">
        <id>Q8NCN4</id>
        <label>RNF169</label>
    </interactant>
    <organismsDiffer>false</organismsDiffer>
    <experiments>3</experiments>
</comment>
<comment type="interaction">
    <interactant intactId="EBI-618309">
        <id>Q08379</id>
    </interactant>
    <interactant intactId="EBI-10248548">
        <id>Q63HN8-6</id>
        <label>RNF213</label>
    </interactant>
    <organismsDiffer>false</organismsDiffer>
    <experiments>3</experiments>
</comment>
<comment type="interaction">
    <interactant intactId="EBI-618309">
        <id>Q08379</id>
    </interactant>
    <interactant intactId="EBI-16428950">
        <id>A0A0S2Z4G9</id>
        <label>RNF6</label>
    </interactant>
    <organismsDiffer>false</organismsDiffer>
    <experiments>6</experiments>
</comment>
<comment type="interaction">
    <interactant intactId="EBI-618309">
        <id>Q08379</id>
    </interactant>
    <interactant intactId="EBI-748350">
        <id>Q9UHP6</id>
        <label>RSPH14</label>
    </interactant>
    <organismsDiffer>false</organismsDiffer>
    <experiments>6</experiments>
</comment>
<comment type="interaction">
    <interactant intactId="EBI-618309">
        <id>Q08379</id>
    </interactant>
    <interactant intactId="EBI-10256202">
        <id>Q7L4I2-2</id>
        <label>RSRC2</label>
    </interactant>
    <organismsDiffer>false</organismsDiffer>
    <experiments>3</experiments>
</comment>
<comment type="interaction">
    <interactant intactId="EBI-618309">
        <id>Q08379</id>
    </interactant>
    <interactant intactId="EBI-10217913">
        <id>Q14D33</id>
        <label>RTP5</label>
    </interactant>
    <organismsDiffer>false</organismsDiffer>
    <experiments>3</experiments>
</comment>
<comment type="interaction">
    <interactant intactId="EBI-618309">
        <id>Q08379</id>
    </interactant>
    <interactant intactId="EBI-16436147">
        <id>A0A0S2Z4M5</id>
        <label>RXRB</label>
    </interactant>
    <organismsDiffer>false</organismsDiffer>
    <experiments>3</experiments>
</comment>
<comment type="interaction">
    <interactant intactId="EBI-618309">
        <id>Q08379</id>
    </interactant>
    <interactant intactId="EBI-16429492">
        <id>P28702-3</id>
        <label>RXRB</label>
    </interactant>
    <organismsDiffer>false</organismsDiffer>
    <experiments>6</experiments>
</comment>
<comment type="interaction">
    <interactant intactId="EBI-618309">
        <id>Q08379</id>
    </interactant>
    <interactant intactId="EBI-1047497">
        <id>Q9UPU9</id>
        <label>SAMD4A</label>
    </interactant>
    <organismsDiffer>false</organismsDiffer>
    <experiments>3</experiments>
</comment>
<comment type="interaction">
    <interactant intactId="EBI-618309">
        <id>Q08379</id>
    </interactant>
    <interactant intactId="EBI-751683">
        <id>Q9UHR5</id>
        <label>SAP30BP</label>
    </interactant>
    <organismsDiffer>false</organismsDiffer>
    <experiments>3</experiments>
</comment>
<comment type="interaction">
    <interactant intactId="EBI-618309">
        <id>Q08379</id>
    </interactant>
    <interactant intactId="EBI-12000762">
        <id>Q7Z5V6-2</id>
        <label>SAXO4</label>
    </interactant>
    <organismsDiffer>false</organismsDiffer>
    <experiments>3</experiments>
</comment>
<comment type="interaction">
    <interactant intactId="EBI-618309">
        <id>Q08379</id>
    </interactant>
    <interactant intactId="EBI-7954236">
        <id>Q9UPN6</id>
        <label>SCAF8</label>
    </interactant>
    <organismsDiffer>false</organismsDiffer>
    <experiments>4</experiments>
</comment>
<comment type="interaction">
    <interactant intactId="EBI-618309">
        <id>Q08379</id>
    </interactant>
    <interactant intactId="EBI-7543896">
        <id>O95171</id>
        <label>SCEL</label>
    </interactant>
    <organismsDiffer>false</organismsDiffer>
    <experiments>4</experiments>
</comment>
<comment type="interaction">
    <interactant intactId="EBI-618309">
        <id>Q08379</id>
    </interactant>
    <interactant intactId="EBI-748391">
        <id>Q9BWG6</id>
        <label>SCNM1</label>
    </interactant>
    <organismsDiffer>false</organismsDiffer>
    <experiments>5</experiments>
</comment>
<comment type="interaction">
    <interactant intactId="EBI-618309">
        <id>Q08379</id>
    </interactant>
    <interactant intactId="EBI-954116">
        <id>Q96T21</id>
        <label>SECISBP2</label>
    </interactant>
    <organismsDiffer>false</organismsDiffer>
    <experiments>3</experiments>
</comment>
<comment type="interaction">
    <interactant intactId="EBI-618309">
        <id>Q08379</id>
    </interactant>
    <interactant intactId="EBI-10216195">
        <id>P59797</id>
        <label>SELENOV</label>
    </interactant>
    <organismsDiffer>false</organismsDiffer>
    <experiments>3</experiments>
</comment>
<comment type="interaction">
    <interactant intactId="EBI-618309">
        <id>Q08379</id>
    </interactant>
    <interactant intactId="EBI-10251550">
        <id>Q6NXQ0</id>
        <label>SFRS2</label>
    </interactant>
    <organismsDiffer>false</organismsDiffer>
    <experiments>3</experiments>
</comment>
<comment type="interaction">
    <interactant intactId="EBI-618309">
        <id>Q08379</id>
    </interactant>
    <interactant intactId="EBI-747035">
        <id>Q9H788</id>
        <label>SH2D4A</label>
    </interactant>
    <organismsDiffer>false</organismsDiffer>
    <experiments>6</experiments>
</comment>
<comment type="interaction">
    <interactant intactId="EBI-618309">
        <id>Q08379</id>
    </interactant>
    <interactant intactId="EBI-10308083">
        <id>Q9H788-2</id>
        <label>SH2D4A</label>
    </interactant>
    <organismsDiffer>false</organismsDiffer>
    <experiments>3</experiments>
</comment>
<comment type="interaction">
    <interactant intactId="EBI-618309">
        <id>Q08379</id>
    </interactant>
    <interactant intactId="EBI-10225873">
        <id>Q08AM8</id>
        <label>SH3RF2</label>
    </interactant>
    <organismsDiffer>false</organismsDiffer>
    <experiments>3</experiments>
</comment>
<comment type="interaction">
    <interactant intactId="EBI-618309">
        <id>Q08379</id>
    </interactant>
    <interactant intactId="EBI-2130111">
        <id>Q8TEC5</id>
        <label>SH3RF2</label>
    </interactant>
    <organismsDiffer>false</organismsDiffer>
    <experiments>4</experiments>
</comment>
<comment type="interaction">
    <interactant intactId="EBI-618309">
        <id>Q08379</id>
    </interactant>
    <interactant intactId="EBI-79084">
        <id>Q92529</id>
        <label>SHC3</label>
    </interactant>
    <organismsDiffer>false</organismsDiffer>
    <experiments>3</experiments>
</comment>
<comment type="interaction">
    <interactant intactId="EBI-618309">
        <id>Q08379</id>
    </interactant>
    <interactant intactId="EBI-12037847">
        <id>Q6ZSJ9</id>
        <label>SHISA6</label>
    </interactant>
    <organismsDiffer>false</organismsDiffer>
    <experiments>3</experiments>
</comment>
<comment type="interaction">
    <interactant intactId="EBI-618309">
        <id>Q08379</id>
    </interactant>
    <interactant intactId="EBI-750559">
        <id>O95391</id>
        <label>SLU7</label>
    </interactant>
    <organismsDiffer>false</organismsDiffer>
    <experiments>6</experiments>
</comment>
<comment type="interaction">
    <interactant intactId="EBI-618309">
        <id>Q08379</id>
    </interactant>
    <interactant intactId="EBI-5457304">
        <id>Q9NSI2</id>
        <label>SLX9</label>
    </interactant>
    <organismsDiffer>false</organismsDiffer>
    <experiments>4</experiments>
</comment>
<comment type="interaction">
    <interactant intactId="EBI-618309">
        <id>Q08379</id>
    </interactant>
    <interactant intactId="EBI-455078">
        <id>Q969G3</id>
        <label>SMARCE1</label>
    </interactant>
    <organismsDiffer>false</organismsDiffer>
    <experiments>6</experiments>
</comment>
<comment type="interaction">
    <interactant intactId="EBI-618309">
        <id>Q08379</id>
    </interactant>
    <interactant intactId="EBI-750494">
        <id>P49901</id>
        <label>SMCP</label>
    </interactant>
    <organismsDiffer>false</organismsDiffer>
    <experiments>3</experiments>
</comment>
<comment type="interaction">
    <interactant intactId="EBI-618309">
        <id>Q08379</id>
    </interactant>
    <interactant intactId="EBI-2872322">
        <id>Q9H0W8</id>
        <label>SMG9</label>
    </interactant>
    <organismsDiffer>false</organismsDiffer>
    <experiments>3</experiments>
</comment>
<comment type="interaction">
    <interactant intactId="EBI-618309">
        <id>Q08379</id>
    </interactant>
    <interactant intactId="EBI-10244848">
        <id>Q5SQN1</id>
        <label>SNAP47</label>
    </interactant>
    <organismsDiffer>false</organismsDiffer>
    <experiments>3</experiments>
</comment>
<comment type="interaction">
    <interactant intactId="EBI-618309">
        <id>Q08379</id>
    </interactant>
    <interactant intactId="EBI-747719">
        <id>Q96H20</id>
        <label>SNF8</label>
    </interactant>
    <organismsDiffer>false</organismsDiffer>
    <experiments>3</experiments>
</comment>
<comment type="interaction">
    <interactant intactId="EBI-618309">
        <id>Q08379</id>
    </interactant>
    <interactant intactId="EBI-372475">
        <id>P14678-2</id>
        <label>SNRPB</label>
    </interactant>
    <organismsDiffer>false</organismsDiffer>
    <experiments>3</experiments>
</comment>
<comment type="interaction">
    <interactant intactId="EBI-618309">
        <id>Q08379</id>
    </interactant>
    <interactant intactId="EBI-1053651">
        <id>P08579</id>
        <label>SNRPB2</label>
    </interactant>
    <organismsDiffer>false</organismsDiffer>
    <experiments>3</experiments>
</comment>
<comment type="interaction">
    <interactant intactId="EBI-618309">
        <id>Q08379</id>
    </interactant>
    <interactant intactId="EBI-10246938">
        <id>Q5TAL4</id>
        <label>SNRPC</label>
    </interactant>
    <organismsDiffer>false</organismsDiffer>
    <experiments>3</experiments>
</comment>
<comment type="interaction">
    <interactant intactId="EBI-618309">
        <id>Q08379</id>
    </interactant>
    <interactant intactId="EBI-632715">
        <id>Q13573</id>
        <label>SNW1</label>
    </interactant>
    <organismsDiffer>false</organismsDiffer>
    <experiments>6</experiments>
</comment>
<comment type="interaction">
    <interactant intactId="EBI-618309">
        <id>Q08379</id>
    </interactant>
    <interactant intactId="EBI-298169">
        <id>Q96RF0</id>
        <label>SNX18</label>
    </interactant>
    <organismsDiffer>false</organismsDiffer>
    <experiments>3</experiments>
</comment>
<comment type="interaction">
    <interactant intactId="EBI-618309">
        <id>Q08379</id>
    </interactant>
    <interactant intactId="EBI-12037893">
        <id>O94875-10</id>
        <label>SORBS2</label>
    </interactant>
    <organismsDiffer>false</organismsDiffer>
    <experiments>3</experiments>
</comment>
<comment type="interaction">
    <interactant intactId="EBI-618309">
        <id>Q08379</id>
    </interactant>
    <interactant intactId="EBI-11334239">
        <id>Q8TC71</id>
        <label>SPATA18</label>
    </interactant>
    <organismsDiffer>false</organismsDiffer>
    <experiments>3</experiments>
</comment>
<comment type="interaction">
    <interactant intactId="EBI-618309">
        <id>Q08379</id>
    </interactant>
    <interactant intactId="EBI-744066">
        <id>Q9UM82</id>
        <label>SPATA2</label>
    </interactant>
    <organismsDiffer>false</organismsDiffer>
    <experiments>4</experiments>
</comment>
<comment type="interaction">
    <interactant intactId="EBI-618309">
        <id>Q08379</id>
    </interactant>
    <interactant intactId="EBI-7067260">
        <id>Q8NHS9</id>
        <label>SPATA22</label>
    </interactant>
    <organismsDiffer>false</organismsDiffer>
    <experiments>3</experiments>
</comment>
<comment type="interaction">
    <interactant intactId="EBI-618309">
        <id>Q08379</id>
    </interactant>
    <interactant intactId="EBI-742688">
        <id>Q9NZD8</id>
        <label>SPG21</label>
    </interactant>
    <organismsDiffer>false</organismsDiffer>
    <experiments>3</experiments>
</comment>
<comment type="interaction">
    <interactant intactId="EBI-618309">
        <id>Q08379</id>
    </interactant>
    <interactant intactId="EBI-2652799">
        <id>Q99469</id>
        <label>STAC</label>
    </interactant>
    <organismsDiffer>false</organismsDiffer>
    <experiments>3</experiments>
</comment>
<comment type="interaction">
    <interactant intactId="EBI-618309">
        <id>Q08379</id>
    </interactant>
    <interactant intactId="EBI-745021">
        <id>Q96FJ0</id>
        <label>STAMBPL1</label>
    </interactant>
    <organismsDiffer>false</organismsDiffer>
    <experiments>3</experiments>
</comment>
<comment type="interaction">
    <interactant intactId="EBI-618309">
        <id>Q08379</id>
    </interactant>
    <interactant intactId="EBI-618295">
        <id>O00506</id>
        <label>STK25</label>
    </interactant>
    <organismsDiffer>false</organismsDiffer>
    <experiments>17</experiments>
</comment>
<comment type="interaction">
    <interactant intactId="EBI-618309">
        <id>Q08379</id>
    </interactant>
    <interactant intactId="EBI-618239">
        <id>Q9P289</id>
        <label>STK26</label>
    </interactant>
    <organismsDiffer>false</organismsDiffer>
    <experiments>7</experiments>
</comment>
<comment type="interaction">
    <interactant intactId="EBI-618309">
        <id>Q08379</id>
    </interactant>
    <interactant intactId="EBI-540496">
        <id>Q9H7L9</id>
        <label>SUDS3</label>
    </interactant>
    <organismsDiffer>false</organismsDiffer>
    <experiments>3</experiments>
</comment>
<comment type="interaction">
    <interactant intactId="EBI-618309">
        <id>Q08379</id>
    </interactant>
    <interactant intactId="EBI-12317645">
        <id>Q8IX01-3</id>
        <label>SUGP2</label>
    </interactant>
    <organismsDiffer>false</organismsDiffer>
    <experiments>3</experiments>
</comment>
<comment type="interaction">
    <interactant intactId="EBI-618309">
        <id>Q08379</id>
    </interactant>
    <interactant intactId="EBI-12082116">
        <id>Q9H987-2</id>
        <label>SYNPO2L</label>
    </interactant>
    <organismsDiffer>false</organismsDiffer>
    <experiments>3</experiments>
</comment>
<comment type="interaction">
    <interactant intactId="EBI-618309">
        <id>Q08379</id>
    </interactant>
    <interactant intactId="EBI-745392">
        <id>Q9BSW7</id>
        <label>SYT17</label>
    </interactant>
    <organismsDiffer>false</organismsDiffer>
    <experiments>3</experiments>
</comment>
<comment type="interaction">
    <interactant intactId="EBI-618309">
        <id>Q08379</id>
    </interactant>
    <interactant intactId="EBI-10246152">
        <id>Q5T7P8-2</id>
        <label>SYT6</label>
    </interactant>
    <organismsDiffer>false</organismsDiffer>
    <experiments>6</experiments>
</comment>
<comment type="interaction">
    <interactant intactId="EBI-618309">
        <id>Q08379</id>
    </interactant>
    <interactant intactId="EBI-358708">
        <id>Q9NYJ8</id>
        <label>TAB2</label>
    </interactant>
    <organismsDiffer>false</organismsDiffer>
    <experiments>3</experiments>
</comment>
<comment type="interaction">
    <interactant intactId="EBI-618309">
        <id>Q08379</id>
    </interactant>
    <interactant intactId="EBI-8787464">
        <id>Q9NU19</id>
        <label>TBC1D22B</label>
    </interactant>
    <organismsDiffer>false</organismsDiffer>
    <experiments>5</experiments>
</comment>
<comment type="interaction">
    <interactant intactId="EBI-618309">
        <id>Q08379</id>
    </interactant>
    <interactant intactId="EBI-17455779">
        <id>Q9Y2I9-2</id>
        <label>TBC1D30</label>
    </interactant>
    <organismsDiffer>false</organismsDiffer>
    <experiments>3</experiments>
</comment>
<comment type="interaction">
    <interactant intactId="EBI-618309">
        <id>Q08379</id>
    </interactant>
    <interactant intactId="EBI-10239991">
        <id>Q32MN6</id>
        <label>TBP</label>
    </interactant>
    <organismsDiffer>false</organismsDiffer>
    <experiments>6</experiments>
</comment>
<comment type="interaction">
    <interactant intactId="EBI-618309">
        <id>Q08379</id>
    </interactant>
    <interactant intactId="EBI-710310">
        <id>Q15560</id>
        <label>TCEA2</label>
    </interactant>
    <organismsDiffer>false</organismsDiffer>
    <experiments>6</experiments>
</comment>
<comment type="interaction">
    <interactant intactId="EBI-618309">
        <id>Q08379</id>
    </interactant>
    <interactant intactId="EBI-954696">
        <id>Q8N8B7</id>
        <label>TCEANC</label>
    </interactant>
    <organismsDiffer>false</organismsDiffer>
    <experiments>3</experiments>
</comment>
<comment type="interaction">
    <interactant intactId="EBI-618309">
        <id>Q08379</id>
    </interactant>
    <interactant intactId="EBI-11955057">
        <id>Q8N8B7-2</id>
        <label>TCEANC</label>
    </interactant>
    <organismsDiffer>false</organismsDiffer>
    <experiments>3</experiments>
</comment>
<comment type="interaction">
    <interactant intactId="EBI-618309">
        <id>Q08379</id>
    </interactant>
    <interactant intactId="EBI-10176552">
        <id>D2IYK5</id>
        <label>TCF19</label>
    </interactant>
    <organismsDiffer>false</organismsDiffer>
    <experiments>3</experiments>
</comment>
<comment type="interaction">
    <interactant intactId="EBI-618309">
        <id>Q08379</id>
    </interactant>
    <interactant intactId="EBI-7413767">
        <id>Q9Y242</id>
        <label>TCF19</label>
    </interactant>
    <organismsDiffer>false</organismsDiffer>
    <experiments>5</experiments>
</comment>
<comment type="interaction">
    <interactant intactId="EBI-618309">
        <id>Q08379</id>
    </interactant>
    <interactant intactId="EBI-11746252">
        <id>Q9NQB0-10</id>
        <label>TCF7L2</label>
    </interactant>
    <organismsDiffer>false</organismsDiffer>
    <experiments>3</experiments>
</comment>
<comment type="interaction">
    <interactant intactId="EBI-618309">
        <id>Q08379</id>
    </interactant>
    <interactant intactId="EBI-749995">
        <id>P56279</id>
        <label>TCL1A</label>
    </interactant>
    <organismsDiffer>false</organismsDiffer>
    <experiments>8</experiments>
</comment>
<comment type="interaction">
    <interactant intactId="EBI-618309">
        <id>Q08379</id>
    </interactant>
    <interactant intactId="EBI-10176734">
        <id>D3DUQ6</id>
        <label>TEAD4</label>
    </interactant>
    <organismsDiffer>false</organismsDiffer>
    <experiments>3</experiments>
</comment>
<comment type="interaction">
    <interactant intactId="EBI-618309">
        <id>Q08379</id>
    </interactant>
    <interactant intactId="EBI-747736">
        <id>Q15561</id>
        <label>TEAD4</label>
    </interactant>
    <organismsDiffer>false</organismsDiffer>
    <experiments>6</experiments>
</comment>
<comment type="interaction">
    <interactant intactId="EBI-618309">
        <id>Q08379</id>
    </interactant>
    <interactant intactId="EBI-11139477">
        <id>Q96N21</id>
        <label>TEPSIN</label>
    </interactant>
    <organismsDiffer>false</organismsDiffer>
    <experiments>3</experiments>
</comment>
<comment type="interaction">
    <interactant intactId="EBI-618309">
        <id>Q08379</id>
    </interactant>
    <interactant intactId="EBI-16431655">
        <id>A0A0S2Z5Z9</id>
        <label>TEX9</label>
    </interactant>
    <organismsDiffer>false</organismsDiffer>
    <experiments>3</experiments>
</comment>
<comment type="interaction">
    <interactant intactId="EBI-618309">
        <id>Q08379</id>
    </interactant>
    <interactant intactId="EBI-746341">
        <id>Q8N6V9</id>
        <label>TEX9</label>
    </interactant>
    <organismsDiffer>false</organismsDiffer>
    <experiments>3</experiments>
</comment>
<comment type="interaction">
    <interactant intactId="EBI-618309">
        <id>Q08379</id>
    </interactant>
    <interactant intactId="EBI-2514218">
        <id>Q01664</id>
        <label>TFAP4</label>
    </interactant>
    <organismsDiffer>false</organismsDiffer>
    <experiments>6</experiments>
</comment>
<comment type="interaction">
    <interactant intactId="EBI-618309">
        <id>Q08379</id>
    </interactant>
    <interactant intactId="EBI-741350">
        <id>Q9BT49</id>
        <label>THAP7</label>
    </interactant>
    <organismsDiffer>false</organismsDiffer>
    <experiments>4</experiments>
</comment>
<comment type="interaction">
    <interactant intactId="EBI-618309">
        <id>Q08379</id>
    </interactant>
    <interactant intactId="EBI-717810">
        <id>Q08117</id>
        <label>TLE5</label>
    </interactant>
    <organismsDiffer>false</organismsDiffer>
    <experiments>3</experiments>
</comment>
<comment type="interaction">
    <interactant intactId="EBI-618309">
        <id>Q08379</id>
    </interactant>
    <interactant intactId="EBI-11741437">
        <id>Q08117-2</id>
        <label>TLE5</label>
    </interactant>
    <organismsDiffer>false</organismsDiffer>
    <experiments>6</experiments>
</comment>
<comment type="interaction">
    <interactant intactId="EBI-618309">
        <id>Q08379</id>
    </interactant>
    <interactant intactId="EBI-351158">
        <id>P09493</id>
        <label>TPM1</label>
    </interactant>
    <organismsDiffer>false</organismsDiffer>
    <experiments>3</experiments>
</comment>
<comment type="interaction">
    <interactant intactId="EBI-618309">
        <id>Q08379</id>
    </interactant>
    <interactant intactId="EBI-10196387">
        <id>P09493-5</id>
        <label>TPM1</label>
    </interactant>
    <organismsDiffer>false</organismsDiffer>
    <experiments>3</experiments>
</comment>
<comment type="interaction">
    <interactant intactId="EBI-618309">
        <id>Q08379</id>
    </interactant>
    <interactant intactId="EBI-12123928">
        <id>P09493-10</id>
        <label>TPM1</label>
    </interactant>
    <organismsDiffer>false</organismsDiffer>
    <experiments>3</experiments>
</comment>
<comment type="interaction">
    <interactant intactId="EBI-618309">
        <id>Q08379</id>
    </interactant>
    <interactant intactId="EBI-14115717">
        <id>Q8N7U7-2</id>
        <label>TPRX1</label>
    </interactant>
    <organismsDiffer>false</organismsDiffer>
    <experiments>3</experiments>
</comment>
<comment type="interaction">
    <interactant intactId="EBI-618309">
        <id>Q08379</id>
    </interactant>
    <interactant intactId="EBI-1037322">
        <id>Q9ULW0</id>
        <label>TPX2</label>
    </interactant>
    <organismsDiffer>false</organismsDiffer>
    <experiments>6</experiments>
</comment>
<comment type="interaction">
    <interactant intactId="EBI-618309">
        <id>Q08379</id>
    </interactant>
    <interactant intactId="EBI-3650647">
        <id>Q9BUZ4</id>
        <label>TRAF4</label>
    </interactant>
    <organismsDiffer>false</organismsDiffer>
    <experiments>5</experiments>
</comment>
<comment type="interaction">
    <interactant intactId="EBI-618309">
        <id>Q08379</id>
    </interactant>
    <interactant intactId="EBI-2820256">
        <id>Q14142</id>
        <label>TRIM14</label>
    </interactant>
    <organismsDiffer>false</organismsDiffer>
    <experiments>3</experiments>
</comment>
<comment type="interaction">
    <interactant intactId="EBI-618309">
        <id>Q08379</id>
    </interactant>
    <interactant intactId="EBI-702370">
        <id>Q14134</id>
        <label>TRIM29</label>
    </interactant>
    <organismsDiffer>false</organismsDiffer>
    <experiments>5</experiments>
</comment>
<comment type="interaction">
    <interactant intactId="EBI-618309">
        <id>Q08379</id>
    </interactant>
    <interactant intactId="EBI-5235829">
        <id>Q8IWZ5</id>
        <label>TRIM42</label>
    </interactant>
    <organismsDiffer>false</organismsDiffer>
    <experiments>3</experiments>
</comment>
<comment type="interaction">
    <interactant intactId="EBI-618309">
        <id>Q08379</id>
    </interactant>
    <interactant intactId="EBI-10261521">
        <id>Q8IV54</id>
        <label>TSC22D4</label>
    </interactant>
    <organismsDiffer>false</organismsDiffer>
    <experiments>3</experiments>
</comment>
<comment type="interaction">
    <interactant intactId="EBI-618309">
        <id>Q08379</id>
    </interactant>
    <interactant intactId="EBI-744794">
        <id>Q9BZW7</id>
        <label>TSGA10</label>
    </interactant>
    <organismsDiffer>false</organismsDiffer>
    <experiments>3</experiments>
</comment>
<comment type="interaction">
    <interactant intactId="EBI-618309">
        <id>Q08379</id>
    </interactant>
    <interactant intactId="EBI-10241197">
        <id>Q3SY00</id>
        <label>TSGA10IP</label>
    </interactant>
    <organismsDiffer>false</organismsDiffer>
    <experiments>3</experiments>
</comment>
<comment type="interaction">
    <interactant intactId="EBI-618309">
        <id>Q08379</id>
    </interactant>
    <interactant intactId="EBI-10687282">
        <id>Q9NRE2</id>
        <label>TSHZ2</label>
    </interactant>
    <organismsDiffer>false</organismsDiffer>
    <experiments>3</experiments>
</comment>
<comment type="interaction">
    <interactant intactId="EBI-618309">
        <id>Q08379</id>
    </interactant>
    <interactant intactId="EBI-9053916">
        <id>Q63HK5</id>
        <label>TSHZ3</label>
    </interactant>
    <organismsDiffer>false</organismsDiffer>
    <experiments>3</experiments>
</comment>
<comment type="interaction">
    <interactant intactId="EBI-618309">
        <id>Q08379</id>
    </interactant>
    <interactant intactId="EBI-717229">
        <id>Q9Y5U2</id>
        <label>TSSC4</label>
    </interactant>
    <organismsDiffer>false</organismsDiffer>
    <experiments>3</experiments>
</comment>
<comment type="interaction">
    <interactant intactId="EBI-618309">
        <id>Q08379</id>
    </interactant>
    <interactant intactId="EBI-3918381">
        <id>Q96PN8</id>
        <label>TSSK3</label>
    </interactant>
    <organismsDiffer>false</organismsDiffer>
    <experiments>6</experiments>
</comment>
<comment type="interaction">
    <interactant intactId="EBI-618309">
        <id>Q08379</id>
    </interactant>
    <interactant intactId="EBI-6447954">
        <id>Q5W5X9</id>
        <label>TTC23</label>
    </interactant>
    <organismsDiffer>false</organismsDiffer>
    <experiments>3</experiments>
</comment>
<comment type="interaction">
    <interactant intactId="EBI-618309">
        <id>Q08379</id>
    </interactant>
    <interactant intactId="EBI-9090990">
        <id>Q5W5X9-3</id>
        <label>TTC23</label>
    </interactant>
    <organismsDiffer>false</organismsDiffer>
    <experiments>3</experiments>
</comment>
<comment type="interaction">
    <interactant intactId="EBI-618309">
        <id>Q08379</id>
    </interactant>
    <interactant intactId="EBI-2851213">
        <id>Q8N5M4</id>
        <label>TTC9C</label>
    </interactant>
    <organismsDiffer>false</organismsDiffer>
    <experiments>3</experiments>
</comment>
<comment type="interaction">
    <interactant intactId="EBI-618309">
        <id>Q08379</id>
    </interactant>
    <interactant intactId="EBI-10210710">
        <id>P49638</id>
        <label>TTPA</label>
    </interactant>
    <organismsDiffer>false</organismsDiffer>
    <experiments>3</experiments>
</comment>
<comment type="interaction">
    <interactant intactId="EBI-618309">
        <id>Q08379</id>
    </interactant>
    <interactant intactId="EBI-359793">
        <id>P40222</id>
        <label>TXLNA</label>
    </interactant>
    <organismsDiffer>false</organismsDiffer>
    <experiments>3</experiments>
</comment>
<comment type="interaction">
    <interactant intactId="EBI-618309">
        <id>Q08379</id>
    </interactant>
    <interactant intactId="EBI-6116822">
        <id>Q8N3L3</id>
        <label>TXLNB</label>
    </interactant>
    <organismsDiffer>false</organismsDiffer>
    <experiments>3</experiments>
</comment>
<comment type="interaction">
    <interactant intactId="EBI-618309">
        <id>Q08379</id>
    </interactant>
    <interactant intactId="EBI-80168">
        <id>P63279</id>
        <label>UBE2I</label>
    </interactant>
    <organismsDiffer>false</organismsDiffer>
    <experiments>4</experiments>
</comment>
<comment type="interaction">
    <interactant intactId="EBI-618309">
        <id>Q08379</id>
    </interactant>
    <interactant intactId="EBI-2130181">
        <id>Q5VVX9</id>
        <label>UBE2U</label>
    </interactant>
    <organismsDiffer>false</organismsDiffer>
    <experiments>4</experiments>
</comment>
<comment type="interaction">
    <interactant intactId="EBI-618309">
        <id>Q08379</id>
    </interactant>
    <interactant intactId="EBI-1058871">
        <id>Q15386</id>
        <label>UBE3C</label>
    </interactant>
    <organismsDiffer>false</organismsDiffer>
    <experiments>3</experiments>
</comment>
<comment type="interaction">
    <interactant intactId="EBI-618309">
        <id>Q08379</id>
    </interactant>
    <interactant intactId="EBI-17208936">
        <id>P0CB47</id>
        <label>UBTFL1</label>
    </interactant>
    <organismsDiffer>false</organismsDiffer>
    <experiments>3</experiments>
</comment>
<comment type="interaction">
    <interactant intactId="EBI-618309">
        <id>Q08379</id>
    </interactant>
    <interactant intactId="EBI-12041225">
        <id>Q9Y4E8-2</id>
        <label>USP15</label>
    </interactant>
    <organismsDiffer>false</organismsDiffer>
    <experiments>3</experiments>
</comment>
<comment type="interaction">
    <interactant intactId="EBI-618309">
        <id>Q08379</id>
    </interactant>
    <interactant intactId="EBI-743272">
        <id>O75604</id>
        <label>USP2</label>
    </interactant>
    <organismsDiffer>false</organismsDiffer>
    <experiments>6</experiments>
</comment>
<comment type="interaction">
    <interactant intactId="EBI-618309">
        <id>Q08379</id>
    </interactant>
    <interactant intactId="EBI-10225961">
        <id>Q08E77</id>
        <label>UTP14C</label>
    </interactant>
    <organismsDiffer>false</organismsDiffer>
    <experiments>3</experiments>
</comment>
<comment type="interaction">
    <interactant intactId="EBI-618309">
        <id>Q08379</id>
    </interactant>
    <interactant intactId="EBI-11737646">
        <id>Q5TAP6</id>
        <label>UTP14C</label>
    </interactant>
    <organismsDiffer>false</organismsDiffer>
    <experiments>5</experiments>
</comment>
<comment type="interaction">
    <interactant intactId="EBI-618309">
        <id>Q08379</id>
    </interactant>
    <interactant intactId="EBI-5457544">
        <id>Q9BRU9</id>
        <label>UTP23</label>
    </interactant>
    <organismsDiffer>false</organismsDiffer>
    <experiments>3</experiments>
</comment>
<comment type="interaction">
    <interactant intactId="EBI-618309">
        <id>Q08379</id>
    </interactant>
    <interactant intactId="EBI-11980193">
        <id>Q14119</id>
        <label>VEZF1</label>
    </interactant>
    <organismsDiffer>false</organismsDiffer>
    <experiments>3</experiments>
</comment>
<comment type="interaction">
    <interactant intactId="EBI-618309">
        <id>Q08379</id>
    </interactant>
    <interactant intactId="EBI-10243107">
        <id>Q548N1</id>
        <label>VPS28</label>
    </interactant>
    <organismsDiffer>false</organismsDiffer>
    <experiments>3</experiments>
</comment>
<comment type="interaction">
    <interactant intactId="EBI-618309">
        <id>Q08379</id>
    </interactant>
    <interactant intactId="EBI-727424">
        <id>Q9UK41</id>
        <label>VPS28</label>
    </interactant>
    <organismsDiffer>false</organismsDiffer>
    <experiments>6</experiments>
</comment>
<comment type="interaction">
    <interactant intactId="EBI-618309">
        <id>Q08379</id>
    </interactant>
    <interactant intactId="EBI-2559305">
        <id>A5D8V6</id>
        <label>VPS37C</label>
    </interactant>
    <organismsDiffer>false</organismsDiffer>
    <experiments>3</experiments>
</comment>
<comment type="interaction">
    <interactant intactId="EBI-618309">
        <id>Q08379</id>
    </interactant>
    <interactant intactId="EBI-712969">
        <id>Q9Y3C0</id>
        <label>WASHC3</label>
    </interactant>
    <organismsDiffer>false</organismsDiffer>
    <experiments>6</experiments>
</comment>
<comment type="interaction">
    <interactant intactId="EBI-618309">
        <id>Q08379</id>
    </interactant>
    <interactant intactId="EBI-310886">
        <id>Q9P202</id>
        <label>WHRN</label>
    </interactant>
    <organismsDiffer>false</organismsDiffer>
    <experiments>3</experiments>
</comment>
<comment type="interaction">
    <interactant intactId="EBI-618309">
        <id>Q08379</id>
    </interactant>
    <interactant intactId="EBI-10300345">
        <id>Q9BW85</id>
        <label>YJU2</label>
    </interactant>
    <organismsDiffer>false</organismsDiffer>
    <experiments>8</experiments>
</comment>
<comment type="interaction">
    <interactant intactId="EBI-618309">
        <id>Q08379</id>
    </interactant>
    <interactant intactId="EBI-711925">
        <id>Q05516</id>
        <label>ZBTB16</label>
    </interactant>
    <organismsDiffer>false</organismsDiffer>
    <experiments>8</experiments>
</comment>
<comment type="interaction">
    <interactant intactId="EBI-618309">
        <id>Q08379</id>
    </interactant>
    <interactant intactId="EBI-2564133">
        <id>Q9P1Z0</id>
        <label>ZBTB4</label>
    </interactant>
    <organismsDiffer>false</organismsDiffer>
    <experiments>3</experiments>
</comment>
<comment type="interaction">
    <interactant intactId="EBI-618309">
        <id>Q08379</id>
    </interactant>
    <interactant intactId="EBI-12287587">
        <id>B2RXF5</id>
        <label>ZBTB42</label>
    </interactant>
    <organismsDiffer>false</organismsDiffer>
    <experiments>3</experiments>
</comment>
<comment type="interaction">
    <interactant intactId="EBI-618309">
        <id>Q08379</id>
    </interactant>
    <interactant intactId="EBI-14104088">
        <id>Q53FD0-2</id>
        <label>ZC2HC1C</label>
    </interactant>
    <organismsDiffer>false</organismsDiffer>
    <experiments>3</experiments>
</comment>
<comment type="interaction">
    <interactant intactId="EBI-618309">
        <id>Q08379</id>
    </interactant>
    <interactant intactId="EBI-524753">
        <id>Q8IUH5</id>
        <label>ZDHHC17</label>
    </interactant>
    <organismsDiffer>false</organismsDiffer>
    <experiments>3</experiments>
</comment>
<comment type="interaction">
    <interactant intactId="EBI-618309">
        <id>Q08379</id>
    </interactant>
    <interactant intactId="EBI-6448783">
        <id>G3V1X1</id>
        <label>ZFC3H1</label>
    </interactant>
    <organismsDiffer>false</organismsDiffer>
    <experiments>3</experiments>
</comment>
<comment type="interaction">
    <interactant intactId="EBI-618309">
        <id>Q08379</id>
    </interactant>
    <interactant intactId="EBI-10237226">
        <id>Q15911-2</id>
        <label>ZFHX3</label>
    </interactant>
    <organismsDiffer>false</organismsDiffer>
    <experiments>3</experiments>
</comment>
<comment type="interaction">
    <interactant intactId="EBI-618309">
        <id>Q08379</id>
    </interactant>
    <interactant intactId="EBI-7236323">
        <id>Q6ZN57</id>
        <label>ZFP2</label>
    </interactant>
    <organismsDiffer>false</organismsDiffer>
    <experiments>3</experiments>
</comment>
<comment type="interaction">
    <interactant intactId="EBI-618309">
        <id>Q08379</id>
    </interactant>
    <interactant intactId="EBI-8656416">
        <id>Q68DK2-5</id>
        <label>ZFYVE26</label>
    </interactant>
    <organismsDiffer>false</organismsDiffer>
    <experiments>3</experiments>
</comment>
<comment type="interaction">
    <interactant intactId="EBI-618309">
        <id>Q08379</id>
    </interactant>
    <interactant intactId="EBI-16428984">
        <id>A0A0S2Z6H0</id>
        <label>ZGPAT</label>
    </interactant>
    <organismsDiffer>false</organismsDiffer>
    <experiments>6</experiments>
</comment>
<comment type="interaction">
    <interactant intactId="EBI-618309">
        <id>Q08379</id>
    </interactant>
    <interactant intactId="EBI-3439227">
        <id>Q8N5A5</id>
        <label>ZGPAT</label>
    </interactant>
    <organismsDiffer>false</organismsDiffer>
    <experiments>3</experiments>
</comment>
<comment type="interaction">
    <interactant intactId="EBI-618309">
        <id>Q08379</id>
    </interactant>
    <interactant intactId="EBI-10183064">
        <id>Q8N5A5-2</id>
        <label>ZGPAT</label>
    </interactant>
    <organismsDiffer>false</organismsDiffer>
    <experiments>12</experiments>
</comment>
<comment type="interaction">
    <interactant intactId="EBI-618309">
        <id>Q08379</id>
    </interactant>
    <interactant intactId="EBI-2682299">
        <id>Q96NC0</id>
        <label>ZMAT2</label>
    </interactant>
    <organismsDiffer>false</organismsDiffer>
    <experiments>6</experiments>
</comment>
<comment type="interaction">
    <interactant intactId="EBI-618309">
        <id>Q08379</id>
    </interactant>
    <interactant intactId="EBI-2555767">
        <id>Q15973</id>
        <label>ZNF124</label>
    </interactant>
    <organismsDiffer>false</organismsDiffer>
    <experiments>3</experiments>
</comment>
<comment type="interaction">
    <interactant intactId="EBI-618309">
        <id>Q08379</id>
    </interactant>
    <interactant intactId="EBI-10177272">
        <id>P15622-3</id>
        <label>ZNF250</label>
    </interactant>
    <organismsDiffer>false</organismsDiffer>
    <experiments>8</experiments>
</comment>
<comment type="interaction">
    <interactant intactId="EBI-618309">
        <id>Q08379</id>
    </interactant>
    <interactant intactId="EBI-8831272">
        <id>Q8ND82</id>
        <label>ZNF280C</label>
    </interactant>
    <organismsDiffer>false</organismsDiffer>
    <experiments>3</experiments>
</comment>
<comment type="interaction">
    <interactant intactId="EBI-618309">
        <id>Q08379</id>
    </interactant>
    <interactant intactId="EBI-1640965">
        <id>P17036</id>
        <label>ZNF3</label>
    </interactant>
    <organismsDiffer>false</organismsDiffer>
    <experiments>3</experiments>
</comment>
<comment type="interaction">
    <interactant intactId="EBI-618309">
        <id>Q08379</id>
    </interactant>
    <interactant intactId="EBI-11041653">
        <id>P13682</id>
        <label>ZNF35</label>
    </interactant>
    <organismsDiffer>false</organismsDiffer>
    <experiments>3</experiments>
</comment>
<comment type="interaction">
    <interactant intactId="EBI-618309">
        <id>Q08379</id>
    </interactant>
    <interactant intactId="EBI-720304">
        <id>Q86VK4</id>
        <label>ZNF410</label>
    </interactant>
    <organismsDiffer>false</organismsDiffer>
    <experiments>3</experiments>
</comment>
<comment type="interaction">
    <interactant intactId="EBI-618309">
        <id>Q08379</id>
    </interactant>
    <interactant intactId="EBI-744257">
        <id>Q96IQ9</id>
        <label>ZNF414</label>
    </interactant>
    <organismsDiffer>false</organismsDiffer>
    <experiments>7</experiments>
</comment>
<comment type="interaction">
    <interactant intactId="EBI-618309">
        <id>Q08379</id>
    </interactant>
    <interactant intactId="EBI-740727">
        <id>Q8TAU3</id>
        <label>ZNF417</label>
    </interactant>
    <organismsDiffer>false</organismsDiffer>
    <experiments>6</experiments>
</comment>
<comment type="interaction">
    <interactant intactId="EBI-618309">
        <id>Q08379</id>
    </interactant>
    <interactant intactId="EBI-11962468">
        <id>Q7Z4V0</id>
        <label>ZNF438</label>
    </interactant>
    <organismsDiffer>false</organismsDiffer>
    <experiments>3</experiments>
</comment>
<comment type="interaction">
    <interactant intactId="EBI-618309">
        <id>Q08379</id>
    </interactant>
    <interactant intactId="EBI-12006434">
        <id>Q96MX3</id>
        <label>ZNF48</label>
    </interactant>
    <organismsDiffer>false</organismsDiffer>
    <experiments>3</experiments>
</comment>
<comment type="interaction">
    <interactant intactId="EBI-618309">
        <id>Q08379</id>
    </interactant>
    <interactant intactId="EBI-948288">
        <id>Q96MN9</id>
        <label>ZNF488</label>
    </interactant>
    <organismsDiffer>false</organismsDiffer>
    <experiments>4</experiments>
</comment>
<comment type="interaction">
    <interactant intactId="EBI-618309">
        <id>Q08379</id>
    </interactant>
    <interactant intactId="EBI-1049952">
        <id>Q96KM6</id>
        <label>ZNF512B</label>
    </interactant>
    <organismsDiffer>false</organismsDiffer>
    <experiments>3</experiments>
</comment>
<comment type="interaction">
    <interactant intactId="EBI-618309">
        <id>Q08379</id>
    </interactant>
    <interactant intactId="EBI-10283126">
        <id>Q96C55</id>
        <label>ZNF524</label>
    </interactant>
    <organismsDiffer>false</organismsDiffer>
    <experiments>3</experiments>
</comment>
<comment type="interaction">
    <interactant intactId="EBI-618309">
        <id>Q08379</id>
    </interactant>
    <interactant intactId="EBI-10172590">
        <id>Q7Z3I7</id>
        <label>ZNF572</label>
    </interactant>
    <organismsDiffer>false</organismsDiffer>
    <experiments>6</experiments>
</comment>
<comment type="interaction">
    <interactant intactId="EBI-618309">
        <id>Q08379</id>
    </interactant>
    <interactant intactId="EBI-745520">
        <id>Q9P0T4</id>
        <label>ZNF581</label>
    </interactant>
    <organismsDiffer>false</organismsDiffer>
    <experiments>3</experiments>
</comment>
<comment type="interaction">
    <interactant intactId="EBI-618309">
        <id>Q08379</id>
    </interactant>
    <interactant intactId="EBI-6427977">
        <id>Q96SQ5</id>
        <label>ZNF587</label>
    </interactant>
    <organismsDiffer>false</organismsDiffer>
    <experiments>3</experiments>
</comment>
<comment type="interaction">
    <interactant intactId="EBI-618309">
        <id>Q08379</id>
    </interactant>
    <interactant intactId="EBI-11985915">
        <id>Q5T619</id>
        <label>ZNF648</label>
    </interactant>
    <organismsDiffer>false</organismsDiffer>
    <experiments>3</experiments>
</comment>
<comment type="interaction">
    <interactant intactId="EBI-618309">
        <id>Q08379</id>
    </interactant>
    <interactant intactId="EBI-16429014">
        <id>A0A0S2Z5X4</id>
        <label>ZNF688</label>
    </interactant>
    <organismsDiffer>false</organismsDiffer>
    <experiments>6</experiments>
</comment>
<comment type="interaction">
    <interactant intactId="EBI-618309">
        <id>Q08379</id>
    </interactant>
    <interactant intactId="EBI-16429989">
        <id>A0A0S2Z6P0</id>
        <label>ZNF688</label>
    </interactant>
    <organismsDiffer>false</organismsDiffer>
    <experiments>3</experiments>
</comment>
<comment type="interaction">
    <interactant intactId="EBI-618309">
        <id>Q08379</id>
    </interactant>
    <interactant intactId="EBI-10251462">
        <id>Q6NX45</id>
        <label>ZNF774</label>
    </interactant>
    <organismsDiffer>false</organismsDiffer>
    <experiments>7</experiments>
</comment>
<comment type="interaction">
    <interactant intactId="EBI-618309">
        <id>Q08379</id>
    </interactant>
    <interactant intactId="EBI-5667516">
        <id>Q9Y2P0</id>
        <label>ZNF835</label>
    </interactant>
    <organismsDiffer>false</organismsDiffer>
    <experiments>3</experiments>
</comment>
<comment type="interaction">
    <interactant intactId="EBI-618309">
        <id>Q08379</id>
    </interactant>
    <interactant intactId="EBI-2795524">
        <id>Q8IYH5</id>
        <label>ZZZ3</label>
    </interactant>
    <organismsDiffer>false</organismsDiffer>
    <experiments>3</experiments>
</comment>
<comment type="interaction">
    <interactant intactId="EBI-618309">
        <id>Q08379</id>
    </interactant>
    <interactant intactId="EBI-10211777">
        <id>A0A384ME25</id>
    </interactant>
    <organismsDiffer>false</organismsDiffer>
    <experiments>3</experiments>
</comment>
<comment type="interaction">
    <interactant intactId="EBI-618309">
        <id>Q08379</id>
    </interactant>
    <interactant intactId="EBI-9977437">
        <id>A8K2R3</id>
    </interactant>
    <organismsDiffer>false</organismsDiffer>
    <experiments>3</experiments>
</comment>
<comment type="interaction">
    <interactant intactId="EBI-618309">
        <id>Q08379</id>
    </interactant>
    <interactant intactId="EBI-25475888">
        <id>PRO_0000449630</id>
        <label>rep</label>
        <dbReference type="UniProtKB" id="P0DTD1"/>
    </interactant>
    <organismsDiffer>true</organismsDiffer>
    <experiments>3</experiments>
</comment>
<comment type="interaction">
    <interactant intactId="EBI-618309">
        <id>Q08379</id>
    </interactant>
    <interactant intactId="EBI-25475920">
        <id>PRO_0000449631</id>
        <label>rep</label>
        <dbReference type="UniProtKB" id="P0DTD1"/>
    </interactant>
    <organismsDiffer>true</organismsDiffer>
    <experiments>4</experiments>
</comment>
<comment type="interaction">
    <interactant intactId="EBI-618309">
        <id>Q08379</id>
    </interactant>
    <interactant intactId="EBI-25492395">
        <id>PRO_0000449633</id>
        <label>rep</label>
        <dbReference type="UniProtKB" id="P0DTD1"/>
    </interactant>
    <organismsDiffer>true</organismsDiffer>
    <experiments>3</experiments>
</comment>
<comment type="interaction">
    <interactant intactId="EBI-618309">
        <id>Q08379</id>
    </interactant>
    <interactant intactId="EBI-8826488">
        <id>PRO_0000037946</id>
        <dbReference type="UniProtKB" id="P29991"/>
    </interactant>
    <organismsDiffer>true</organismsDiffer>
    <experiments>3</experiments>
</comment>
<comment type="interaction">
    <interactant intactId="EBI-618309">
        <id>Q08379</id>
    </interactant>
    <interactant intactId="EBI-6863748">
        <id>PRO_0000037551</id>
        <dbReference type="UniProtKB" id="Q9WMX2"/>
    </interactant>
    <organismsDiffer>true</organismsDiffer>
    <experiments>2</experiments>
</comment>
<comment type="subcellular location">
    <subcellularLocation>
        <location evidence="6 25">Golgi apparatus</location>
        <location evidence="6 25">cis-Golgi network membrane</location>
        <topology evidence="6">Peripheral membrane protein</topology>
        <orientation evidence="6">Cytoplasmic side</orientation>
    </subcellularLocation>
    <subcellularLocation>
        <location evidence="6">Endoplasmic reticulum-Golgi intermediate compartment membrane</location>
        <topology evidence="6">Peripheral membrane protein</topology>
        <orientation evidence="6">Cytoplasmic side</orientation>
    </subcellularLocation>
    <subcellularLocation>
        <location evidence="15">Cytoplasm</location>
        <location evidence="15">Cytoskeleton</location>
        <location evidence="15">Spindle pole</location>
    </subcellularLocation>
    <text evidence="1 15">Associates with the mitotic spindle during mitosis (PubMed:26165940).</text>
</comment>
<comment type="alternative products">
    <event type="alternative splicing"/>
    <isoform>
        <id>Q08379-1</id>
        <name>1</name>
        <sequence type="displayed"/>
    </isoform>
    <isoform>
        <id>Q08379-2</id>
        <name>2</name>
        <sequence type="described" ref="VSP_007727"/>
    </isoform>
</comment>
<comment type="domain">
    <text evidence="1">Extended rod-like protein with long coiled-coil domains.</text>
</comment>
<comment type="domain">
    <text evidence="15">The nuclear localization signal (cNLS) mediates interaction with importin-alpha, recruiting importin-alpha to the Golgi membrane and liberating TPX2.</text>
</comment>
<comment type="PTM">
    <text evidence="7">Cleaved by caspases at the onset of apoptosis.</text>
</comment>
<comment type="PTM">
    <text evidence="14">Methylation by PRMT5 is required for Golgi ribbon formation. While dimethylation at Arg-30 and Arg-35 are confirmed in vivo, it is unclear whether Arg-18 is methylated in vivo.</text>
</comment>
<comment type="PTM">
    <text evidence="1 14 15">Phosphorylated at Ser-37 by CDK1 at the onset of mitosis, inhibiting the interaction with p115/USO1 and triggering Golgi disassembly (PubMed:20421892, PubMed:26165940). Phosphorylated at Ser-37 in prophase as the Golgi complex starts to break down, and remains phosphorylated during further breakdown and partitioning of the Golgi fragments in metaphase and anaphase. In telophase, GM130 is dephosphorylated by PP2A as the Golgi fragments start to reassemble (By similarity).</text>
</comment>
<comment type="disease" evidence="17 18 19">
    <disease id="DI-06607">
        <name>Developmental delay with hypotonia, myopathy, and brain abnormalities</name>
        <acronym>DEDHMB</acronym>
        <description>An autosomal recessive neurodevelopmental disorder characterized by global developmental delay and muscle weakness apparent in infancy, microcephaly, seizures, central hypotonia, and skeletal muscle myopathy. Brain imaging shows cerebral atrophy, thinning of the corpus callosum, and delayed myelination.</description>
        <dbReference type="MIM" id="620240"/>
    </disease>
    <text>The disease is caused by variants affecting the gene represented in this entry.</text>
</comment>
<comment type="similarity">
    <text evidence="22">Belongs to the GOLGA2 family.</text>
</comment>
<comment type="sequence caution" evidence="22">
    <conflict type="erroneous initiation">
        <sequence resource="EMBL-CDS" id="AAH69268"/>
    </conflict>
    <text>Truncated N-terminus.</text>
</comment>
<comment type="sequence caution" evidence="22">
    <conflict type="miscellaneous discrepancy">
        <sequence resource="EMBL-CDS" id="AAP35912"/>
    </conflict>
    <text>Sequence differs from that shown after position 826 due to an internal deletion.</text>
</comment>
<comment type="sequence caution" evidence="22">
    <conflict type="erroneous gene model prediction">
        <sequence resource="EMBL-CDS" id="EAW87762"/>
    </conflict>
</comment>
<gene>
    <name type="primary">GOLGA2</name>
</gene>
<feature type="chain" id="PRO_0000190054" description="Golgin subfamily A member 2">
    <location>
        <begin position="1"/>
        <end position="1002"/>
    </location>
</feature>
<feature type="region of interest" description="Disordered" evidence="4">
    <location>
        <begin position="1"/>
        <end position="107"/>
    </location>
</feature>
<feature type="region of interest" description="Interaction with p115/USO1" evidence="1">
    <location>
        <begin position="1"/>
        <end position="84"/>
    </location>
</feature>
<feature type="region of interest" description="Disordered" evidence="4">
    <location>
        <begin position="694"/>
        <end position="724"/>
    </location>
</feature>
<feature type="region of interest" description="Interaction with GORASP1/GRASP65" evidence="1">
    <location>
        <begin position="992"/>
        <end position="1002"/>
    </location>
</feature>
<feature type="coiled-coil region" evidence="3">
    <location>
        <begin position="16"/>
        <end position="892"/>
    </location>
</feature>
<feature type="short sequence motif" description="Nuclear localization signal" evidence="15">
    <location>
        <begin position="26"/>
        <end position="49"/>
    </location>
</feature>
<feature type="compositionally biased region" description="Pro residues" evidence="4">
    <location>
        <begin position="1"/>
        <end position="11"/>
    </location>
</feature>
<feature type="compositionally biased region" description="Polar residues" evidence="4">
    <location>
        <begin position="52"/>
        <end position="63"/>
    </location>
</feature>
<feature type="compositionally biased region" description="Polar residues" evidence="4">
    <location>
        <begin position="95"/>
        <end position="105"/>
    </location>
</feature>
<feature type="compositionally biased region" description="Acidic residues" evidence="4">
    <location>
        <begin position="702"/>
        <end position="716"/>
    </location>
</feature>
<feature type="modified residue" description="Dimethylated arginine" evidence="23">
    <location>
        <position position="18"/>
    </location>
</feature>
<feature type="modified residue" description="Dimethylated arginine" evidence="14">
    <location>
        <position position="30"/>
    </location>
</feature>
<feature type="modified residue" description="Dimethylated arginine" evidence="14">
    <location>
        <position position="35"/>
    </location>
</feature>
<feature type="modified residue" description="Phosphoserine" evidence="14 27 28 29">
    <location>
        <position position="37"/>
    </location>
</feature>
<feature type="modified residue" description="Phosphoserine" evidence="31">
    <location>
        <position position="66"/>
    </location>
</feature>
<feature type="modified residue" description="Phosphoserine" evidence="32">
    <location>
        <position position="273"/>
    </location>
</feature>
<feature type="modified residue" description="Phosphoserine" evidence="28 31">
    <location>
        <position position="438"/>
    </location>
</feature>
<feature type="modified residue" description="Phosphoserine" evidence="32">
    <location>
        <position position="690"/>
    </location>
</feature>
<feature type="modified residue" description="Phosphoserine" evidence="32">
    <location>
        <position position="937"/>
    </location>
</feature>
<feature type="modified residue" description="Phosphoserine" evidence="30 31">
    <location>
        <position position="953"/>
    </location>
</feature>
<feature type="modified residue" description="Phosphoserine" evidence="31">
    <location>
        <position position="981"/>
    </location>
</feature>
<feature type="splice variant" id="VSP_007727" description="In isoform 2." evidence="21">
    <location>
        <begin position="1"/>
        <end position="382"/>
    </location>
</feature>
<feature type="sequence variant" id="VAR_088096" description="In DEDHMB." evidence="19">
    <location>
        <begin position="751"/>
        <end position="1002"/>
    </location>
</feature>
<feature type="sequence variant" id="VAR_033974" description="In dbSNP:rs2240961.">
    <original>R</original>
    <variation>G</variation>
    <location>
        <position position="902"/>
    </location>
</feature>
<feature type="mutagenesis site" description="Impaired methylation; when associated with R-30 and R-35." evidence="14">
    <original>R</original>
    <variation>K</variation>
    <location>
        <position position="18"/>
    </location>
</feature>
<feature type="mutagenesis site" description="Abolishes interaction with importin-alpha." evidence="15">
    <original>KKKLREYQQRNSPGVPTGAKKKKK</original>
    <variation>AAALAEYQQANSPGVPTGAAAAAA</variation>
    <location>
        <begin position="26"/>
        <end position="49"/>
    </location>
</feature>
<feature type="mutagenesis site" description="Impaired methylation; when associated with R-18 and R-35." evidence="14">
    <original>R</original>
    <variation>K</variation>
    <location>
        <position position="30"/>
    </location>
</feature>
<feature type="mutagenesis site" description="Impaired methylation; when associated with R-18 and R-35." evidence="14">
    <original>R</original>
    <variation>K</variation>
    <location>
        <position position="35"/>
    </location>
</feature>
<feature type="mutagenesis site" description="Phosphomimetic mutant. Does not affect interaction with importin-alpha." evidence="15">
    <original>S</original>
    <variation>D</variation>
    <location>
        <position position="37"/>
    </location>
</feature>
<feature type="mutagenesis site" description="Abolishes interaction with GORASP1. Abolishes membrane clustering." evidence="16">
    <original>F</original>
    <variation>A</variation>
    <location>
        <position position="987"/>
    </location>
</feature>
<feature type="mutagenesis site" description="Abolishes interaction with GORASP1. Abolishes membrane clustering." evidence="16">
    <original>I</original>
    <variation>R</variation>
    <location>
        <position position="1002"/>
    </location>
</feature>
<feature type="sequence conflict" description="In Ref. 6; AAP35912." evidence="22" ref="6">
    <location>
        <position position="709"/>
    </location>
</feature>
<feature type="sequence conflict" description="In Ref. 6; AAP35912." evidence="22" ref="6">
    <original>R</original>
    <variation>S</variation>
    <location>
        <position position="762"/>
    </location>
</feature>
<feature type="helix" evidence="33">
    <location>
        <begin position="29"/>
        <end position="36"/>
    </location>
</feature>
<name>GOGA2_HUMAN</name>
<protein>
    <recommendedName>
        <fullName>Golgin subfamily A member 2</fullName>
    </recommendedName>
    <alternativeName>
        <fullName evidence="21">130 kDa cis-Golgi matrix protein</fullName>
        <shortName evidence="20 21">GM130</shortName>
    </alternativeName>
    <alternativeName>
        <fullName evidence="21">GM130 autoantigen</fullName>
    </alternativeName>
    <alternativeName>
        <fullName evidence="21">Golgin-95</fullName>
    </alternativeName>
</protein>
<organism>
    <name type="scientific">Homo sapiens</name>
    <name type="common">Human</name>
    <dbReference type="NCBI Taxonomy" id="9606"/>
    <lineage>
        <taxon>Eukaryota</taxon>
        <taxon>Metazoa</taxon>
        <taxon>Chordata</taxon>
        <taxon>Craniata</taxon>
        <taxon>Vertebrata</taxon>
        <taxon>Euteleostomi</taxon>
        <taxon>Mammalia</taxon>
        <taxon>Eutheria</taxon>
        <taxon>Euarchontoglires</taxon>
        <taxon>Primates</taxon>
        <taxon>Haplorrhini</taxon>
        <taxon>Catarrhini</taxon>
        <taxon>Hominidae</taxon>
        <taxon>Homo</taxon>
    </lineage>
</organism>
<sequence length="1002" mass="113086">MWPQPRLPPRPAMSEETRQSKLAAAKKKLREYQQRNSPGVPTGAKKKKKIKNGSNPETTTSGGCHSPEDTPKDNAATLQPSDDTVLPGGVPSPGASLTSMAASQNHDADNVPNLMDETKTFSSTESLRQLSQQLNGLVCESATCVNGEGPASSANLKDLESRYQQLAVALDSSYVTNKQLNITIEKLKQQNQEITDQLEEEKKECHQKQGALREQLQVHIQTIGILVSEKAELQTALAHTQHAARQKEGESEDLASRLQYSRRRVGELERALSAVSTQQKKADRYNKELTKERDALRLELYKNTQSNEDLKQEKSELEEKLRVLVTEKAGMQLNLEELQKKLEMTELLLQQFSSRCEAPDANQQLQQAMEERAQLEAHLGQVMESVRQLQMERDKYAENLKGESAMWRQRMQQMSEQVHTLREEKECSMSRVQELETSLAELRNQMAEPPPPEPPAGPSEVEQQLQAEAEHLRKELEGLAGQLQAQVQDNEGLSRLNREQEERLLELERAAELWGEQAEARRQILETMQNDRTTISRALSQNRELKEQLAELQSGFVKLTNENMEITSALQSEQHVKRELGKKLGELQEKLSELKETVELKSQEAQSLQQQRDQYLGHLQQYVAAYQQLTSEKEVLHNQLLLQTQLVDQLQQQEAQGKAVAEMARQELQETQERLEAATQQNQQLRAQLSLMAHPGEGDGLDREEEEDEEEEEEEAVAVPQPMPSIPEDLESREAMVAFFNSAVASAEEEQARLRGQLKEQRVRCRRLAHLLASAQKEPEAAAPAPGTGGDSVCGETHRALQGAMEKLQSRFMELMQEKADLKERVEELEHRCIQLSGETDTIGEYIALYQSQRAVLKERHREKEEYISRLAQDKEEMKVKLLELQELVLRLVGDRNEWHGRFLAAAQNPADEPTSGAPAPQELGAANQQGDLCEVSLAGSVEPAQGEAREGSPRDNPTAQQIMQLLREMQNPRERPGLGSNPCIPFFYRADENDEVKITVI</sequence>